<protein>
    <recommendedName>
        <fullName evidence="1">ATP synthase subunit c, chloroplastic</fullName>
    </recommendedName>
    <alternativeName>
        <fullName evidence="1">ATP synthase F(0) sector subunit c</fullName>
    </alternativeName>
    <alternativeName>
        <fullName evidence="1">ATPase subunit III</fullName>
    </alternativeName>
    <alternativeName>
        <fullName evidence="1">F-type ATPase subunit c</fullName>
        <shortName evidence="1">F-ATPase subunit c</shortName>
    </alternativeName>
    <alternativeName>
        <fullName evidence="1">Lipid-binding protein</fullName>
    </alternativeName>
</protein>
<organism>
    <name type="scientific">Triticum aestivum</name>
    <name type="common">Wheat</name>
    <dbReference type="NCBI Taxonomy" id="4565"/>
    <lineage>
        <taxon>Eukaryota</taxon>
        <taxon>Viridiplantae</taxon>
        <taxon>Streptophyta</taxon>
        <taxon>Embryophyta</taxon>
        <taxon>Tracheophyta</taxon>
        <taxon>Spermatophyta</taxon>
        <taxon>Magnoliopsida</taxon>
        <taxon>Liliopsida</taxon>
        <taxon>Poales</taxon>
        <taxon>Poaceae</taxon>
        <taxon>BOP clade</taxon>
        <taxon>Pooideae</taxon>
        <taxon>Triticodae</taxon>
        <taxon>Triticeae</taxon>
        <taxon>Triticinae</taxon>
        <taxon>Triticum</taxon>
    </lineage>
</organism>
<dbReference type="EMBL" id="J01458">
    <property type="protein sequence ID" value="AAA84724.1"/>
    <property type="molecule type" value="Genomic_DNA"/>
</dbReference>
<dbReference type="EMBL" id="AB042240">
    <property type="protein sequence ID" value="BAB47029.1"/>
    <property type="molecule type" value="Genomic_DNA"/>
</dbReference>
<dbReference type="EMBL" id="X02595">
    <property type="protein sequence ID" value="CAA26440.1"/>
    <property type="molecule type" value="Genomic_DNA"/>
</dbReference>
<dbReference type="EMBL" id="AB027572">
    <property type="protein sequence ID" value="BAA78045.1"/>
    <property type="molecule type" value="Genomic_DNA"/>
</dbReference>
<dbReference type="RefSeq" id="NP_114254.1">
    <property type="nucleotide sequence ID" value="NC_002762.1"/>
</dbReference>
<dbReference type="PDB" id="4MJN">
    <property type="method" value="X-ray"/>
    <property type="resolution" value="6.00 A"/>
    <property type="chains" value="A/B/C/D/E/F/G/H/I/J/K/L/M/N=1-81"/>
</dbReference>
<dbReference type="PDBsum" id="4MJN"/>
<dbReference type="SMR" id="P69448"/>
<dbReference type="STRING" id="4565.P69448"/>
<dbReference type="PaxDb" id="4565-EPlTAEP00000010006"/>
<dbReference type="EnsemblPlants" id="TraesARI1D03G00489300.1">
    <property type="protein sequence ID" value="TraesARI1D03G00489300.1.CDS1"/>
    <property type="gene ID" value="TraesARI1D03G00489300"/>
</dbReference>
<dbReference type="EnsemblPlants" id="TraesARI5D03G03067010.1">
    <property type="protein sequence ID" value="TraesARI5D03G03067010.1.CDS1"/>
    <property type="gene ID" value="TraesARI5D03G03067010"/>
</dbReference>
<dbReference type="EnsemblPlants" id="TraesARI7A03G04013470.1">
    <property type="protein sequence ID" value="TraesARI7A03G04013470.1.CDS1"/>
    <property type="gene ID" value="TraesARI7A03G04013470"/>
</dbReference>
<dbReference type="EnsemblPlants" id="TraesCS1D02G180800.1">
    <property type="protein sequence ID" value="TraesCS1D02G180800.1.cds1"/>
    <property type="gene ID" value="TraesCS1D02G180800"/>
</dbReference>
<dbReference type="EnsemblPlants" id="TraesCS1D03G0465700.1">
    <property type="protein sequence ID" value="TraesCS1D03G0465700.1.CDS1"/>
    <property type="gene ID" value="TraesCS1D03G0465700"/>
</dbReference>
<dbReference type="EnsemblPlants" id="TraesCS5B02G052700.1">
    <property type="protein sequence ID" value="TraesCS5B02G052700.1.cds1"/>
    <property type="gene ID" value="TraesCS5B02G052700"/>
</dbReference>
<dbReference type="EnsemblPlants" id="TraesCS5B03G0133700.1">
    <property type="protein sequence ID" value="TraesCS5B03G0133700.1.CDS1"/>
    <property type="gene ID" value="TraesCS5B03G0133700"/>
</dbReference>
<dbReference type="EnsemblPlants" id="TraesCS5D02G196700.1">
    <property type="protein sequence ID" value="TraesCS5D02G196700.1.cds1"/>
    <property type="gene ID" value="TraesCS5D02G196700"/>
</dbReference>
<dbReference type="EnsemblPlants" id="TraesCS5D03G0464700.1">
    <property type="protein sequence ID" value="TraesCS5D03G0464700.1.CDS1"/>
    <property type="gene ID" value="TraesCS5D03G0464700"/>
</dbReference>
<dbReference type="EnsemblPlants" id="TraesJAG1D03G00483160.1">
    <property type="protein sequence ID" value="TraesJAG1D03G00483160.1.CDS1"/>
    <property type="gene ID" value="TraesJAG1D03G00483160"/>
</dbReference>
<dbReference type="EnsemblPlants" id="TraesJAG5B03G02811450.1">
    <property type="protein sequence ID" value="TraesJAG5B03G02811450.1.CDS1"/>
    <property type="gene ID" value="TraesJAG5B03G02811450"/>
</dbReference>
<dbReference type="EnsemblPlants" id="TraesJAG5D03G03112940.1">
    <property type="protein sequence ID" value="TraesJAG5D03G03112940.1.CDS1"/>
    <property type="gene ID" value="TraesJAG5D03G03112940"/>
</dbReference>
<dbReference type="EnsemblPlants" id="TraesJUL1A03G00160460.1">
    <property type="protein sequence ID" value="TraesJUL1A03G00160460.1.CDS1"/>
    <property type="gene ID" value="TraesJUL1A03G00160460"/>
</dbReference>
<dbReference type="EnsemblPlants" id="TraesJUL5B03G02831480.1">
    <property type="protein sequence ID" value="TraesJUL5B03G02831480.1.CDS1"/>
    <property type="gene ID" value="TraesJUL5B03G02831480"/>
</dbReference>
<dbReference type="EnsemblPlants" id="TraesJUL5D03G03138620.1">
    <property type="protein sequence ID" value="TraesJUL5D03G03138620.1.CDS1"/>
    <property type="gene ID" value="TraesJUL5D03G03138620"/>
</dbReference>
<dbReference type="EnsemblPlants" id="TraesKAR1D01G0184510.1">
    <property type="protein sequence ID" value="cds.TraesKAR1D01G0184510.1"/>
    <property type="gene ID" value="TraesKAR1D01G0184510"/>
</dbReference>
<dbReference type="EnsemblPlants" id="TraesKAR2D01G0456730.1">
    <property type="protein sequence ID" value="cds.TraesKAR2D01G0456730.1"/>
    <property type="gene ID" value="TraesKAR2D01G0456730"/>
</dbReference>
<dbReference type="EnsemblPlants" id="TraesKAR3B01G0079620.1">
    <property type="protein sequence ID" value="cds.TraesKAR3B01G0079620.1"/>
    <property type="gene ID" value="TraesKAR3B01G0079620"/>
</dbReference>
<dbReference type="EnsemblPlants" id="TraesKAR5D01G0216750.1">
    <property type="protein sequence ID" value="cds.TraesKAR5D01G0216750.1"/>
    <property type="gene ID" value="TraesKAR5D01G0216750"/>
</dbReference>
<dbReference type="EnsemblPlants" id="TraesKAR6B01G0219610.1">
    <property type="protein sequence ID" value="cds.TraesKAR6B01G0219610.1"/>
    <property type="gene ID" value="TraesKAR6B01G0219610"/>
</dbReference>
<dbReference type="EnsemblPlants" id="TraesKAR6B01G0220360.1">
    <property type="protein sequence ID" value="cds.TraesKAR6B01G0220360.1"/>
    <property type="gene ID" value="TraesKAR6B01G0220360"/>
</dbReference>
<dbReference type="EnsemblPlants" id="TraesKAR7A01G0472730.1">
    <property type="protein sequence ID" value="cds.TraesKAR7A01G0472730.1"/>
    <property type="gene ID" value="TraesKAR7A01G0472730"/>
</dbReference>
<dbReference type="EnsemblPlants" id="TraesKARUn01G0026510.1">
    <property type="protein sequence ID" value="cds.TraesKARUn01G0026510.1"/>
    <property type="gene ID" value="TraesKARUn01G0026510"/>
</dbReference>
<dbReference type="EnsemblPlants" id="TraesKARUn01G0027000.1">
    <property type="protein sequence ID" value="cds.TraesKARUn01G0027000.1"/>
    <property type="gene ID" value="TraesKARUn01G0027000"/>
</dbReference>
<dbReference type="EnsemblPlants" id="TraesKARUn01G0027060.1">
    <property type="protein sequence ID" value="cds.TraesKARUn01G0027060.1"/>
    <property type="gene ID" value="TraesKARUn01G0027060"/>
</dbReference>
<dbReference type="EnsemblPlants" id="TraesKARUn01G0027540.1">
    <property type="protein sequence ID" value="cds.TraesKARUn01G0027540.1"/>
    <property type="gene ID" value="TraesKARUn01G0027540"/>
</dbReference>
<dbReference type="EnsemblPlants" id="TraesKARUn01G0028040.1">
    <property type="protein sequence ID" value="cds.TraesKARUn01G0028040.1"/>
    <property type="gene ID" value="TraesKARUn01G0028040"/>
</dbReference>
<dbReference type="EnsemblPlants" id="TraesKARUn01G0028400.1">
    <property type="protein sequence ID" value="cds.TraesKARUn01G0028400.1"/>
    <property type="gene ID" value="TraesKARUn01G0028400"/>
</dbReference>
<dbReference type="EnsemblPlants" id="TraesKARUn01G0028900.1">
    <property type="protein sequence ID" value="cds.TraesKARUn01G0028900.1"/>
    <property type="gene ID" value="TraesKARUn01G0028900"/>
</dbReference>
<dbReference type="EnsemblPlants" id="TraesKARUn01G0029210.1">
    <property type="protein sequence ID" value="cds.TraesKARUn01G0029210.1"/>
    <property type="gene ID" value="TraesKARUn01G0029210"/>
</dbReference>
<dbReference type="EnsemblPlants" id="TraesKARUn01G0029680.1">
    <property type="protein sequence ID" value="cds.TraesKARUn01G0029680.1"/>
    <property type="gene ID" value="TraesKARUn01G0029680"/>
</dbReference>
<dbReference type="EnsemblPlants" id="TraesKARUn01G0029900.1">
    <property type="protein sequence ID" value="cds.TraesKARUn01G0029900.1"/>
    <property type="gene ID" value="TraesKARUn01G0029900"/>
</dbReference>
<dbReference type="EnsemblPlants" id="TraesKARUn01G0031280.1">
    <property type="protein sequence ID" value="cds.TraesKARUn01G0031280.1"/>
    <property type="gene ID" value="TraesKARUn01G0031280"/>
</dbReference>
<dbReference type="EnsemblPlants" id="TraesKARUn01G0031350.1">
    <property type="protein sequence ID" value="cds.TraesKARUn01G0031350.1"/>
    <property type="gene ID" value="TraesKARUn01G0031350"/>
</dbReference>
<dbReference type="EnsemblPlants" id="TraesKARUn01G0032330.1">
    <property type="protein sequence ID" value="cds.TraesKARUn01G0032330.1"/>
    <property type="gene ID" value="TraesKARUn01G0032330"/>
</dbReference>
<dbReference type="EnsemblPlants" id="TraesKARUn01G0032550.1">
    <property type="protein sequence ID" value="cds.TraesKARUn01G0032550.1"/>
    <property type="gene ID" value="TraesKARUn01G0032550"/>
</dbReference>
<dbReference type="EnsemblPlants" id="TraesKARUn01G0032760.1">
    <property type="protein sequence ID" value="cds.TraesKARUn01G0032760.1"/>
    <property type="gene ID" value="TraesKARUn01G0032760"/>
</dbReference>
<dbReference type="EnsemblPlants" id="TraesKARUn01G0033140.1">
    <property type="protein sequence ID" value="cds.TraesKARUn01G0033140.1"/>
    <property type="gene ID" value="TraesKARUn01G0033140"/>
</dbReference>
<dbReference type="EnsemblPlants" id="TraesKARUn01G0033600.1">
    <property type="protein sequence ID" value="cds.TraesKARUn01G0033600.1"/>
    <property type="gene ID" value="TraesKARUn01G0033600"/>
</dbReference>
<dbReference type="EnsemblPlants" id="TraesKARUn01G0033660.1">
    <property type="protein sequence ID" value="cds.TraesKARUn01G0033660.1"/>
    <property type="gene ID" value="TraesKARUn01G0033660"/>
</dbReference>
<dbReference type="EnsemblPlants" id="TraesKARUn01G0035010.1">
    <property type="protein sequence ID" value="cds.TraesKARUn01G0035010.1"/>
    <property type="gene ID" value="TraesKARUn01G0035010"/>
</dbReference>
<dbReference type="EnsemblPlants" id="TraesKARUn01G0035170.1">
    <property type="protein sequence ID" value="cds.TraesKARUn01G0035170.1"/>
    <property type="gene ID" value="TraesKARUn01G0035170"/>
</dbReference>
<dbReference type="EnsemblPlants" id="TraesKARUn01G0035540.1">
    <property type="protein sequence ID" value="cds.TraesKARUn01G0035540.1"/>
    <property type="gene ID" value="TraesKARUn01G0035540"/>
</dbReference>
<dbReference type="EnsemblPlants" id="TraesKARUn01G0035700.1">
    <property type="protein sequence ID" value="cds.TraesKARUn01G0035700.1"/>
    <property type="gene ID" value="TraesKARUn01G0035700"/>
</dbReference>
<dbReference type="EnsemblPlants" id="TraesKARUn01G0035820.1">
    <property type="protein sequence ID" value="cds.TraesKARUn01G0035820.1"/>
    <property type="gene ID" value="TraesKARUn01G0035820"/>
</dbReference>
<dbReference type="EnsemblPlants" id="TraesKARUn01G0036290.1">
    <property type="protein sequence ID" value="cds.TraesKARUn01G0036290.1"/>
    <property type="gene ID" value="TraesKARUn01G0036290"/>
</dbReference>
<dbReference type="EnsemblPlants" id="TraesKARUn01G0036700.1">
    <property type="protein sequence ID" value="cds.TraesKARUn01G0036700.1"/>
    <property type="gene ID" value="TraesKARUn01G0036700"/>
</dbReference>
<dbReference type="EnsemblPlants" id="TraesKARUn01G0037010.1">
    <property type="protein sequence ID" value="cds.TraesKARUn01G0037010.1"/>
    <property type="gene ID" value="TraesKARUn01G0037010"/>
</dbReference>
<dbReference type="EnsemblPlants" id="TraesKARUn01G0060260.1">
    <property type="protein sequence ID" value="cds.TraesKARUn01G0060260.1"/>
    <property type="gene ID" value="TraesKARUn01G0060260"/>
</dbReference>
<dbReference type="EnsemblPlants" id="TraesKARUn01G0060390.1">
    <property type="protein sequence ID" value="cds.TraesKARUn01G0060390.1"/>
    <property type="gene ID" value="TraesKARUn01G0060390"/>
</dbReference>
<dbReference type="EnsemblPlants" id="TraesKARUn01G0061880.1">
    <property type="protein sequence ID" value="cds.TraesKARUn01G0061880.1"/>
    <property type="gene ID" value="TraesKARUn01G0061880"/>
</dbReference>
<dbReference type="EnsemblPlants" id="TraesKARUn01G0062130.1">
    <property type="protein sequence ID" value="cds.TraesKARUn01G0062130.1"/>
    <property type="gene ID" value="TraesKARUn01G0062130"/>
</dbReference>
<dbReference type="EnsemblPlants" id="TraesKARUn01G0062500.1">
    <property type="protein sequence ID" value="cds.TraesKARUn01G0062500.1"/>
    <property type="gene ID" value="TraesKARUn01G0062500"/>
</dbReference>
<dbReference type="EnsemblPlants" id="TraesKARUn01G0062670.1">
    <property type="protein sequence ID" value="cds.TraesKARUn01G0062670.1"/>
    <property type="gene ID" value="TraesKARUn01G0062670"/>
</dbReference>
<dbReference type="EnsemblPlants" id="TraesKARUn01G0065620.1">
    <property type="protein sequence ID" value="cds.TraesKARUn01G0065620.1"/>
    <property type="gene ID" value="TraesKARUn01G0065620"/>
</dbReference>
<dbReference type="EnsemblPlants" id="TraesKARUn01G0066240.1">
    <property type="protein sequence ID" value="cds.TraesKARUn01G0066240.1"/>
    <property type="gene ID" value="TraesKARUn01G0066240"/>
</dbReference>
<dbReference type="EnsemblPlants" id="TraesKARUn01G0066890.1">
    <property type="protein sequence ID" value="cds.TraesKARUn01G0066890.1"/>
    <property type="gene ID" value="TraesKARUn01G0066890"/>
</dbReference>
<dbReference type="EnsemblPlants" id="TraesKARUn01G0068060.1">
    <property type="protein sequence ID" value="cds.TraesKARUn01G0068060.1"/>
    <property type="gene ID" value="TraesKARUn01G0068060"/>
</dbReference>
<dbReference type="EnsemblPlants" id="TraesKARUn01G0068270.1">
    <property type="protein sequence ID" value="cds.TraesKARUn01G0068270.1"/>
    <property type="gene ID" value="TraesKARUn01G0068270"/>
</dbReference>
<dbReference type="EnsemblPlants" id="TraesKARUn01G0069340.1">
    <property type="protein sequence ID" value="cds.TraesKARUn01G0069340.1"/>
    <property type="gene ID" value="TraesKARUn01G0069340"/>
</dbReference>
<dbReference type="EnsemblPlants" id="TraesKARUn01G0069470.1">
    <property type="protein sequence ID" value="cds.TraesKARUn01G0069470.1"/>
    <property type="gene ID" value="TraesKARUn01G0069470"/>
</dbReference>
<dbReference type="EnsemblPlants" id="TraesKARUn01G0069660.1">
    <property type="protein sequence ID" value="cds.TraesKARUn01G0069660.1"/>
    <property type="gene ID" value="TraesKARUn01G0069660"/>
</dbReference>
<dbReference type="EnsemblPlants" id="TraesKARUn01G0069920.1">
    <property type="protein sequence ID" value="cds.TraesKARUn01G0069920.1"/>
    <property type="gene ID" value="TraesKARUn01G0069920"/>
</dbReference>
<dbReference type="EnsemblPlants" id="TraesKARUn01G0070700.1">
    <property type="protein sequence ID" value="cds.TraesKARUn01G0070700.1"/>
    <property type="gene ID" value="TraesKARUn01G0070700"/>
</dbReference>
<dbReference type="EnsemblPlants" id="TraesKARUn01G0071050.1">
    <property type="protein sequence ID" value="cds.TraesKARUn01G0071050.1"/>
    <property type="gene ID" value="TraesKARUn01G0071050"/>
</dbReference>
<dbReference type="EnsemblPlants" id="TraesKARUn01G0072310.1">
    <property type="protein sequence ID" value="cds.TraesKARUn01G0072310.1"/>
    <property type="gene ID" value="TraesKARUn01G0072310"/>
</dbReference>
<dbReference type="EnsemblPlants" id="TraesKARUn01G0072650.1">
    <property type="protein sequence ID" value="cds.TraesKARUn01G0072650.1"/>
    <property type="gene ID" value="TraesKARUn01G0072650"/>
</dbReference>
<dbReference type="EnsemblPlants" id="TraesKARUn01G0073010.1">
    <property type="protein sequence ID" value="cds.TraesKARUn01G0073010.1"/>
    <property type="gene ID" value="TraesKARUn01G0073010"/>
</dbReference>
<dbReference type="EnsemblPlants" id="TraesKARUn01G0073060.1">
    <property type="protein sequence ID" value="cds.TraesKARUn01G0073060.1"/>
    <property type="gene ID" value="TraesKARUn01G0073060"/>
</dbReference>
<dbReference type="EnsemblPlants" id="TraesKARUn01G0073240.1">
    <property type="protein sequence ID" value="cds.TraesKARUn01G0073240.1"/>
    <property type="gene ID" value="TraesKARUn01G0073240"/>
</dbReference>
<dbReference type="EnsemblPlants" id="TraesKARUn01G0073460.1">
    <property type="protein sequence ID" value="cds.TraesKARUn01G0073460.1"/>
    <property type="gene ID" value="TraesKARUn01G0073460"/>
</dbReference>
<dbReference type="EnsemblPlants" id="TraesKARUn01G0073550.1">
    <property type="protein sequence ID" value="cds.TraesKARUn01G0073550.1"/>
    <property type="gene ID" value="TraesKARUn01G0073550"/>
</dbReference>
<dbReference type="EnsemblPlants" id="TraesKARUn01G0074090.1">
    <property type="protein sequence ID" value="cds.TraesKARUn01G0074090.1"/>
    <property type="gene ID" value="TraesKARUn01G0074090"/>
</dbReference>
<dbReference type="EnsemblPlants" id="TraesKARUn01G0074410.1">
    <property type="protein sequence ID" value="cds.TraesKARUn01G0074410.1"/>
    <property type="gene ID" value="TraesKARUn01G0074410"/>
</dbReference>
<dbReference type="EnsemblPlants" id="TraesKARUn01G0074550.1">
    <property type="protein sequence ID" value="cds.TraesKARUn01G0074550.1"/>
    <property type="gene ID" value="TraesKARUn01G0074550"/>
</dbReference>
<dbReference type="EnsemblPlants" id="TraesKARUn01G0074850.1">
    <property type="protein sequence ID" value="cds.TraesKARUn01G0074850.1"/>
    <property type="gene ID" value="TraesKARUn01G0074850"/>
</dbReference>
<dbReference type="EnsemblPlants" id="TraesKARUn01G0075200.1">
    <property type="protein sequence ID" value="cds.TraesKARUn01G0075200.1"/>
    <property type="gene ID" value="TraesKARUn01G0075200"/>
</dbReference>
<dbReference type="EnsemblPlants" id="TraesKARUn01G0075570.1">
    <property type="protein sequence ID" value="cds.TraesKARUn01G0075570.1"/>
    <property type="gene ID" value="TraesKARUn01G0075570"/>
</dbReference>
<dbReference type="EnsemblPlants" id="TraesKARUn01G0076050.1">
    <property type="protein sequence ID" value="cds.TraesKARUn01G0076050.1"/>
    <property type="gene ID" value="TraesKARUn01G0076050"/>
</dbReference>
<dbReference type="EnsemblPlants" id="TraesKARUn01G0076300.1">
    <property type="protein sequence ID" value="cds.TraesKARUn01G0076300.1"/>
    <property type="gene ID" value="TraesKARUn01G0076300"/>
</dbReference>
<dbReference type="EnsemblPlants" id="TraesKARUn01G0076470.1">
    <property type="protein sequence ID" value="cds.TraesKARUn01G0076470.1"/>
    <property type="gene ID" value="TraesKARUn01G0076470"/>
</dbReference>
<dbReference type="EnsemblPlants" id="TraesKARUn01G0077120.1">
    <property type="protein sequence ID" value="cds.TraesKARUn01G0077120.1"/>
    <property type="gene ID" value="TraesKARUn01G0077120"/>
</dbReference>
<dbReference type="EnsemblPlants" id="TraesKARUn01G0077930.1">
    <property type="protein sequence ID" value="cds.TraesKARUn01G0077930.1"/>
    <property type="gene ID" value="TraesKARUn01G0077930"/>
</dbReference>
<dbReference type="EnsemblPlants" id="TraesKARUn01G0078470.1">
    <property type="protein sequence ID" value="cds.TraesKARUn01G0078470.1"/>
    <property type="gene ID" value="TraesKARUn01G0078470"/>
</dbReference>
<dbReference type="EnsemblPlants" id="TraesKARUn01G0078680.1">
    <property type="protein sequence ID" value="cds.TraesKARUn01G0078680.1"/>
    <property type="gene ID" value="TraesKARUn01G0078680"/>
</dbReference>
<dbReference type="EnsemblPlants" id="TraesKARUn01G0078880.1">
    <property type="protein sequence ID" value="cds.TraesKARUn01G0078880.1"/>
    <property type="gene ID" value="TraesKARUn01G0078880"/>
</dbReference>
<dbReference type="EnsemblPlants" id="TraesKARUn01G0078990.1">
    <property type="protein sequence ID" value="cds.TraesKARUn01G0078990.1"/>
    <property type="gene ID" value="TraesKARUn01G0078990"/>
</dbReference>
<dbReference type="EnsemblPlants" id="TraesKARUn01G0079160.1">
    <property type="protein sequence ID" value="cds.TraesKARUn01G0079160.1"/>
    <property type="gene ID" value="TraesKARUn01G0079160"/>
</dbReference>
<dbReference type="EnsemblPlants" id="TraesKARUn01G0079460.1">
    <property type="protein sequence ID" value="cds.TraesKARUn01G0079460.1"/>
    <property type="gene ID" value="TraesKARUn01G0079460"/>
</dbReference>
<dbReference type="EnsemblPlants" id="TraesKARUn01G0079850.1">
    <property type="protein sequence ID" value="cds.TraesKARUn01G0079850.1"/>
    <property type="gene ID" value="TraesKARUn01G0079850"/>
</dbReference>
<dbReference type="EnsemblPlants" id="TraesKARUn01G0079980.1">
    <property type="protein sequence ID" value="cds.TraesKARUn01G0079980.1"/>
    <property type="gene ID" value="TraesKARUn01G0079980"/>
</dbReference>
<dbReference type="EnsemblPlants" id="TraesKARUn01G0080070.1">
    <property type="protein sequence ID" value="cds.TraesKARUn01G0080070.1"/>
    <property type="gene ID" value="TraesKARUn01G0080070"/>
</dbReference>
<dbReference type="EnsemblPlants" id="TraesKARUn01G0080230.1">
    <property type="protein sequence ID" value="cds.TraesKARUn01G0080230.1"/>
    <property type="gene ID" value="TraesKARUn01G0080230"/>
</dbReference>
<dbReference type="EnsemblPlants" id="TraesKARUn01G0081120.1">
    <property type="protein sequence ID" value="cds.TraesKARUn01G0081120.1"/>
    <property type="gene ID" value="TraesKARUn01G0081120"/>
</dbReference>
<dbReference type="EnsemblPlants" id="TraesKARUn01G0081400.1">
    <property type="protein sequence ID" value="cds.TraesKARUn01G0081400.1"/>
    <property type="gene ID" value="TraesKARUn01G0081400"/>
</dbReference>
<dbReference type="EnsemblPlants" id="TraesKARUn01G0081730.1">
    <property type="protein sequence ID" value="cds.TraesKARUn01G0081730.1"/>
    <property type="gene ID" value="TraesKARUn01G0081730"/>
</dbReference>
<dbReference type="EnsemblPlants" id="TraesKARUn01G0081930.1">
    <property type="protein sequence ID" value="cds.TraesKARUn01G0081930.1"/>
    <property type="gene ID" value="TraesKARUn01G0081930"/>
</dbReference>
<dbReference type="EnsemblPlants" id="TraesKARUn01G0082220.1">
    <property type="protein sequence ID" value="cds.TraesKARUn01G0082220.1"/>
    <property type="gene ID" value="TraesKARUn01G0082220"/>
</dbReference>
<dbReference type="EnsemblPlants" id="TraesKARUn01G0082410.1">
    <property type="protein sequence ID" value="cds.TraesKARUn01G0082410.1"/>
    <property type="gene ID" value="TraesKARUn01G0082410"/>
</dbReference>
<dbReference type="EnsemblPlants" id="TraesKARUn01G0082620.1">
    <property type="protein sequence ID" value="cds.TraesKARUn01G0082620.1"/>
    <property type="gene ID" value="TraesKARUn01G0082620"/>
</dbReference>
<dbReference type="EnsemblPlants" id="TraesKARUn01G0082770.1">
    <property type="protein sequence ID" value="cds.TraesKARUn01G0082770.1"/>
    <property type="gene ID" value="TraesKARUn01G0082770"/>
</dbReference>
<dbReference type="EnsemblPlants" id="TraesKARUn01G0082950.1">
    <property type="protein sequence ID" value="cds.TraesKARUn01G0082950.1"/>
    <property type="gene ID" value="TraesKARUn01G0082950"/>
</dbReference>
<dbReference type="EnsemblPlants" id="TraesKARUn01G0083110.1">
    <property type="protein sequence ID" value="cds.TraesKARUn01G0083110.1"/>
    <property type="gene ID" value="TraesKARUn01G0083110"/>
</dbReference>
<dbReference type="EnsemblPlants" id="TraesKARUn01G0083750.1">
    <property type="protein sequence ID" value="cds.TraesKARUn01G0083750.1"/>
    <property type="gene ID" value="TraesKARUn01G0083750"/>
</dbReference>
<dbReference type="EnsemblPlants" id="TraesKARUn01G0083810.1">
    <property type="protein sequence ID" value="cds.TraesKARUn01G0083810.1"/>
    <property type="gene ID" value="TraesKARUn01G0083810"/>
</dbReference>
<dbReference type="EnsemblPlants" id="TraesKARUn01G0083940.1">
    <property type="protein sequence ID" value="cds.TraesKARUn01G0083940.1"/>
    <property type="gene ID" value="TraesKARUn01G0083940"/>
</dbReference>
<dbReference type="EnsemblPlants" id="TraesKARUn01G0084240.1">
    <property type="protein sequence ID" value="cds.TraesKARUn01G0084240.1"/>
    <property type="gene ID" value="TraesKARUn01G0084240"/>
</dbReference>
<dbReference type="EnsemblPlants" id="TraesKARUn01G0084340.1">
    <property type="protein sequence ID" value="cds.TraesKARUn01G0084340.1"/>
    <property type="gene ID" value="TraesKARUn01G0084340"/>
</dbReference>
<dbReference type="EnsemblPlants" id="TraesKARUn01G0084500.1">
    <property type="protein sequence ID" value="cds.TraesKARUn01G0084500.1"/>
    <property type="gene ID" value="TraesKARUn01G0084500"/>
</dbReference>
<dbReference type="EnsemblPlants" id="TraesKARUn01G0084830.1">
    <property type="protein sequence ID" value="cds.TraesKARUn01G0084830.1"/>
    <property type="gene ID" value="TraesKARUn01G0084830"/>
</dbReference>
<dbReference type="EnsemblPlants" id="TraesKARUn01G0084910.1">
    <property type="protein sequence ID" value="cds.TraesKARUn01G0084910.1"/>
    <property type="gene ID" value="TraesKARUn01G0084910"/>
</dbReference>
<dbReference type="EnsemblPlants" id="TraesKARUn01G0085290.1">
    <property type="protein sequence ID" value="cds.TraesKARUn01G0085290.1"/>
    <property type="gene ID" value="TraesKARUn01G0085290"/>
</dbReference>
<dbReference type="EnsemblPlants" id="TraesKARUn01G0086730.1">
    <property type="protein sequence ID" value="cds.TraesKARUn01G0086730.1"/>
    <property type="gene ID" value="TraesKARUn01G0086730"/>
</dbReference>
<dbReference type="EnsemblPlants" id="TraesKARUn01G0087170.1">
    <property type="protein sequence ID" value="cds.TraesKARUn01G0087170.1"/>
    <property type="gene ID" value="TraesKARUn01G0087170"/>
</dbReference>
<dbReference type="EnsemblPlants" id="TraesKARUn01G0087540.1">
    <property type="protein sequence ID" value="cds.TraesKARUn01G0087540.1"/>
    <property type="gene ID" value="TraesKARUn01G0087540"/>
</dbReference>
<dbReference type="EnsemblPlants" id="TraesKARUn01G0087810.1">
    <property type="protein sequence ID" value="cds.TraesKARUn01G0087810.1"/>
    <property type="gene ID" value="TraesKARUn01G0087810"/>
</dbReference>
<dbReference type="EnsemblPlants" id="TraesKARUn01G0087920.1">
    <property type="protein sequence ID" value="cds.TraesKARUn01G0087920.1"/>
    <property type="gene ID" value="TraesKARUn01G0087920"/>
</dbReference>
<dbReference type="EnsemblPlants" id="TraesKARUn01G0088680.1">
    <property type="protein sequence ID" value="cds.TraesKARUn01G0088680.1"/>
    <property type="gene ID" value="TraesKARUn01G0088680"/>
</dbReference>
<dbReference type="EnsemblPlants" id="TraesKARUn01G0088760.1">
    <property type="protein sequence ID" value="cds.TraesKARUn01G0088760.1"/>
    <property type="gene ID" value="TraesKARUn01G0088760"/>
</dbReference>
<dbReference type="EnsemblPlants" id="TraesKARUn01G0089340.1">
    <property type="protein sequence ID" value="cds.TraesKARUn01G0089340.1"/>
    <property type="gene ID" value="TraesKARUn01G0089340"/>
</dbReference>
<dbReference type="EnsemblPlants" id="TraesKARUn01G0089780.1">
    <property type="protein sequence ID" value="cds.TraesKARUn01G0089780.1"/>
    <property type="gene ID" value="TraesKARUn01G0089780"/>
</dbReference>
<dbReference type="EnsemblPlants" id="TraesKARUn01G0090150.1">
    <property type="protein sequence ID" value="cds.TraesKARUn01G0090150.1"/>
    <property type="gene ID" value="TraesKARUn01G0090150"/>
</dbReference>
<dbReference type="EnsemblPlants" id="TraesKARUn01G0090350.1">
    <property type="protein sequence ID" value="cds.TraesKARUn01G0090350.1"/>
    <property type="gene ID" value="TraesKARUn01G0090350"/>
</dbReference>
<dbReference type="EnsemblPlants" id="TraesKARUn01G0090690.1">
    <property type="protein sequence ID" value="cds.TraesKARUn01G0090690.1"/>
    <property type="gene ID" value="TraesKARUn01G0090690"/>
</dbReference>
<dbReference type="EnsemblPlants" id="TraesKARUn01G0090790.1">
    <property type="protein sequence ID" value="cds.TraesKARUn01G0090790.1"/>
    <property type="gene ID" value="TraesKARUn01G0090790"/>
</dbReference>
<dbReference type="EnsemblPlants" id="TraesKARUn01G0090820.1">
    <property type="protein sequence ID" value="cds.TraesKARUn01G0090820.1"/>
    <property type="gene ID" value="TraesKARUn01G0090820"/>
</dbReference>
<dbReference type="EnsemblPlants" id="TraesKARUn01G0090980.1">
    <property type="protein sequence ID" value="cds.TraesKARUn01G0090980.1"/>
    <property type="gene ID" value="TraesKARUn01G0090980"/>
</dbReference>
<dbReference type="EnsemblPlants" id="TraesKARUn01G0091080.1">
    <property type="protein sequence ID" value="cds.TraesKARUn01G0091080.1"/>
    <property type="gene ID" value="TraesKARUn01G0091080"/>
</dbReference>
<dbReference type="EnsemblPlants" id="TraesKARUn01G0091170.1">
    <property type="protein sequence ID" value="cds.TraesKARUn01G0091170.1"/>
    <property type="gene ID" value="TraesKARUn01G0091170"/>
</dbReference>
<dbReference type="EnsemblPlants" id="TraesKARUn01G0091480.1">
    <property type="protein sequence ID" value="cds.TraesKARUn01G0091480.1"/>
    <property type="gene ID" value="TraesKARUn01G0091480"/>
</dbReference>
<dbReference type="EnsemblPlants" id="TraesKARUn01G0091670.1">
    <property type="protein sequence ID" value="cds.TraesKARUn01G0091670.1"/>
    <property type="gene ID" value="TraesKARUn01G0091670"/>
</dbReference>
<dbReference type="EnsemblPlants" id="TraesKARUn01G0091840.1">
    <property type="protein sequence ID" value="cds.TraesKARUn01G0091840.1"/>
    <property type="gene ID" value="TraesKARUn01G0091840"/>
</dbReference>
<dbReference type="EnsemblPlants" id="TraesKARUn01G0092130.1">
    <property type="protein sequence ID" value="cds.TraesKARUn01G0092130.1"/>
    <property type="gene ID" value="TraesKARUn01G0092130"/>
</dbReference>
<dbReference type="EnsemblPlants" id="TraesKARUn01G0092690.1">
    <property type="protein sequence ID" value="cds.TraesKARUn01G0092690.1"/>
    <property type="gene ID" value="TraesKARUn01G0092690"/>
</dbReference>
<dbReference type="EnsemblPlants" id="TraesKARUn01G0093760.1">
    <property type="protein sequence ID" value="cds.TraesKARUn01G0093760.1"/>
    <property type="gene ID" value="TraesKARUn01G0093760"/>
</dbReference>
<dbReference type="EnsemblPlants" id="TraesKARUn01G0093960.1">
    <property type="protein sequence ID" value="cds.TraesKARUn01G0093960.1"/>
    <property type="gene ID" value="TraesKARUn01G0093960"/>
</dbReference>
<dbReference type="EnsemblPlants" id="TraesKARUn01G0094010.1">
    <property type="protein sequence ID" value="cds.TraesKARUn01G0094010.1"/>
    <property type="gene ID" value="TraesKARUn01G0094010"/>
</dbReference>
<dbReference type="EnsemblPlants" id="TraesKARUn01G0094340.1">
    <property type="protein sequence ID" value="cds.TraesKARUn01G0094340.1"/>
    <property type="gene ID" value="TraesKARUn01G0094340"/>
</dbReference>
<dbReference type="EnsemblPlants" id="TraesKARUn01G0094490.1">
    <property type="protein sequence ID" value="cds.TraesKARUn01G0094490.1"/>
    <property type="gene ID" value="TraesKARUn01G0094490"/>
</dbReference>
<dbReference type="EnsemblPlants" id="TraesKARUn01G0094710.1">
    <property type="protein sequence ID" value="cds.TraesKARUn01G0094710.1"/>
    <property type="gene ID" value="TraesKARUn01G0094710"/>
</dbReference>
<dbReference type="EnsemblPlants" id="TraesKARUn01G0094960.1">
    <property type="protein sequence ID" value="cds.TraesKARUn01G0094960.1"/>
    <property type="gene ID" value="TraesKARUn01G0094960"/>
</dbReference>
<dbReference type="EnsemblPlants" id="TraesKARUn01G0095510.1">
    <property type="protein sequence ID" value="cds.TraesKARUn01G0095510.1"/>
    <property type="gene ID" value="TraesKARUn01G0095510"/>
</dbReference>
<dbReference type="EnsemblPlants" id="TraesKARUn01G0096090.1">
    <property type="protein sequence ID" value="cds.TraesKARUn01G0096090.1"/>
    <property type="gene ID" value="TraesKARUn01G0096090"/>
</dbReference>
<dbReference type="EnsemblPlants" id="TraesKARUn01G0096370.1">
    <property type="protein sequence ID" value="cds.TraesKARUn01G0096370.1"/>
    <property type="gene ID" value="TraesKARUn01G0096370"/>
</dbReference>
<dbReference type="EnsemblPlants" id="TraesKARUn01G0096670.1">
    <property type="protein sequence ID" value="cds.TraesKARUn01G0096670.1"/>
    <property type="gene ID" value="TraesKARUn01G0096670"/>
</dbReference>
<dbReference type="EnsemblPlants" id="TraesKARUn01G0096960.1">
    <property type="protein sequence ID" value="cds.TraesKARUn01G0096960.1"/>
    <property type="gene ID" value="TraesKARUn01G0096960"/>
</dbReference>
<dbReference type="EnsemblPlants" id="TraesKARUn01G0097410.1">
    <property type="protein sequence ID" value="cds.TraesKARUn01G0097410.1"/>
    <property type="gene ID" value="TraesKARUn01G0097410"/>
</dbReference>
<dbReference type="EnsemblPlants" id="TraesKARUn01G0097500.1">
    <property type="protein sequence ID" value="cds.TraesKARUn01G0097500.1"/>
    <property type="gene ID" value="TraesKARUn01G0097500"/>
</dbReference>
<dbReference type="EnsemblPlants" id="TraesKARUn01G0097670.1">
    <property type="protein sequence ID" value="cds.TraesKARUn01G0097670.1"/>
    <property type="gene ID" value="TraesKARUn01G0097670"/>
</dbReference>
<dbReference type="EnsemblPlants" id="TraesKARUn01G0098430.1">
    <property type="protein sequence ID" value="cds.TraesKARUn01G0098430.1"/>
    <property type="gene ID" value="TraesKARUn01G0098430"/>
</dbReference>
<dbReference type="EnsemblPlants" id="TraesKARUn01G0098570.1">
    <property type="protein sequence ID" value="cds.TraesKARUn01G0098570.1"/>
    <property type="gene ID" value="TraesKARUn01G0098570"/>
</dbReference>
<dbReference type="EnsemblPlants" id="TraesKARUn01G0098620.1">
    <property type="protein sequence ID" value="cds.TraesKARUn01G0098620.1"/>
    <property type="gene ID" value="TraesKARUn01G0098620"/>
</dbReference>
<dbReference type="EnsemblPlants" id="TraesKARUn01G0099310.1">
    <property type="protein sequence ID" value="cds.TraesKARUn01G0099310.1"/>
    <property type="gene ID" value="TraesKARUn01G0099310"/>
</dbReference>
<dbReference type="EnsemblPlants" id="TraesKARUn01G0099480.1">
    <property type="protein sequence ID" value="cds.TraesKARUn01G0099480.1"/>
    <property type="gene ID" value="TraesKARUn01G0099480"/>
</dbReference>
<dbReference type="EnsemblPlants" id="TraesKARUn01G0100020.1">
    <property type="protein sequence ID" value="cds.TraesKARUn01G0100020.1"/>
    <property type="gene ID" value="TraesKARUn01G0100020"/>
</dbReference>
<dbReference type="EnsemblPlants" id="TraesKARUn01G0100190.1">
    <property type="protein sequence ID" value="cds.TraesKARUn01G0100190.1"/>
    <property type="gene ID" value="TraesKARUn01G0100190"/>
</dbReference>
<dbReference type="EnsemblPlants" id="TraesKARUn01G0100470.1">
    <property type="protein sequence ID" value="cds.TraesKARUn01G0100470.1"/>
    <property type="gene ID" value="TraesKARUn01G0100470"/>
</dbReference>
<dbReference type="EnsemblPlants" id="TraesKARUn01G0100570.1">
    <property type="protein sequence ID" value="cds.TraesKARUn01G0100570.1"/>
    <property type="gene ID" value="TraesKARUn01G0100570"/>
</dbReference>
<dbReference type="EnsemblPlants" id="TraesKARUn01G0100950.1">
    <property type="protein sequence ID" value="cds.TraesKARUn01G0100950.1"/>
    <property type="gene ID" value="TraesKARUn01G0100950"/>
</dbReference>
<dbReference type="EnsemblPlants" id="TraesKARUn01G0101210.1">
    <property type="protein sequence ID" value="cds.TraesKARUn01G0101210.1"/>
    <property type="gene ID" value="TraesKARUn01G0101210"/>
</dbReference>
<dbReference type="EnsemblPlants" id="TraesKARUn01G0101310.1">
    <property type="protein sequence ID" value="cds.TraesKARUn01G0101310.1"/>
    <property type="gene ID" value="TraesKARUn01G0101310"/>
</dbReference>
<dbReference type="EnsemblPlants" id="TraesKARUn01G0101610.1">
    <property type="protein sequence ID" value="cds.TraesKARUn01G0101610.1"/>
    <property type="gene ID" value="TraesKARUn01G0101610"/>
</dbReference>
<dbReference type="EnsemblPlants" id="TraesKARUn01G0102340.1">
    <property type="protein sequence ID" value="cds.TraesKARUn01G0102340.1"/>
    <property type="gene ID" value="TraesKARUn01G0102340"/>
</dbReference>
<dbReference type="EnsemblPlants" id="TraesKARUn01G0102710.1">
    <property type="protein sequence ID" value="cds.TraesKARUn01G0102710.1"/>
    <property type="gene ID" value="TraesKARUn01G0102710"/>
</dbReference>
<dbReference type="EnsemblPlants" id="TraesKARUn01G0102750.1">
    <property type="protein sequence ID" value="cds.TraesKARUn01G0102750.1"/>
    <property type="gene ID" value="TraesKARUn01G0102750"/>
</dbReference>
<dbReference type="EnsemblPlants" id="TraesKARUn01G0103570.1">
    <property type="protein sequence ID" value="cds.TraesKARUn01G0103570.1"/>
    <property type="gene ID" value="TraesKARUn01G0103570"/>
</dbReference>
<dbReference type="EnsemblPlants" id="TraesKARUn01G0103600.1">
    <property type="protein sequence ID" value="cds.TraesKARUn01G0103600.1"/>
    <property type="gene ID" value="TraesKARUn01G0103600"/>
</dbReference>
<dbReference type="EnsemblPlants" id="TraesKARUn01G0104150.1">
    <property type="protein sequence ID" value="cds.TraesKARUn01G0104150.1"/>
    <property type="gene ID" value="TraesKARUn01G0104150"/>
</dbReference>
<dbReference type="EnsemblPlants" id="TraesKARUn01G0104280.1">
    <property type="protein sequence ID" value="cds.TraesKARUn01G0104280.1"/>
    <property type="gene ID" value="TraesKARUn01G0104280"/>
</dbReference>
<dbReference type="EnsemblPlants" id="TraesKARUn01G0104400.1">
    <property type="protein sequence ID" value="cds.TraesKARUn01G0104400.1"/>
    <property type="gene ID" value="TraesKARUn01G0104400"/>
</dbReference>
<dbReference type="EnsemblPlants" id="TraesKARUn01G0104830.1">
    <property type="protein sequence ID" value="cds.TraesKARUn01G0104830.1"/>
    <property type="gene ID" value="TraesKARUn01G0104830"/>
</dbReference>
<dbReference type="EnsemblPlants" id="TraesKARUn01G0104910.1">
    <property type="protein sequence ID" value="cds.TraesKARUn01G0104910.1"/>
    <property type="gene ID" value="TraesKARUn01G0104910"/>
</dbReference>
<dbReference type="EnsemblPlants" id="TraesKARUn01G0105020.1">
    <property type="protein sequence ID" value="cds.TraesKARUn01G0105020.1"/>
    <property type="gene ID" value="TraesKARUn01G0105020"/>
</dbReference>
<dbReference type="EnsemblPlants" id="TraesKARUn01G0105140.1">
    <property type="protein sequence ID" value="cds.TraesKARUn01G0105140.1"/>
    <property type="gene ID" value="TraesKARUn01G0105140"/>
</dbReference>
<dbReference type="EnsemblPlants" id="TraesKARUn01G0105230.1">
    <property type="protein sequence ID" value="cds.TraesKARUn01G0105230.1"/>
    <property type="gene ID" value="TraesKARUn01G0105230"/>
</dbReference>
<dbReference type="EnsemblPlants" id="TraesKARUn01G0105910.1">
    <property type="protein sequence ID" value="cds.TraesKARUn01G0105910.1"/>
    <property type="gene ID" value="TraesKARUn01G0105910"/>
</dbReference>
<dbReference type="EnsemblPlants" id="TraesKARUn01G0106070.1">
    <property type="protein sequence ID" value="cds.TraesKARUn01G0106070.1"/>
    <property type="gene ID" value="TraesKARUn01G0106070"/>
</dbReference>
<dbReference type="EnsemblPlants" id="TraesKARUn01G0106330.1">
    <property type="protein sequence ID" value="cds.TraesKARUn01G0106330.1"/>
    <property type="gene ID" value="TraesKARUn01G0106330"/>
</dbReference>
<dbReference type="EnsemblPlants" id="TraesKARUn01G0106800.1">
    <property type="protein sequence ID" value="cds.TraesKARUn01G0106800.1"/>
    <property type="gene ID" value="TraesKARUn01G0106800"/>
</dbReference>
<dbReference type="EnsemblPlants" id="TraesKARUn01G0106860.1">
    <property type="protein sequence ID" value="cds.TraesKARUn01G0106860.1"/>
    <property type="gene ID" value="TraesKARUn01G0106860"/>
</dbReference>
<dbReference type="EnsemblPlants" id="TraesKARUn01G0107130.1">
    <property type="protein sequence ID" value="cds.TraesKARUn01G0107130.1"/>
    <property type="gene ID" value="TraesKARUn01G0107130"/>
</dbReference>
<dbReference type="EnsemblPlants" id="TraesKARUn01G0107250.1">
    <property type="protein sequence ID" value="cds.TraesKARUn01G0107250.1"/>
    <property type="gene ID" value="TraesKARUn01G0107250"/>
</dbReference>
<dbReference type="EnsemblPlants" id="TraesKARUn01G0107950.1">
    <property type="protein sequence ID" value="cds.TraesKARUn01G0107950.1"/>
    <property type="gene ID" value="TraesKARUn01G0107950"/>
</dbReference>
<dbReference type="EnsemblPlants" id="TraesKARUn01G0108580.1">
    <property type="protein sequence ID" value="cds.TraesKARUn01G0108580.1"/>
    <property type="gene ID" value="TraesKARUn01G0108580"/>
</dbReference>
<dbReference type="EnsemblPlants" id="TraesKARUn01G0108670.1">
    <property type="protein sequence ID" value="cds.TraesKARUn01G0108670.1"/>
    <property type="gene ID" value="TraesKARUn01G0108670"/>
</dbReference>
<dbReference type="EnsemblPlants" id="TraesKARUn01G0108960.1">
    <property type="protein sequence ID" value="cds.TraesKARUn01G0108960.1"/>
    <property type="gene ID" value="TraesKARUn01G0108960"/>
</dbReference>
<dbReference type="EnsemblPlants" id="TraesKARUn01G0109620.1">
    <property type="protein sequence ID" value="cds.TraesKARUn01G0109620.1"/>
    <property type="gene ID" value="TraesKARUn01G0109620"/>
</dbReference>
<dbReference type="EnsemblPlants" id="TraesKARUn01G0109750.1">
    <property type="protein sequence ID" value="cds.TraesKARUn01G0109750.1"/>
    <property type="gene ID" value="TraesKARUn01G0109750"/>
</dbReference>
<dbReference type="EnsemblPlants" id="TraesKARUn01G0110030.1">
    <property type="protein sequence ID" value="cds.TraesKARUn01G0110030.1"/>
    <property type="gene ID" value="TraesKARUn01G0110030"/>
</dbReference>
<dbReference type="EnsemblPlants" id="TraesKARUn01G0110410.1">
    <property type="protein sequence ID" value="cds.TraesKARUn01G0110410.1"/>
    <property type="gene ID" value="TraesKARUn01G0110410"/>
</dbReference>
<dbReference type="EnsemblPlants" id="TraesKARUn01G0110630.1">
    <property type="protein sequence ID" value="cds.TraesKARUn01G0110630.1"/>
    <property type="gene ID" value="TraesKARUn01G0110630"/>
</dbReference>
<dbReference type="EnsemblPlants" id="TraesKARUn01G0110790.1">
    <property type="protein sequence ID" value="cds.TraesKARUn01G0110790.1"/>
    <property type="gene ID" value="TraesKARUn01G0110790"/>
</dbReference>
<dbReference type="EnsemblPlants" id="TraesKARUn01G0111250.1">
    <property type="protein sequence ID" value="cds.TraesKARUn01G0111250.1"/>
    <property type="gene ID" value="TraesKARUn01G0111250"/>
</dbReference>
<dbReference type="EnsemblPlants" id="TraesKARUn01G0111270.1">
    <property type="protein sequence ID" value="cds.TraesKARUn01G0111270.1"/>
    <property type="gene ID" value="TraesKARUn01G0111270"/>
</dbReference>
<dbReference type="EnsemblPlants" id="TraesKARUn01G0111710.1">
    <property type="protein sequence ID" value="cds.TraesKARUn01G0111710.1"/>
    <property type="gene ID" value="TraesKARUn01G0111710"/>
</dbReference>
<dbReference type="EnsemblPlants" id="TraesKARUn01G0112120.1">
    <property type="protein sequence ID" value="cds.TraesKARUn01G0112120.1"/>
    <property type="gene ID" value="TraesKARUn01G0112120"/>
</dbReference>
<dbReference type="EnsemblPlants" id="TraesKARUn01G0112210.1">
    <property type="protein sequence ID" value="cds.TraesKARUn01G0112210.1"/>
    <property type="gene ID" value="TraesKARUn01G0112210"/>
</dbReference>
<dbReference type="EnsemblPlants" id="TraesKARUn01G0112280.1">
    <property type="protein sequence ID" value="cds.TraesKARUn01G0112280.1"/>
    <property type="gene ID" value="TraesKARUn01G0112280"/>
</dbReference>
<dbReference type="EnsemblPlants" id="TraesKARUn01G0112300.1">
    <property type="protein sequence ID" value="cds.TraesKARUn01G0112300.1"/>
    <property type="gene ID" value="TraesKARUn01G0112300"/>
</dbReference>
<dbReference type="EnsemblPlants" id="TraesKARUn01G0112560.1">
    <property type="protein sequence ID" value="cds.TraesKARUn01G0112560.1"/>
    <property type="gene ID" value="TraesKARUn01G0112560"/>
</dbReference>
<dbReference type="EnsemblPlants" id="TraesKARUn01G0112620.1">
    <property type="protein sequence ID" value="cds.TraesKARUn01G0112620.1"/>
    <property type="gene ID" value="TraesKARUn01G0112620"/>
</dbReference>
<dbReference type="EnsemblPlants" id="TraesKARUn01G0112680.1">
    <property type="protein sequence ID" value="cds.TraesKARUn01G0112680.1"/>
    <property type="gene ID" value="TraesKARUn01G0112680"/>
</dbReference>
<dbReference type="EnsemblPlants" id="TraesKARUn01G0112820.1">
    <property type="protein sequence ID" value="cds.TraesKARUn01G0112820.1"/>
    <property type="gene ID" value="TraesKARUn01G0112820"/>
</dbReference>
<dbReference type="EnsemblPlants" id="TraesKARUn01G0113600.1">
    <property type="protein sequence ID" value="cds.TraesKARUn01G0113600.1"/>
    <property type="gene ID" value="TraesKARUn01G0113600"/>
</dbReference>
<dbReference type="EnsemblPlants" id="TraesKARUn01G0114210.1">
    <property type="protein sequence ID" value="cds.TraesKARUn01G0114210.1"/>
    <property type="gene ID" value="TraesKARUn01G0114210"/>
</dbReference>
<dbReference type="EnsemblPlants" id="TraesKARUn01G0114340.1">
    <property type="protein sequence ID" value="cds.TraesKARUn01G0114340.1"/>
    <property type="gene ID" value="TraesKARUn01G0114340"/>
</dbReference>
<dbReference type="EnsemblPlants" id="TraesKARUn01G0114770.1">
    <property type="protein sequence ID" value="cds.TraesKARUn01G0114770.1"/>
    <property type="gene ID" value="TraesKARUn01G0114770"/>
</dbReference>
<dbReference type="EnsemblPlants" id="TraesKARUn01G0115340.1">
    <property type="protein sequence ID" value="cds.TraesKARUn01G0115340.1"/>
    <property type="gene ID" value="TraesKARUn01G0115340"/>
</dbReference>
<dbReference type="EnsemblPlants" id="TraesKARUn01G0116270.1">
    <property type="protein sequence ID" value="cds.TraesKARUn01G0116270.1"/>
    <property type="gene ID" value="TraesKARUn01G0116270"/>
</dbReference>
<dbReference type="EnsemblPlants" id="TraesKARUn01G0116420.1">
    <property type="protein sequence ID" value="cds.TraesKARUn01G0116420.1"/>
    <property type="gene ID" value="TraesKARUn01G0116420"/>
</dbReference>
<dbReference type="EnsemblPlants" id="TraesKARUn01G0116550.1">
    <property type="protein sequence ID" value="cds.TraesKARUn01G0116550.1"/>
    <property type="gene ID" value="TraesKARUn01G0116550"/>
</dbReference>
<dbReference type="EnsemblPlants" id="TraesKARUn01G0116700.1">
    <property type="protein sequence ID" value="cds.TraesKARUn01G0116700.1"/>
    <property type="gene ID" value="TraesKARUn01G0116700"/>
</dbReference>
<dbReference type="EnsemblPlants" id="TraesKARUn01G0116940.1">
    <property type="protein sequence ID" value="cds.TraesKARUn01G0116940.1"/>
    <property type="gene ID" value="TraesKARUn01G0116940"/>
</dbReference>
<dbReference type="EnsemblPlants" id="TraesKARUn01G0117010.1">
    <property type="protein sequence ID" value="cds.TraesKARUn01G0117010.1"/>
    <property type="gene ID" value="TraesKARUn01G0117010"/>
</dbReference>
<dbReference type="EnsemblPlants" id="TraesKARUn01G0117260.1">
    <property type="protein sequence ID" value="cds.TraesKARUn01G0117260.1"/>
    <property type="gene ID" value="TraesKARUn01G0117260"/>
</dbReference>
<dbReference type="EnsemblPlants" id="TraesKARUn01G0117410.1">
    <property type="protein sequence ID" value="cds.TraesKARUn01G0117410.1"/>
    <property type="gene ID" value="TraesKARUn01G0117410"/>
</dbReference>
<dbReference type="EnsemblPlants" id="TraesKARUn01G0117550.1">
    <property type="protein sequence ID" value="cds.TraesKARUn01G0117550.1"/>
    <property type="gene ID" value="TraesKARUn01G0117550"/>
</dbReference>
<dbReference type="EnsemblPlants" id="TraesKARUn01G0117620.1">
    <property type="protein sequence ID" value="cds.TraesKARUn01G0117620.1"/>
    <property type="gene ID" value="TraesKARUn01G0117620"/>
</dbReference>
<dbReference type="EnsemblPlants" id="TraesKARUn01G0117690.1">
    <property type="protein sequence ID" value="cds.TraesKARUn01G0117690.1"/>
    <property type="gene ID" value="TraesKARUn01G0117690"/>
</dbReference>
<dbReference type="EnsemblPlants" id="TraesKARUn01G0117920.1">
    <property type="protein sequence ID" value="cds.TraesKARUn01G0117920.1"/>
    <property type="gene ID" value="TraesKARUn01G0117920"/>
</dbReference>
<dbReference type="EnsemblPlants" id="TraesKARUn01G0117980.1">
    <property type="protein sequence ID" value="cds.TraesKARUn01G0117980.1"/>
    <property type="gene ID" value="TraesKARUn01G0117980"/>
</dbReference>
<dbReference type="EnsemblPlants" id="TraesKARUn01G0118400.1">
    <property type="protein sequence ID" value="cds.TraesKARUn01G0118400.1"/>
    <property type="gene ID" value="TraesKARUn01G0118400"/>
</dbReference>
<dbReference type="EnsemblPlants" id="TraesKARUn01G0118880.1">
    <property type="protein sequence ID" value="cds.TraesKARUn01G0118880.1"/>
    <property type="gene ID" value="TraesKARUn01G0118880"/>
</dbReference>
<dbReference type="EnsemblPlants" id="TraesKARUn01G0118940.1">
    <property type="protein sequence ID" value="cds.TraesKARUn01G0118940.1"/>
    <property type="gene ID" value="TraesKARUn01G0118940"/>
</dbReference>
<dbReference type="EnsemblPlants" id="TraesKARUn01G0119040.1">
    <property type="protein sequence ID" value="cds.TraesKARUn01G0119040.1"/>
    <property type="gene ID" value="TraesKARUn01G0119040"/>
</dbReference>
<dbReference type="EnsemblPlants" id="TraesKARUn01G0119420.1">
    <property type="protein sequence ID" value="cds.TraesKARUn01G0119420.1"/>
    <property type="gene ID" value="TraesKARUn01G0119420"/>
</dbReference>
<dbReference type="EnsemblPlants" id="TraesKARUn01G0119610.1">
    <property type="protein sequence ID" value="cds.TraesKARUn01G0119610.1"/>
    <property type="gene ID" value="TraesKARUn01G0119610"/>
</dbReference>
<dbReference type="EnsemblPlants" id="TraesKARUn01G0119880.1">
    <property type="protein sequence ID" value="cds.TraesKARUn01G0119880.1"/>
    <property type="gene ID" value="TraesKARUn01G0119880"/>
</dbReference>
<dbReference type="EnsemblPlants" id="TraesKARUn01G0120250.1">
    <property type="protein sequence ID" value="cds.TraesKARUn01G0120250.1"/>
    <property type="gene ID" value="TraesKARUn01G0120250"/>
</dbReference>
<dbReference type="EnsemblPlants" id="TraesKARUn01G0120350.1">
    <property type="protein sequence ID" value="cds.TraesKARUn01G0120350.1"/>
    <property type="gene ID" value="TraesKARUn01G0120350"/>
</dbReference>
<dbReference type="EnsemblPlants" id="TraesKARUn01G0120670.1">
    <property type="protein sequence ID" value="cds.TraesKARUn01G0120670.1"/>
    <property type="gene ID" value="TraesKARUn01G0120670"/>
</dbReference>
<dbReference type="EnsemblPlants" id="TraesKARUn01G0120880.1">
    <property type="protein sequence ID" value="cds.TraesKARUn01G0120880.1"/>
    <property type="gene ID" value="TraesKARUn01G0120880"/>
</dbReference>
<dbReference type="EnsemblPlants" id="TraesKARUn01G0121090.1">
    <property type="protein sequence ID" value="cds.TraesKARUn01G0121090.1"/>
    <property type="gene ID" value="TraesKARUn01G0121090"/>
</dbReference>
<dbReference type="EnsemblPlants" id="TraesKARUn01G0121180.1">
    <property type="protein sequence ID" value="cds.TraesKARUn01G0121180.1"/>
    <property type="gene ID" value="TraesKARUn01G0121180"/>
</dbReference>
<dbReference type="EnsemblPlants" id="TraesKARUn01G0121250.1">
    <property type="protein sequence ID" value="cds.TraesKARUn01G0121250.1"/>
    <property type="gene ID" value="TraesKARUn01G0121250"/>
</dbReference>
<dbReference type="EnsemblPlants" id="TraesKARUn01G0121410.1">
    <property type="protein sequence ID" value="cds.TraesKARUn01G0121410.1"/>
    <property type="gene ID" value="TraesKARUn01G0121410"/>
</dbReference>
<dbReference type="EnsemblPlants" id="TraesKARUn01G0121720.1">
    <property type="protein sequence ID" value="cds.TraesKARUn01G0121720.1"/>
    <property type="gene ID" value="TraesKARUn01G0121720"/>
</dbReference>
<dbReference type="EnsemblPlants" id="TraesKARUn01G0121840.1">
    <property type="protein sequence ID" value="cds.TraesKARUn01G0121840.1"/>
    <property type="gene ID" value="TraesKARUn01G0121840"/>
</dbReference>
<dbReference type="EnsemblPlants" id="TraesKARUn01G0122260.1">
    <property type="protein sequence ID" value="cds.TraesKARUn01G0122260.1"/>
    <property type="gene ID" value="TraesKARUn01G0122260"/>
</dbReference>
<dbReference type="EnsemblPlants" id="TraesKARUn01G0122470.1">
    <property type="protein sequence ID" value="cds.TraesKARUn01G0122470.1"/>
    <property type="gene ID" value="TraesKARUn01G0122470"/>
</dbReference>
<dbReference type="EnsemblPlants" id="TraesKARUn01G0122620.1">
    <property type="protein sequence ID" value="cds.TraesKARUn01G0122620.1"/>
    <property type="gene ID" value="TraesKARUn01G0122620"/>
</dbReference>
<dbReference type="EnsemblPlants" id="TraesKARUn01G0122740.1">
    <property type="protein sequence ID" value="cds.TraesKARUn01G0122740.1"/>
    <property type="gene ID" value="TraesKARUn01G0122740"/>
</dbReference>
<dbReference type="EnsemblPlants" id="TraesKARUn01G0122830.1">
    <property type="protein sequence ID" value="cds.TraesKARUn01G0122830.1"/>
    <property type="gene ID" value="TraesKARUn01G0122830"/>
</dbReference>
<dbReference type="EnsemblPlants" id="TraesKARUn01G0123510.1">
    <property type="protein sequence ID" value="cds.TraesKARUn01G0123510.1"/>
    <property type="gene ID" value="TraesKARUn01G0123510"/>
</dbReference>
<dbReference type="EnsemblPlants" id="TraesKARUn01G0123720.1">
    <property type="protein sequence ID" value="cds.TraesKARUn01G0123720.1"/>
    <property type="gene ID" value="TraesKARUn01G0123720"/>
</dbReference>
<dbReference type="EnsemblPlants" id="TraesKARUn01G0124200.1">
    <property type="protein sequence ID" value="cds.TraesKARUn01G0124200.1"/>
    <property type="gene ID" value="TraesKARUn01G0124200"/>
</dbReference>
<dbReference type="EnsemblPlants" id="TraesKARUn01G0124780.1">
    <property type="protein sequence ID" value="cds.TraesKARUn01G0124780.1"/>
    <property type="gene ID" value="TraesKARUn01G0124780"/>
</dbReference>
<dbReference type="EnsemblPlants" id="TraesKARUn01G0125140.1">
    <property type="protein sequence ID" value="cds.TraesKARUn01G0125140.1"/>
    <property type="gene ID" value="TraesKARUn01G0125140"/>
</dbReference>
<dbReference type="EnsemblPlants" id="TraesKARUn01G0125250.1">
    <property type="protein sequence ID" value="cds.TraesKARUn01G0125250.1"/>
    <property type="gene ID" value="TraesKARUn01G0125250"/>
</dbReference>
<dbReference type="EnsemblPlants" id="TraesKARUn01G0125330.1">
    <property type="protein sequence ID" value="cds.TraesKARUn01G0125330.1"/>
    <property type="gene ID" value="TraesKARUn01G0125330"/>
</dbReference>
<dbReference type="EnsemblPlants" id="TraesKARUn01G0125750.1">
    <property type="protein sequence ID" value="cds.TraesKARUn01G0125750.1"/>
    <property type="gene ID" value="TraesKARUn01G0125750"/>
</dbReference>
<dbReference type="EnsemblPlants" id="TraesKARUn01G0126320.1">
    <property type="protein sequence ID" value="cds.TraesKARUn01G0126320.1"/>
    <property type="gene ID" value="TraesKARUn01G0126320"/>
</dbReference>
<dbReference type="EnsemblPlants" id="TraesKARUn01G0126400.1">
    <property type="protein sequence ID" value="cds.TraesKARUn01G0126400.1"/>
    <property type="gene ID" value="TraesKARUn01G0126400"/>
</dbReference>
<dbReference type="EnsemblPlants" id="TraesKARUn01G0126540.1">
    <property type="protein sequence ID" value="cds.TraesKARUn01G0126540.1"/>
    <property type="gene ID" value="TraesKARUn01G0126540"/>
</dbReference>
<dbReference type="EnsemblPlants" id="TraesKARUn01G0126600.1">
    <property type="protein sequence ID" value="cds.TraesKARUn01G0126600.1"/>
    <property type="gene ID" value="TraesKARUn01G0126600"/>
</dbReference>
<dbReference type="EnsemblPlants" id="TraesKARUn01G0126830.1">
    <property type="protein sequence ID" value="cds.TraesKARUn01G0126830.1"/>
    <property type="gene ID" value="TraesKARUn01G0126830"/>
</dbReference>
<dbReference type="EnsemblPlants" id="TraesKARUn01G0127030.1">
    <property type="protein sequence ID" value="cds.TraesKARUn01G0127030.1"/>
    <property type="gene ID" value="TraesKARUn01G0127030"/>
</dbReference>
<dbReference type="EnsemblPlants" id="TraesKARUn01G0127120.1">
    <property type="protein sequence ID" value="cds.TraesKARUn01G0127120.1"/>
    <property type="gene ID" value="TraesKARUn01G0127120"/>
</dbReference>
<dbReference type="EnsemblPlants" id="TraesKARUn01G0127310.1">
    <property type="protein sequence ID" value="cds.TraesKARUn01G0127310.1"/>
    <property type="gene ID" value="TraesKARUn01G0127310"/>
</dbReference>
<dbReference type="EnsemblPlants" id="TraesKARUn01G0127870.1">
    <property type="protein sequence ID" value="cds.TraesKARUn01G0127870.1"/>
    <property type="gene ID" value="TraesKARUn01G0127870"/>
</dbReference>
<dbReference type="EnsemblPlants" id="TraesKARUn01G0128400.1">
    <property type="protein sequence ID" value="cds.TraesKARUn01G0128400.1"/>
    <property type="gene ID" value="TraesKARUn01G0128400"/>
</dbReference>
<dbReference type="EnsemblPlants" id="TraesKARUn01G0128440.1">
    <property type="protein sequence ID" value="cds.TraesKARUn01G0128440.1"/>
    <property type="gene ID" value="TraesKARUn01G0128440"/>
</dbReference>
<dbReference type="EnsemblPlants" id="TraesKARUn01G0128720.1">
    <property type="protein sequence ID" value="cds.TraesKARUn01G0128720.1"/>
    <property type="gene ID" value="TraesKARUn01G0128720"/>
</dbReference>
<dbReference type="EnsemblPlants" id="TraesKARUn01G0128960.1">
    <property type="protein sequence ID" value="cds.TraesKARUn01G0128960.1"/>
    <property type="gene ID" value="TraesKARUn01G0128960"/>
</dbReference>
<dbReference type="EnsemblPlants" id="TraesKARUn01G0129140.1">
    <property type="protein sequence ID" value="cds.TraesKARUn01G0129140.1"/>
    <property type="gene ID" value="TraesKARUn01G0129140"/>
</dbReference>
<dbReference type="EnsemblPlants" id="TraesKARUn01G0129260.1">
    <property type="protein sequence ID" value="cds.TraesKARUn01G0129260.1"/>
    <property type="gene ID" value="TraesKARUn01G0129260"/>
</dbReference>
<dbReference type="EnsemblPlants" id="TraesKARUn01G0129610.1">
    <property type="protein sequence ID" value="cds.TraesKARUn01G0129610.1"/>
    <property type="gene ID" value="TraesKARUn01G0129610"/>
</dbReference>
<dbReference type="EnsemblPlants" id="TraesKARUn01G0129980.1">
    <property type="protein sequence ID" value="cds.TraesKARUn01G0129980.1"/>
    <property type="gene ID" value="TraesKARUn01G0129980"/>
</dbReference>
<dbReference type="EnsemblPlants" id="TraesKARUn01G0130180.1">
    <property type="protein sequence ID" value="cds.TraesKARUn01G0130180.1"/>
    <property type="gene ID" value="TraesKARUn01G0130180"/>
</dbReference>
<dbReference type="EnsemblPlants" id="TraesKARUn01G0130910.1">
    <property type="protein sequence ID" value="cds.TraesKARUn01G0130910.1"/>
    <property type="gene ID" value="TraesKARUn01G0130910"/>
</dbReference>
<dbReference type="EnsemblPlants" id="TraesKARUn01G0130950.1">
    <property type="protein sequence ID" value="cds.TraesKARUn01G0130950.1"/>
    <property type="gene ID" value="TraesKARUn01G0130950"/>
</dbReference>
<dbReference type="EnsemblPlants" id="TraesKARUn01G0131060.1">
    <property type="protein sequence ID" value="cds.TraesKARUn01G0131060.1"/>
    <property type="gene ID" value="TraesKARUn01G0131060"/>
</dbReference>
<dbReference type="EnsemblPlants" id="TraesKARUn01G0131180.1">
    <property type="protein sequence ID" value="cds.TraesKARUn01G0131180.1"/>
    <property type="gene ID" value="TraesKARUn01G0131180"/>
</dbReference>
<dbReference type="EnsemblPlants" id="TraesKARUn01G0131210.1">
    <property type="protein sequence ID" value="cds.TraesKARUn01G0131210.1"/>
    <property type="gene ID" value="TraesKARUn01G0131210"/>
</dbReference>
<dbReference type="EnsemblPlants" id="TraesKARUn01G0131930.1">
    <property type="protein sequence ID" value="cds.TraesKARUn01G0131930.1"/>
    <property type="gene ID" value="TraesKARUn01G0131930"/>
</dbReference>
<dbReference type="EnsemblPlants" id="TraesKARUn01G0132350.1">
    <property type="protein sequence ID" value="cds.TraesKARUn01G0132350.1"/>
    <property type="gene ID" value="TraesKARUn01G0132350"/>
</dbReference>
<dbReference type="EnsemblPlants" id="TraesKARUn01G0132570.1">
    <property type="protein sequence ID" value="cds.TraesKARUn01G0132570.1"/>
    <property type="gene ID" value="TraesKARUn01G0132570"/>
</dbReference>
<dbReference type="EnsemblPlants" id="TraesKARUn01G0133020.1">
    <property type="protein sequence ID" value="cds.TraesKARUn01G0133020.1"/>
    <property type="gene ID" value="TraesKARUn01G0133020"/>
</dbReference>
<dbReference type="EnsemblPlants" id="TraesKARUn01G0133180.1">
    <property type="protein sequence ID" value="cds.TraesKARUn01G0133180.1"/>
    <property type="gene ID" value="TraesKARUn01G0133180"/>
</dbReference>
<dbReference type="EnsemblPlants" id="TraesKARUn01G0133190.1">
    <property type="protein sequence ID" value="cds.TraesKARUn01G0133190.1"/>
    <property type="gene ID" value="TraesKARUn01G0133190"/>
</dbReference>
<dbReference type="EnsemblPlants" id="TraesKARUn01G0133370.1">
    <property type="protein sequence ID" value="cds.TraesKARUn01G0133370.1"/>
    <property type="gene ID" value="TraesKARUn01G0133370"/>
</dbReference>
<dbReference type="EnsemblPlants" id="TraesKARUn01G0133490.1">
    <property type="protein sequence ID" value="cds.TraesKARUn01G0133490.1"/>
    <property type="gene ID" value="TraesKARUn01G0133490"/>
</dbReference>
<dbReference type="EnsemblPlants" id="TraesKARUn01G0134830.1">
    <property type="protein sequence ID" value="cds.TraesKARUn01G0134830.1"/>
    <property type="gene ID" value="TraesKARUn01G0134830"/>
</dbReference>
<dbReference type="EnsemblPlants" id="TraesKARUn01G0134850.1">
    <property type="protein sequence ID" value="cds.TraesKARUn01G0134850.1"/>
    <property type="gene ID" value="TraesKARUn01G0134850"/>
</dbReference>
<dbReference type="EnsemblPlants" id="TraesKARUn01G0135330.1">
    <property type="protein sequence ID" value="cds.TraesKARUn01G0135330.1"/>
    <property type="gene ID" value="TraesKARUn01G0135330"/>
</dbReference>
<dbReference type="EnsemblPlants" id="TraesKARUn01G0135420.1">
    <property type="protein sequence ID" value="cds.TraesKARUn01G0135420.1"/>
    <property type="gene ID" value="TraesKARUn01G0135420"/>
</dbReference>
<dbReference type="EnsemblPlants" id="TraesKARUn01G0135480.1">
    <property type="protein sequence ID" value="cds.TraesKARUn01G0135480.1"/>
    <property type="gene ID" value="TraesKARUn01G0135480"/>
</dbReference>
<dbReference type="EnsemblPlants" id="TraesKARUn01G0135650.1">
    <property type="protein sequence ID" value="cds.TraesKARUn01G0135650.1"/>
    <property type="gene ID" value="TraesKARUn01G0135650"/>
</dbReference>
<dbReference type="EnsemblPlants" id="TraesKARUn01G0135890.1">
    <property type="protein sequence ID" value="cds.TraesKARUn01G0135890.1"/>
    <property type="gene ID" value="TraesKARUn01G0135890"/>
</dbReference>
<dbReference type="EnsemblPlants" id="TraesKARUn01G0135970.1">
    <property type="protein sequence ID" value="cds.TraesKARUn01G0135970.1"/>
    <property type="gene ID" value="TraesKARUn01G0135970"/>
</dbReference>
<dbReference type="EnsemblPlants" id="TraesKARUn01G0137280.1">
    <property type="protein sequence ID" value="cds.TraesKARUn01G0137280.1"/>
    <property type="gene ID" value="TraesKARUn01G0137280"/>
</dbReference>
<dbReference type="EnsemblPlants" id="TraesKARUn01G0137390.1">
    <property type="protein sequence ID" value="cds.TraesKARUn01G0137390.1"/>
    <property type="gene ID" value="TraesKARUn01G0137390"/>
</dbReference>
<dbReference type="EnsemblPlants" id="TraesKARUn01G0138000.1">
    <property type="protein sequence ID" value="cds.TraesKARUn01G0138000.1"/>
    <property type="gene ID" value="TraesKARUn01G0138000"/>
</dbReference>
<dbReference type="EnsemblPlants" id="TraesKARUn01G0138750.1">
    <property type="protein sequence ID" value="cds.TraesKARUn01G0138750.1"/>
    <property type="gene ID" value="TraesKARUn01G0138750"/>
</dbReference>
<dbReference type="EnsemblPlants" id="TraesKARUn01G0138820.1">
    <property type="protein sequence ID" value="cds.TraesKARUn01G0138820.1"/>
    <property type="gene ID" value="TraesKARUn01G0138820"/>
</dbReference>
<dbReference type="EnsemblPlants" id="TraesKARUn01G0138900.1">
    <property type="protein sequence ID" value="cds.TraesKARUn01G0138900.1"/>
    <property type="gene ID" value="TraesKARUn01G0138900"/>
</dbReference>
<dbReference type="EnsemblPlants" id="TraesKARUn01G0139270.1">
    <property type="protein sequence ID" value="cds.TraesKARUn01G0139270.1"/>
    <property type="gene ID" value="TraesKARUn01G0139270"/>
</dbReference>
<dbReference type="EnsemblPlants" id="TraesKARUn01G0139810.1">
    <property type="protein sequence ID" value="cds.TraesKARUn01G0139810.1"/>
    <property type="gene ID" value="TraesKARUn01G0139810"/>
</dbReference>
<dbReference type="EnsemblPlants" id="TraesKARUn01G0139970.1">
    <property type="protein sequence ID" value="cds.TraesKARUn01G0139970.1"/>
    <property type="gene ID" value="TraesKARUn01G0139970"/>
</dbReference>
<dbReference type="EnsemblPlants" id="TraesKARUn01G0140030.1">
    <property type="protein sequence ID" value="cds.TraesKARUn01G0140030.1"/>
    <property type="gene ID" value="TraesKARUn01G0140030"/>
</dbReference>
<dbReference type="EnsemblPlants" id="TraesKARUn01G0140180.1">
    <property type="protein sequence ID" value="cds.TraesKARUn01G0140180.1"/>
    <property type="gene ID" value="TraesKARUn01G0140180"/>
</dbReference>
<dbReference type="EnsemblPlants" id="TraesKARUn01G0140460.1">
    <property type="protein sequence ID" value="cds.TraesKARUn01G0140460.1"/>
    <property type="gene ID" value="TraesKARUn01G0140460"/>
</dbReference>
<dbReference type="EnsemblPlants" id="TraesKARUn01G0140640.1">
    <property type="protein sequence ID" value="cds.TraesKARUn01G0140640.1"/>
    <property type="gene ID" value="TraesKARUn01G0140640"/>
</dbReference>
<dbReference type="EnsemblPlants" id="TraesKARUn01G0140760.1">
    <property type="protein sequence ID" value="cds.TraesKARUn01G0140760.1"/>
    <property type="gene ID" value="TraesKARUn01G0140760"/>
</dbReference>
<dbReference type="EnsemblPlants" id="TraesKARUn01G0141860.1">
    <property type="protein sequence ID" value="cds.TraesKARUn01G0141860.1"/>
    <property type="gene ID" value="TraesKARUn01G0141860"/>
</dbReference>
<dbReference type="EnsemblPlants" id="TraesKARUn01G0142310.1">
    <property type="protein sequence ID" value="cds.TraesKARUn01G0142310.1"/>
    <property type="gene ID" value="TraesKARUn01G0142310"/>
</dbReference>
<dbReference type="EnsemblPlants" id="TraesKARUn01G0142690.1">
    <property type="protein sequence ID" value="cds.TraesKARUn01G0142690.1"/>
    <property type="gene ID" value="TraesKARUn01G0142690"/>
</dbReference>
<dbReference type="EnsemblPlants" id="TraesKARUn01G0142810.1">
    <property type="protein sequence ID" value="cds.TraesKARUn01G0142810.1"/>
    <property type="gene ID" value="TraesKARUn01G0142810"/>
</dbReference>
<dbReference type="EnsemblPlants" id="TraesKARUn01G0143110.1">
    <property type="protein sequence ID" value="cds.TraesKARUn01G0143110.1"/>
    <property type="gene ID" value="TraesKARUn01G0143110"/>
</dbReference>
<dbReference type="EnsemblPlants" id="TraesKARUn01G0143540.1">
    <property type="protein sequence ID" value="cds.TraesKARUn01G0143540.1"/>
    <property type="gene ID" value="TraesKARUn01G0143540"/>
</dbReference>
<dbReference type="EnsemblPlants" id="TraesKARUn01G0144100.1">
    <property type="protein sequence ID" value="cds.TraesKARUn01G0144100.1"/>
    <property type="gene ID" value="TraesKARUn01G0144100"/>
</dbReference>
<dbReference type="EnsemblPlants" id="TraesKARUn01G0144690.1">
    <property type="protein sequence ID" value="cds.TraesKARUn01G0144690.1"/>
    <property type="gene ID" value="TraesKARUn01G0144690"/>
</dbReference>
<dbReference type="EnsemblPlants" id="TraesKARUn01G0144950.1">
    <property type="protein sequence ID" value="cds.TraesKARUn01G0144950.1"/>
    <property type="gene ID" value="TraesKARUn01G0144950"/>
</dbReference>
<dbReference type="EnsemblPlants" id="TraesKARUn01G0145050.1">
    <property type="protein sequence ID" value="cds.TraesKARUn01G0145050.1"/>
    <property type="gene ID" value="TraesKARUn01G0145050"/>
</dbReference>
<dbReference type="EnsemblPlants" id="TraesKARUn01G0145330.1">
    <property type="protein sequence ID" value="cds.TraesKARUn01G0145330.1"/>
    <property type="gene ID" value="TraesKARUn01G0145330"/>
</dbReference>
<dbReference type="EnsemblPlants" id="TraesKARUn01G0145380.1">
    <property type="protein sequence ID" value="cds.TraesKARUn01G0145380.1"/>
    <property type="gene ID" value="TraesKARUn01G0145380"/>
</dbReference>
<dbReference type="EnsemblPlants" id="TraesKARUn01G0145950.1">
    <property type="protein sequence ID" value="cds.TraesKARUn01G0145950.1"/>
    <property type="gene ID" value="TraesKARUn01G0145950"/>
</dbReference>
<dbReference type="EnsemblPlants" id="TraesKARUn01G0146020.1">
    <property type="protein sequence ID" value="cds.TraesKARUn01G0146020.1"/>
    <property type="gene ID" value="TraesKARUn01G0146020"/>
</dbReference>
<dbReference type="EnsemblPlants" id="TraesKARUn01G0146280.1">
    <property type="protein sequence ID" value="cds.TraesKARUn01G0146280.1"/>
    <property type="gene ID" value="TraesKARUn01G0146280"/>
</dbReference>
<dbReference type="EnsemblPlants" id="TraesKARUn01G0146310.1">
    <property type="protein sequence ID" value="cds.TraesKARUn01G0146310.1"/>
    <property type="gene ID" value="TraesKARUn01G0146310"/>
</dbReference>
<dbReference type="EnsemblPlants" id="TraesKARUn01G0146970.1">
    <property type="protein sequence ID" value="cds.TraesKARUn01G0146970.1"/>
    <property type="gene ID" value="TraesKARUn01G0146970"/>
</dbReference>
<dbReference type="EnsemblPlants" id="TraesKARUn01G0147020.1">
    <property type="protein sequence ID" value="cds.TraesKARUn01G0147020.1"/>
    <property type="gene ID" value="TraesKARUn01G0147020"/>
</dbReference>
<dbReference type="EnsemblPlants" id="TraesKARUn01G0147080.1">
    <property type="protein sequence ID" value="cds.TraesKARUn01G0147080.1"/>
    <property type="gene ID" value="TraesKARUn01G0147080"/>
</dbReference>
<dbReference type="EnsemblPlants" id="TraesKARUn01G0147540.1">
    <property type="protein sequence ID" value="cds.TraesKARUn01G0147540.1"/>
    <property type="gene ID" value="TraesKARUn01G0147540"/>
</dbReference>
<dbReference type="EnsemblPlants" id="TraesKARUn01G0148050.1">
    <property type="protein sequence ID" value="cds.TraesKARUn01G0148050.1"/>
    <property type="gene ID" value="TraesKARUn01G0148050"/>
</dbReference>
<dbReference type="EnsemblPlants" id="TraesKARUn01G0148230.1">
    <property type="protein sequence ID" value="cds.TraesKARUn01G0148230.1"/>
    <property type="gene ID" value="TraesKARUn01G0148230"/>
</dbReference>
<dbReference type="EnsemblPlants" id="TraesKARUn01G0148350.1">
    <property type="protein sequence ID" value="cds.TraesKARUn01G0148350.1"/>
    <property type="gene ID" value="TraesKARUn01G0148350"/>
</dbReference>
<dbReference type="EnsemblPlants" id="TraesKARUn01G0148610.1">
    <property type="protein sequence ID" value="cds.TraesKARUn01G0148610.1"/>
    <property type="gene ID" value="TraesKARUn01G0148610"/>
</dbReference>
<dbReference type="EnsemblPlants" id="TraesKARUn01G0148730.1">
    <property type="protein sequence ID" value="cds.TraesKARUn01G0148730.1"/>
    <property type="gene ID" value="TraesKARUn01G0148730"/>
</dbReference>
<dbReference type="EnsemblPlants" id="TraesKARUn01G0148760.1">
    <property type="protein sequence ID" value="cds.TraesKARUn01G0148760.1"/>
    <property type="gene ID" value="TraesKARUn01G0148760"/>
</dbReference>
<dbReference type="EnsemblPlants" id="TraesKARUn01G0148860.1">
    <property type="protein sequence ID" value="cds.TraesKARUn01G0148860.1"/>
    <property type="gene ID" value="TraesKARUn01G0148860"/>
</dbReference>
<dbReference type="EnsemblPlants" id="TraesKARUn01G0148910.1">
    <property type="protein sequence ID" value="cds.TraesKARUn01G0148910.1"/>
    <property type="gene ID" value="TraesKARUn01G0148910"/>
</dbReference>
<dbReference type="EnsemblPlants" id="TraesKARUn01G0148960.1">
    <property type="protein sequence ID" value="cds.TraesKARUn01G0148960.1"/>
    <property type="gene ID" value="TraesKARUn01G0148960"/>
</dbReference>
<dbReference type="EnsemblPlants" id="TraesKARUn01G0149250.1">
    <property type="protein sequence ID" value="cds.TraesKARUn01G0149250.1"/>
    <property type="gene ID" value="TraesKARUn01G0149250"/>
</dbReference>
<dbReference type="EnsemblPlants" id="TraesKARUn01G0149500.1">
    <property type="protein sequence ID" value="cds.TraesKARUn01G0149500.1"/>
    <property type="gene ID" value="TraesKARUn01G0149500"/>
</dbReference>
<dbReference type="EnsemblPlants" id="TraesKARUn01G0149560.1">
    <property type="protein sequence ID" value="cds.TraesKARUn01G0149560.1"/>
    <property type="gene ID" value="TraesKARUn01G0149560"/>
</dbReference>
<dbReference type="EnsemblPlants" id="TraesKARUn01G0149650.1">
    <property type="protein sequence ID" value="cds.TraesKARUn01G0149650.1"/>
    <property type="gene ID" value="TraesKARUn01G0149650"/>
</dbReference>
<dbReference type="EnsemblPlants" id="TraesKARUn01G0149850.1">
    <property type="protein sequence ID" value="cds.TraesKARUn01G0149850.1"/>
    <property type="gene ID" value="TraesKARUn01G0149850"/>
</dbReference>
<dbReference type="EnsemblPlants" id="TraesKARUn01G0149970.1">
    <property type="protein sequence ID" value="cds.TraesKARUn01G0149970.1"/>
    <property type="gene ID" value="TraesKARUn01G0149970"/>
</dbReference>
<dbReference type="EnsemblPlants" id="TraesKARUn01G0150220.1">
    <property type="protein sequence ID" value="cds.TraesKARUn01G0150220.1"/>
    <property type="gene ID" value="TraesKARUn01G0150220"/>
</dbReference>
<dbReference type="EnsemblPlants" id="TraesKARUn01G0150540.1">
    <property type="protein sequence ID" value="cds.TraesKARUn01G0150540.1"/>
    <property type="gene ID" value="TraesKARUn01G0150540"/>
</dbReference>
<dbReference type="EnsemblPlants" id="TraesKARUn01G0150750.1">
    <property type="protein sequence ID" value="cds.TraesKARUn01G0150750.1"/>
    <property type="gene ID" value="TraesKARUn01G0150750"/>
</dbReference>
<dbReference type="EnsemblPlants" id="TraesKARUn01G0150860.1">
    <property type="protein sequence ID" value="cds.TraesKARUn01G0150860.1"/>
    <property type="gene ID" value="TraesKARUn01G0150860"/>
</dbReference>
<dbReference type="EnsemblPlants" id="TraesKARUn01G0151110.1">
    <property type="protein sequence ID" value="cds.TraesKARUn01G0151110.1"/>
    <property type="gene ID" value="TraesKARUn01G0151110"/>
</dbReference>
<dbReference type="EnsemblPlants" id="TraesKARUn01G0151670.1">
    <property type="protein sequence ID" value="cds.TraesKARUn01G0151670.1"/>
    <property type="gene ID" value="TraesKARUn01G0151670"/>
</dbReference>
<dbReference type="EnsemblPlants" id="TraesKARUn01G0151920.1">
    <property type="protein sequence ID" value="cds.TraesKARUn01G0151920.1"/>
    <property type="gene ID" value="TraesKARUn01G0151920"/>
</dbReference>
<dbReference type="EnsemblPlants" id="TraesKARUn01G0152010.1">
    <property type="protein sequence ID" value="cds.TraesKARUn01G0152010.1"/>
    <property type="gene ID" value="TraesKARUn01G0152010"/>
</dbReference>
<dbReference type="EnsemblPlants" id="TraesKARUn01G0152440.1">
    <property type="protein sequence ID" value="cds.TraesKARUn01G0152440.1"/>
    <property type="gene ID" value="TraesKARUn01G0152440"/>
</dbReference>
<dbReference type="EnsemblPlants" id="TraesKARUn01G0152570.1">
    <property type="protein sequence ID" value="cds.TraesKARUn01G0152570.1"/>
    <property type="gene ID" value="TraesKARUn01G0152570"/>
</dbReference>
<dbReference type="EnsemblPlants" id="TraesKARUn01G0152800.1">
    <property type="protein sequence ID" value="cds.TraesKARUn01G0152800.1"/>
    <property type="gene ID" value="TraesKARUn01G0152800"/>
</dbReference>
<dbReference type="EnsemblPlants" id="TraesKARUn01G0152880.1">
    <property type="protein sequence ID" value="cds.TraesKARUn01G0152880.1"/>
    <property type="gene ID" value="TraesKARUn01G0152880"/>
</dbReference>
<dbReference type="EnsemblPlants" id="TraesKARUn01G0152950.1">
    <property type="protein sequence ID" value="cds.TraesKARUn01G0152950.1"/>
    <property type="gene ID" value="TraesKARUn01G0152950"/>
</dbReference>
<dbReference type="EnsemblPlants" id="TraesKARUn01G0153160.1">
    <property type="protein sequence ID" value="cds.TraesKARUn01G0153160.1"/>
    <property type="gene ID" value="TraesKARUn01G0153160"/>
</dbReference>
<dbReference type="EnsemblPlants" id="TraesKARUn01G0153600.1">
    <property type="protein sequence ID" value="cds.TraesKARUn01G0153600.1"/>
    <property type="gene ID" value="TraesKARUn01G0153600"/>
</dbReference>
<dbReference type="EnsemblPlants" id="TraesKARUn01G0153680.1">
    <property type="protein sequence ID" value="cds.TraesKARUn01G0153680.1"/>
    <property type="gene ID" value="TraesKARUn01G0153680"/>
</dbReference>
<dbReference type="EnsemblPlants" id="TraesKARUn01G0153790.1">
    <property type="protein sequence ID" value="cds.TraesKARUn01G0153790.1"/>
    <property type="gene ID" value="TraesKARUn01G0153790"/>
</dbReference>
<dbReference type="EnsemblPlants" id="TraesKARUn01G0154330.1">
    <property type="protein sequence ID" value="cds.TraesKARUn01G0154330.1"/>
    <property type="gene ID" value="TraesKARUn01G0154330"/>
</dbReference>
<dbReference type="EnsemblPlants" id="TraesKARUn01G0154360.1">
    <property type="protein sequence ID" value="cds.TraesKARUn01G0154360.1"/>
    <property type="gene ID" value="TraesKARUn01G0154360"/>
</dbReference>
<dbReference type="EnsemblPlants" id="TraesKARUn01G0154460.1">
    <property type="protein sequence ID" value="cds.TraesKARUn01G0154460.1"/>
    <property type="gene ID" value="TraesKARUn01G0154460"/>
</dbReference>
<dbReference type="EnsemblPlants" id="TraesKARUn01G0154900.1">
    <property type="protein sequence ID" value="cds.TraesKARUn01G0154900.1"/>
    <property type="gene ID" value="TraesKARUn01G0154900"/>
</dbReference>
<dbReference type="EnsemblPlants" id="TraesKARUn01G0155160.1">
    <property type="protein sequence ID" value="cds.TraesKARUn01G0155160.1"/>
    <property type="gene ID" value="TraesKARUn01G0155160"/>
</dbReference>
<dbReference type="EnsemblPlants" id="TraesKARUn01G0155470.1">
    <property type="protein sequence ID" value="cds.TraesKARUn01G0155470.1"/>
    <property type="gene ID" value="TraesKARUn01G0155470"/>
</dbReference>
<dbReference type="EnsemblPlants" id="TraesKARUn01G0155520.1">
    <property type="protein sequence ID" value="cds.TraesKARUn01G0155520.1"/>
    <property type="gene ID" value="TraesKARUn01G0155520"/>
</dbReference>
<dbReference type="EnsemblPlants" id="TraesKARUn01G0155810.1">
    <property type="protein sequence ID" value="cds.TraesKARUn01G0155810.1"/>
    <property type="gene ID" value="TraesKARUn01G0155810"/>
</dbReference>
<dbReference type="EnsemblPlants" id="TraesKARUn01G0155830.1">
    <property type="protein sequence ID" value="cds.TraesKARUn01G0155830.1"/>
    <property type="gene ID" value="TraesKARUn01G0155830"/>
</dbReference>
<dbReference type="EnsemblPlants" id="TraesKARUn01G0156070.1">
    <property type="protein sequence ID" value="cds.TraesKARUn01G0156070.1"/>
    <property type="gene ID" value="TraesKARUn01G0156070"/>
</dbReference>
<dbReference type="EnsemblPlants" id="TraesKARUn01G0157040.1">
    <property type="protein sequence ID" value="cds.TraesKARUn01G0157040.1"/>
    <property type="gene ID" value="TraesKARUn01G0157040"/>
</dbReference>
<dbReference type="EnsemblPlants" id="TraesKARUn01G0157080.1">
    <property type="protein sequence ID" value="cds.TraesKARUn01G0157080.1"/>
    <property type="gene ID" value="TraesKARUn01G0157080"/>
</dbReference>
<dbReference type="EnsemblPlants" id="TraesKARUn01G0157160.1">
    <property type="protein sequence ID" value="cds.TraesKARUn01G0157160.1"/>
    <property type="gene ID" value="TraesKARUn01G0157160"/>
</dbReference>
<dbReference type="EnsemblPlants" id="TraesKARUn01G0157620.1">
    <property type="protein sequence ID" value="cds.TraesKARUn01G0157620.1"/>
    <property type="gene ID" value="TraesKARUn01G0157620"/>
</dbReference>
<dbReference type="EnsemblPlants" id="TraesKARUn01G0157980.1">
    <property type="protein sequence ID" value="cds.TraesKARUn01G0157980.1"/>
    <property type="gene ID" value="TraesKARUn01G0157980"/>
</dbReference>
<dbReference type="EnsemblPlants" id="TraesKARUn01G0158630.1">
    <property type="protein sequence ID" value="cds.TraesKARUn01G0158630.1"/>
    <property type="gene ID" value="TraesKARUn01G0158630"/>
</dbReference>
<dbReference type="EnsemblPlants" id="TraesKARUn01G0158770.1">
    <property type="protein sequence ID" value="cds.TraesKARUn01G0158770.1"/>
    <property type="gene ID" value="TraesKARUn01G0158770"/>
</dbReference>
<dbReference type="EnsemblPlants" id="TraesKARUn01G0159150.1">
    <property type="protein sequence ID" value="cds.TraesKARUn01G0159150.1"/>
    <property type="gene ID" value="TraesKARUn01G0159150"/>
</dbReference>
<dbReference type="EnsemblPlants" id="TraesKARUn01G0159340.1">
    <property type="protein sequence ID" value="cds.TraesKARUn01G0159340.1"/>
    <property type="gene ID" value="TraesKARUn01G0159340"/>
</dbReference>
<dbReference type="EnsemblPlants" id="TraesKARUn01G0159880.1">
    <property type="protein sequence ID" value="cds.TraesKARUn01G0159880.1"/>
    <property type="gene ID" value="TraesKARUn01G0159880"/>
</dbReference>
<dbReference type="EnsemblPlants" id="TraesKARUn01G0159960.1">
    <property type="protein sequence ID" value="cds.TraesKARUn01G0159960.1"/>
    <property type="gene ID" value="TraesKARUn01G0159960"/>
</dbReference>
<dbReference type="EnsemblPlants" id="TraesKARUn01G0160020.1">
    <property type="protein sequence ID" value="cds.TraesKARUn01G0160020.1"/>
    <property type="gene ID" value="TraesKARUn01G0160020"/>
</dbReference>
<dbReference type="EnsemblPlants" id="TraesKARUn01G0160280.1">
    <property type="protein sequence ID" value="cds.TraesKARUn01G0160280.1"/>
    <property type="gene ID" value="TraesKARUn01G0160280"/>
</dbReference>
<dbReference type="EnsemblPlants" id="TraesKARUn01G0160340.1">
    <property type="protein sequence ID" value="cds.TraesKARUn01G0160340.1"/>
    <property type="gene ID" value="TraesKARUn01G0160340"/>
</dbReference>
<dbReference type="EnsemblPlants" id="TraesKARUn01G0160450.1">
    <property type="protein sequence ID" value="cds.TraesKARUn01G0160450.1"/>
    <property type="gene ID" value="TraesKARUn01G0160450"/>
</dbReference>
<dbReference type="EnsemblPlants" id="TraesKARUn01G0160550.1">
    <property type="protein sequence ID" value="cds.TraesKARUn01G0160550.1"/>
    <property type="gene ID" value="TraesKARUn01G0160550"/>
</dbReference>
<dbReference type="EnsemblPlants" id="TraesKARUn01G0160770.1">
    <property type="protein sequence ID" value="cds.TraesKARUn01G0160770.1"/>
    <property type="gene ID" value="TraesKARUn01G0160770"/>
</dbReference>
<dbReference type="EnsemblPlants" id="TraesKARUn01G0160880.1">
    <property type="protein sequence ID" value="cds.TraesKARUn01G0160880.1"/>
    <property type="gene ID" value="TraesKARUn01G0160880"/>
</dbReference>
<dbReference type="EnsemblPlants" id="TraesKARUn01G0160950.1">
    <property type="protein sequence ID" value="cds.TraesKARUn01G0160950.1"/>
    <property type="gene ID" value="TraesKARUn01G0160950"/>
</dbReference>
<dbReference type="EnsemblPlants" id="TraesKARUn01G0161050.1">
    <property type="protein sequence ID" value="cds.TraesKARUn01G0161050.1"/>
    <property type="gene ID" value="TraesKARUn01G0161050"/>
</dbReference>
<dbReference type="EnsemblPlants" id="TraesKARUn01G0162090.1">
    <property type="protein sequence ID" value="cds.TraesKARUn01G0162090.1"/>
    <property type="gene ID" value="TraesKARUn01G0162090"/>
</dbReference>
<dbReference type="EnsemblPlants" id="TraesKARUn01G0162170.1">
    <property type="protein sequence ID" value="cds.TraesKARUn01G0162170.1"/>
    <property type="gene ID" value="TraesKARUn01G0162170"/>
</dbReference>
<dbReference type="EnsemblPlants" id="TraesKARUn01G0162270.1">
    <property type="protein sequence ID" value="cds.TraesKARUn01G0162270.1"/>
    <property type="gene ID" value="TraesKARUn01G0162270"/>
</dbReference>
<dbReference type="EnsemblPlants" id="TraesKARUn01G0162300.1">
    <property type="protein sequence ID" value="cds.TraesKARUn01G0162300.1"/>
    <property type="gene ID" value="TraesKARUn01G0162300"/>
</dbReference>
<dbReference type="EnsemblPlants" id="TraesKARUn01G0162320.1">
    <property type="protein sequence ID" value="cds.TraesKARUn01G0162320.1"/>
    <property type="gene ID" value="TraesKARUn01G0162320"/>
</dbReference>
<dbReference type="EnsemblPlants" id="TraesKARUn01G0162420.1">
    <property type="protein sequence ID" value="cds.TraesKARUn01G0162420.1"/>
    <property type="gene ID" value="TraesKARUn01G0162420"/>
</dbReference>
<dbReference type="EnsemblPlants" id="TraesKARUn01G0162510.1">
    <property type="protein sequence ID" value="cds.TraesKARUn01G0162510.1"/>
    <property type="gene ID" value="TraesKARUn01G0162510"/>
</dbReference>
<dbReference type="EnsemblPlants" id="TraesKARUn01G0162590.1">
    <property type="protein sequence ID" value="cds.TraesKARUn01G0162590.1"/>
    <property type="gene ID" value="TraesKARUn01G0162590"/>
</dbReference>
<dbReference type="EnsemblPlants" id="TraesKARUn01G0162690.1">
    <property type="protein sequence ID" value="cds.TraesKARUn01G0162690.1"/>
    <property type="gene ID" value="TraesKARUn01G0162690"/>
</dbReference>
<dbReference type="EnsemblPlants" id="TraesKARUn01G0162810.1">
    <property type="protein sequence ID" value="cds.TraesKARUn01G0162810.1"/>
    <property type="gene ID" value="TraesKARUn01G0162810"/>
</dbReference>
<dbReference type="EnsemblPlants" id="TraesKARUn01G0163130.1">
    <property type="protein sequence ID" value="cds.TraesKARUn01G0163130.1"/>
    <property type="gene ID" value="TraesKARUn01G0163130"/>
</dbReference>
<dbReference type="EnsemblPlants" id="TraesKARUn01G0163250.1">
    <property type="protein sequence ID" value="cds.TraesKARUn01G0163250.1"/>
    <property type="gene ID" value="TraesKARUn01G0163250"/>
</dbReference>
<dbReference type="EnsemblPlants" id="TraesKARUn01G0163330.1">
    <property type="protein sequence ID" value="cds.TraesKARUn01G0163330.1"/>
    <property type="gene ID" value="TraesKARUn01G0163330"/>
</dbReference>
<dbReference type="EnsemblPlants" id="TraesKARUn01G0163390.1">
    <property type="protein sequence ID" value="cds.TraesKARUn01G0163390.1"/>
    <property type="gene ID" value="TraesKARUn01G0163390"/>
</dbReference>
<dbReference type="EnsemblPlants" id="TraesKARUn01G0163730.1">
    <property type="protein sequence ID" value="cds.TraesKARUn01G0163730.1"/>
    <property type="gene ID" value="TraesKARUn01G0163730"/>
</dbReference>
<dbReference type="EnsemblPlants" id="TraesKARUn01G0163890.1">
    <property type="protein sequence ID" value="cds.TraesKARUn01G0163890.1"/>
    <property type="gene ID" value="TraesKARUn01G0163890"/>
</dbReference>
<dbReference type="EnsemblPlants" id="TraesKARUn01G0164020.1">
    <property type="protein sequence ID" value="cds.TraesKARUn01G0164020.1"/>
    <property type="gene ID" value="TraesKARUn01G0164020"/>
</dbReference>
<dbReference type="EnsemblPlants" id="TraesKARUn01G0164240.1">
    <property type="protein sequence ID" value="cds.TraesKARUn01G0164240.1"/>
    <property type="gene ID" value="TraesKARUn01G0164240"/>
</dbReference>
<dbReference type="EnsemblPlants" id="TraesKARUn01G0164560.1">
    <property type="protein sequence ID" value="cds.TraesKARUn01G0164560.1"/>
    <property type="gene ID" value="TraesKARUn01G0164560"/>
</dbReference>
<dbReference type="EnsemblPlants" id="TraesKARUn01G0164640.1">
    <property type="protein sequence ID" value="cds.TraesKARUn01G0164640.1"/>
    <property type="gene ID" value="TraesKARUn01G0164640"/>
</dbReference>
<dbReference type="EnsemblPlants" id="TraesKARUn01G0165110.1">
    <property type="protein sequence ID" value="cds.TraesKARUn01G0165110.1"/>
    <property type="gene ID" value="TraesKARUn01G0165110"/>
</dbReference>
<dbReference type="EnsemblPlants" id="TraesKARUn01G0165150.1">
    <property type="protein sequence ID" value="cds.TraesKARUn01G0165150.1"/>
    <property type="gene ID" value="TraesKARUn01G0165150"/>
</dbReference>
<dbReference type="EnsemblPlants" id="TraesKARUn01G0165320.1">
    <property type="protein sequence ID" value="cds.TraesKARUn01G0165320.1"/>
    <property type="gene ID" value="TraesKARUn01G0165320"/>
</dbReference>
<dbReference type="EnsemblPlants" id="TraesKARUn01G0165370.1">
    <property type="protein sequence ID" value="cds.TraesKARUn01G0165370.1"/>
    <property type="gene ID" value="TraesKARUn01G0165370"/>
</dbReference>
<dbReference type="EnsemblPlants" id="TraesKARUn01G0165440.1">
    <property type="protein sequence ID" value="cds.TraesKARUn01G0165440.1"/>
    <property type="gene ID" value="TraesKARUn01G0165440"/>
</dbReference>
<dbReference type="EnsemblPlants" id="TraesKARUn01G0165640.1">
    <property type="protein sequence ID" value="cds.TraesKARUn01G0165640.1"/>
    <property type="gene ID" value="TraesKARUn01G0165640"/>
</dbReference>
<dbReference type="EnsemblPlants" id="TraesKARUn01G0165670.1">
    <property type="protein sequence ID" value="cds.TraesKARUn01G0165670.1"/>
    <property type="gene ID" value="TraesKARUn01G0165670"/>
</dbReference>
<dbReference type="EnsemblPlants" id="TraesKARUn01G0165950.1">
    <property type="protein sequence ID" value="cds.TraesKARUn01G0165950.1"/>
    <property type="gene ID" value="TraesKARUn01G0165950"/>
</dbReference>
<dbReference type="EnsemblPlants" id="TraesKARUn01G0166060.1">
    <property type="protein sequence ID" value="cds.TraesKARUn01G0166060.1"/>
    <property type="gene ID" value="TraesKARUn01G0166060"/>
</dbReference>
<dbReference type="EnsemblPlants" id="TraesKARUn01G0166200.1">
    <property type="protein sequence ID" value="cds.TraesKARUn01G0166200.1"/>
    <property type="gene ID" value="TraesKARUn01G0166200"/>
</dbReference>
<dbReference type="EnsemblPlants" id="TraesKARUn01G0166360.1">
    <property type="protein sequence ID" value="cds.TraesKARUn01G0166360.1"/>
    <property type="gene ID" value="TraesKARUn01G0166360"/>
</dbReference>
<dbReference type="EnsemblPlants" id="TraesKARUn01G0166440.1">
    <property type="protein sequence ID" value="cds.TraesKARUn01G0166440.1"/>
    <property type="gene ID" value="TraesKARUn01G0166440"/>
</dbReference>
<dbReference type="EnsemblPlants" id="TraesKARUn01G0166500.1">
    <property type="protein sequence ID" value="cds.TraesKARUn01G0166500.1"/>
    <property type="gene ID" value="TraesKARUn01G0166500"/>
</dbReference>
<dbReference type="EnsemblPlants" id="TraesKARUn01G0166630.1">
    <property type="protein sequence ID" value="cds.TraesKARUn01G0166630.1"/>
    <property type="gene ID" value="TraesKARUn01G0166630"/>
</dbReference>
<dbReference type="EnsemblPlants" id="TraesKARUn01G0167640.1">
    <property type="protein sequence ID" value="cds.TraesKARUn01G0167640.1"/>
    <property type="gene ID" value="TraesKARUn01G0167640"/>
</dbReference>
<dbReference type="EnsemblPlants" id="TraesKARUn01G0167790.1">
    <property type="protein sequence ID" value="cds.TraesKARUn01G0167790.1"/>
    <property type="gene ID" value="TraesKARUn01G0167790"/>
</dbReference>
<dbReference type="EnsemblPlants" id="TraesKARUn01G0167820.1">
    <property type="protein sequence ID" value="cds.TraesKARUn01G0167820.1"/>
    <property type="gene ID" value="TraesKARUn01G0167820"/>
</dbReference>
<dbReference type="EnsemblPlants" id="TraesKARUn01G0168030.1">
    <property type="protein sequence ID" value="cds.TraesKARUn01G0168030.1"/>
    <property type="gene ID" value="TraesKARUn01G0168030"/>
</dbReference>
<dbReference type="EnsemblPlants" id="TraesKARUn01G0168180.1">
    <property type="protein sequence ID" value="cds.TraesKARUn01G0168180.1"/>
    <property type="gene ID" value="TraesKARUn01G0168180"/>
</dbReference>
<dbReference type="EnsemblPlants" id="TraesKARUn01G0168390.1">
    <property type="protein sequence ID" value="cds.TraesKARUn01G0168390.1"/>
    <property type="gene ID" value="TraesKARUn01G0168390"/>
</dbReference>
<dbReference type="EnsemblPlants" id="TraesKARUn01G0169490.1">
    <property type="protein sequence ID" value="cds.TraesKARUn01G0169490.1"/>
    <property type="gene ID" value="TraesKARUn01G0169490"/>
</dbReference>
<dbReference type="EnsemblPlants" id="TraesKARUn01G0169970.1">
    <property type="protein sequence ID" value="cds.TraesKARUn01G0169970.1"/>
    <property type="gene ID" value="TraesKARUn01G0169970"/>
</dbReference>
<dbReference type="EnsemblPlants" id="TraesKARUn01G0170300.1">
    <property type="protein sequence ID" value="cds.TraesKARUn01G0170300.1"/>
    <property type="gene ID" value="TraesKARUn01G0170300"/>
</dbReference>
<dbReference type="EnsemblPlants" id="TraesKARUn01G0170340.1">
    <property type="protein sequence ID" value="cds.TraesKARUn01G0170340.1"/>
    <property type="gene ID" value="TraesKARUn01G0170340"/>
</dbReference>
<dbReference type="EnsemblPlants" id="TraesKARUn01G0170390.1">
    <property type="protein sequence ID" value="cds.TraesKARUn01G0170390.1"/>
    <property type="gene ID" value="TraesKARUn01G0170390"/>
</dbReference>
<dbReference type="EnsemblPlants" id="TraesKARUn01G0170420.1">
    <property type="protein sequence ID" value="cds.TraesKARUn01G0170420.1"/>
    <property type="gene ID" value="TraesKARUn01G0170420"/>
</dbReference>
<dbReference type="EnsemblPlants" id="TraesKARUn01G0170470.1">
    <property type="protein sequence ID" value="cds.TraesKARUn01G0170470.1"/>
    <property type="gene ID" value="TraesKARUn01G0170470"/>
</dbReference>
<dbReference type="EnsemblPlants" id="TraesKARUn01G0170530.1">
    <property type="protein sequence ID" value="cds.TraesKARUn01G0170530.1"/>
    <property type="gene ID" value="TraesKARUn01G0170530"/>
</dbReference>
<dbReference type="EnsemblPlants" id="TraesKARUn01G0170970.1">
    <property type="protein sequence ID" value="cds.TraesKARUn01G0170970.1"/>
    <property type="gene ID" value="TraesKARUn01G0170970"/>
</dbReference>
<dbReference type="EnsemblPlants" id="TraesKARUn01G0171050.1">
    <property type="protein sequence ID" value="cds.TraesKARUn01G0171050.1"/>
    <property type="gene ID" value="TraesKARUn01G0171050"/>
</dbReference>
<dbReference type="EnsemblPlants" id="TraesKARUn01G0172230.1">
    <property type="protein sequence ID" value="cds.TraesKARUn01G0172230.1"/>
    <property type="gene ID" value="TraesKARUn01G0172230"/>
</dbReference>
<dbReference type="EnsemblPlants" id="TraesKARUn01G0172380.1">
    <property type="protein sequence ID" value="cds.TraesKARUn01G0172380.1"/>
    <property type="gene ID" value="TraesKARUn01G0172380"/>
</dbReference>
<dbReference type="EnsemblPlants" id="TraesKARUn01G0172680.1">
    <property type="protein sequence ID" value="cds.TraesKARUn01G0172680.1"/>
    <property type="gene ID" value="TraesKARUn01G0172680"/>
</dbReference>
<dbReference type="EnsemblPlants" id="TraesKARUn01G0173070.1">
    <property type="protein sequence ID" value="cds.TraesKARUn01G0173070.1"/>
    <property type="gene ID" value="TraesKARUn01G0173070"/>
</dbReference>
<dbReference type="EnsemblPlants" id="TraesKARUn01G0173420.1">
    <property type="protein sequence ID" value="cds.TraesKARUn01G0173420.1"/>
    <property type="gene ID" value="TraesKARUn01G0173420"/>
</dbReference>
<dbReference type="EnsemblPlants" id="TraesKARUn01G0174280.1">
    <property type="protein sequence ID" value="cds.TraesKARUn01G0174280.1"/>
    <property type="gene ID" value="TraesKARUn01G0174280"/>
</dbReference>
<dbReference type="EnsemblPlants" id="TraesKARUn01G0174360.1">
    <property type="protein sequence ID" value="cds.TraesKARUn01G0174360.1"/>
    <property type="gene ID" value="TraesKARUn01G0174360"/>
</dbReference>
<dbReference type="EnsemblPlants" id="TraesKARUn01G0174600.1">
    <property type="protein sequence ID" value="cds.TraesKARUn01G0174600.1"/>
    <property type="gene ID" value="TraesKARUn01G0174600"/>
</dbReference>
<dbReference type="EnsemblPlants" id="TraesKARUn01G0174650.1">
    <property type="protein sequence ID" value="cds.TraesKARUn01G0174650.1"/>
    <property type="gene ID" value="TraesKARUn01G0174650"/>
</dbReference>
<dbReference type="EnsemblPlants" id="TraesKARUn01G0174960.1">
    <property type="protein sequence ID" value="cds.TraesKARUn01G0174960.1"/>
    <property type="gene ID" value="TraesKARUn01G0174960"/>
</dbReference>
<dbReference type="EnsemblPlants" id="TraesKARUn01G0175520.1">
    <property type="protein sequence ID" value="cds.TraesKARUn01G0175520.1"/>
    <property type="gene ID" value="TraesKARUn01G0175520"/>
</dbReference>
<dbReference type="EnsemblPlants" id="TraesKARUn01G0175910.1">
    <property type="protein sequence ID" value="cds.TraesKARUn01G0175910.1"/>
    <property type="gene ID" value="TraesKARUn01G0175910"/>
</dbReference>
<dbReference type="EnsemblPlants" id="TraesKARUn01G0176190.1">
    <property type="protein sequence ID" value="cds.TraesKARUn01G0176190.1"/>
    <property type="gene ID" value="TraesKARUn01G0176190"/>
</dbReference>
<dbReference type="EnsemblPlants" id="TraesKARUn01G0176690.1">
    <property type="protein sequence ID" value="cds.TraesKARUn01G0176690.1"/>
    <property type="gene ID" value="TraesKARUn01G0176690"/>
</dbReference>
<dbReference type="EnsemblPlants" id="TraesKARUn01G0176760.1">
    <property type="protein sequence ID" value="cds.TraesKARUn01G0176760.1"/>
    <property type="gene ID" value="TraesKARUn01G0176760"/>
</dbReference>
<dbReference type="EnsemblPlants" id="TraesKARUn01G0177670.1">
    <property type="protein sequence ID" value="cds.TraesKARUn01G0177670.1"/>
    <property type="gene ID" value="TraesKARUn01G0177670"/>
</dbReference>
<dbReference type="EnsemblPlants" id="TraesKARUn01G0179420.1">
    <property type="protein sequence ID" value="cds.TraesKARUn01G0179420.1"/>
    <property type="gene ID" value="TraesKARUn01G0179420"/>
</dbReference>
<dbReference type="EnsemblPlants" id="TraesKARUn01G0179770.1">
    <property type="protein sequence ID" value="cds.TraesKARUn01G0179770.1"/>
    <property type="gene ID" value="TraesKARUn01G0179770"/>
</dbReference>
<dbReference type="EnsemblPlants" id="TraesKARUn01G0179920.1">
    <property type="protein sequence ID" value="cds.TraesKARUn01G0179920.1"/>
    <property type="gene ID" value="TraesKARUn01G0179920"/>
</dbReference>
<dbReference type="EnsemblPlants" id="TraesKARUn01G0181130.1">
    <property type="protein sequence ID" value="cds.TraesKARUn01G0181130.1"/>
    <property type="gene ID" value="TraesKARUn01G0181130"/>
</dbReference>
<dbReference type="EnsemblPlants" id="TraesKARUn01G0182130.1">
    <property type="protein sequence ID" value="cds.TraesKARUn01G0182130.1"/>
    <property type="gene ID" value="TraesKARUn01G0182130"/>
</dbReference>
<dbReference type="EnsemblPlants" id="TraesKARUn01G0182400.1">
    <property type="protein sequence ID" value="cds.TraesKARUn01G0182400.1"/>
    <property type="gene ID" value="TraesKARUn01G0182400"/>
</dbReference>
<dbReference type="EnsemblPlants" id="TraesKARUn01G0182630.1">
    <property type="protein sequence ID" value="cds.TraesKARUn01G0182630.1"/>
    <property type="gene ID" value="TraesKARUn01G0182630"/>
</dbReference>
<dbReference type="EnsemblPlants" id="TraesKARUn01G0182920.1">
    <property type="protein sequence ID" value="cds.TraesKARUn01G0182920.1"/>
    <property type="gene ID" value="TraesKARUn01G0182920"/>
</dbReference>
<dbReference type="EnsemblPlants" id="TraesKARUn01G0184120.1">
    <property type="protein sequence ID" value="cds.TraesKARUn01G0184120.1"/>
    <property type="gene ID" value="TraesKARUn01G0184120"/>
</dbReference>
<dbReference type="EnsemblPlants" id="TraesKARUn01G0184900.1">
    <property type="protein sequence ID" value="cds.TraesKARUn01G0184900.1"/>
    <property type="gene ID" value="TraesKARUn01G0184900"/>
</dbReference>
<dbReference type="EnsemblPlants" id="TraesKARUn01G0185050.1">
    <property type="protein sequence ID" value="cds.TraesKARUn01G0185050.1"/>
    <property type="gene ID" value="TraesKARUn01G0185050"/>
</dbReference>
<dbReference type="EnsemblPlants" id="TraesKARUn01G0185950.1">
    <property type="protein sequence ID" value="cds.TraesKARUn01G0185950.1"/>
    <property type="gene ID" value="TraesKARUn01G0185950"/>
</dbReference>
<dbReference type="EnsemblPlants" id="TraesKARUn01G0187050.1">
    <property type="protein sequence ID" value="cds.TraesKARUn01G0187050.1"/>
    <property type="gene ID" value="TraesKARUn01G0187050"/>
</dbReference>
<dbReference type="EnsemblPlants" id="TraesKARUn01G0187080.1">
    <property type="protein sequence ID" value="cds.TraesKARUn01G0187080.1"/>
    <property type="gene ID" value="TraesKARUn01G0187080"/>
</dbReference>
<dbReference type="EnsemblPlants" id="TraesKARUn01G0187190.1">
    <property type="protein sequence ID" value="cds.TraesKARUn01G0187190.1"/>
    <property type="gene ID" value="TraesKARUn01G0187190"/>
</dbReference>
<dbReference type="EnsemblPlants" id="TraesKARUn01G0188300.1">
    <property type="protein sequence ID" value="cds.TraesKARUn01G0188300.1"/>
    <property type="gene ID" value="TraesKARUn01G0188300"/>
</dbReference>
<dbReference type="EnsemblPlants" id="TraesKARUn01G0189680.1">
    <property type="protein sequence ID" value="cds.TraesKARUn01G0189680.1"/>
    <property type="gene ID" value="TraesKARUn01G0189680"/>
</dbReference>
<dbReference type="EnsemblPlants" id="TraesKARUn01G0189810.1">
    <property type="protein sequence ID" value="cds.TraesKARUn01G0189810.1"/>
    <property type="gene ID" value="TraesKARUn01G0189810"/>
</dbReference>
<dbReference type="EnsemblPlants" id="TraesKARUn01G0189980.1">
    <property type="protein sequence ID" value="cds.TraesKARUn01G0189980.1"/>
    <property type="gene ID" value="TraesKARUn01G0189980"/>
</dbReference>
<dbReference type="EnsemblPlants" id="TraesKARUn01G0190160.1">
    <property type="protein sequence ID" value="cds.TraesKARUn01G0190160.1"/>
    <property type="gene ID" value="TraesKARUn01G0190160"/>
</dbReference>
<dbReference type="EnsemblPlants" id="TraesKARUn01G0190910.1">
    <property type="protein sequence ID" value="cds.TraesKARUn01G0190910.1"/>
    <property type="gene ID" value="TraesKARUn01G0190910"/>
</dbReference>
<dbReference type="EnsemblPlants" id="TraesKARUn01G0191040.1">
    <property type="protein sequence ID" value="cds.TraesKARUn01G0191040.1"/>
    <property type="gene ID" value="TraesKARUn01G0191040"/>
</dbReference>
<dbReference type="EnsemblPlants" id="TraesKARUn01G0191530.1">
    <property type="protein sequence ID" value="cds.TraesKARUn01G0191530.1"/>
    <property type="gene ID" value="TraesKARUn01G0191530"/>
</dbReference>
<dbReference type="EnsemblPlants" id="TraesKARUn01G0191990.1">
    <property type="protein sequence ID" value="cds.TraesKARUn01G0191990.1"/>
    <property type="gene ID" value="TraesKARUn01G0191990"/>
</dbReference>
<dbReference type="EnsemblPlants" id="TraesKARUn01G0192520.1">
    <property type="protein sequence ID" value="cds.TraesKARUn01G0192520.1"/>
    <property type="gene ID" value="TraesKARUn01G0192520"/>
</dbReference>
<dbReference type="EnsemblPlants" id="TraesKARUn01G0192720.1">
    <property type="protein sequence ID" value="cds.TraesKARUn01G0192720.1"/>
    <property type="gene ID" value="TraesKARUn01G0192720"/>
</dbReference>
<dbReference type="EnsemblPlants" id="TraesKARUn01G0193790.1">
    <property type="protein sequence ID" value="cds.TraesKARUn01G0193790.1"/>
    <property type="gene ID" value="TraesKARUn01G0193790"/>
</dbReference>
<dbReference type="EnsemblPlants" id="TraesLAC1D03G00487240.1">
    <property type="protein sequence ID" value="TraesLAC1D03G00487240.1.CDS1"/>
    <property type="gene ID" value="TraesLAC1D03G00487240"/>
</dbReference>
<dbReference type="EnsemblPlants" id="TraesLAC3B03G01522020.1">
    <property type="protein sequence ID" value="TraesLAC3B03G01522020.1.CDS1"/>
    <property type="gene ID" value="TraesLAC3B03G01522020"/>
</dbReference>
<dbReference type="EnsemblPlants" id="TraesLAC5B03G02765690.1">
    <property type="protein sequence ID" value="TraesLAC5B03G02765690.1.CDS1"/>
    <property type="gene ID" value="TraesLAC5B03G02765690"/>
</dbReference>
<dbReference type="EnsemblPlants" id="TraesLAC5D03G03069340.1">
    <property type="protein sequence ID" value="TraesLAC5D03G03069340.1.CDS1"/>
    <property type="gene ID" value="TraesLAC5D03G03069340"/>
</dbReference>
<dbReference type="EnsemblPlants" id="TraesLDM1D03G00486440.1">
    <property type="protein sequence ID" value="TraesLDM1D03G00486440.1.CDS1"/>
    <property type="gene ID" value="TraesLDM1D03G00486440"/>
</dbReference>
<dbReference type="EnsemblPlants" id="TraesLDM5B03G02813500.1">
    <property type="protein sequence ID" value="TraesLDM5B03G02813500.1.CDS1"/>
    <property type="gene ID" value="TraesLDM5B03G02813500"/>
</dbReference>
<dbReference type="EnsemblPlants" id="TraesLDM5D03G03118190.1">
    <property type="protein sequence ID" value="TraesLDM5D03G03118190.1.CDS1"/>
    <property type="gene ID" value="TraesLDM5D03G03118190"/>
</dbReference>
<dbReference type="EnsemblPlants" id="TraesMAC1D03G00483140.1">
    <property type="protein sequence ID" value="TraesMAC1D03G00483140.1.CDS1"/>
    <property type="gene ID" value="TraesMAC1D03G00483140"/>
</dbReference>
<dbReference type="EnsemblPlants" id="TraesMAC3B03G01579770.1">
    <property type="protein sequence ID" value="TraesMAC3B03G01579770.1.CDS1"/>
    <property type="gene ID" value="TraesMAC3B03G01579770"/>
</dbReference>
<dbReference type="EnsemblPlants" id="TraesMAC5A03G02716750.1">
    <property type="protein sequence ID" value="TraesMAC5A03G02716750.1.CDS1"/>
    <property type="gene ID" value="TraesMAC5A03G02716750"/>
</dbReference>
<dbReference type="EnsemblPlants" id="TraesMAC5D03G03112250.1">
    <property type="protein sequence ID" value="TraesMAC5D03G03112250.1.CDS1"/>
    <property type="gene ID" value="TraesMAC5D03G03112250"/>
</dbReference>
<dbReference type="EnsemblPlants" id="TraesNOR1D03G00491350.1">
    <property type="protein sequence ID" value="TraesNOR1D03G00491350.1.CDS1"/>
    <property type="gene ID" value="TraesNOR1D03G00491350"/>
</dbReference>
<dbReference type="EnsemblPlants" id="TraesNOR5B03G02836170.1">
    <property type="protein sequence ID" value="TraesNOR5B03G02836170.1.CDS1"/>
    <property type="gene ID" value="TraesNOR5B03G02836170"/>
</dbReference>
<dbReference type="EnsemblPlants" id="TraesNOR5D03G03143180.1">
    <property type="protein sequence ID" value="TraesNOR5D03G03143180.1.CDS1"/>
    <property type="gene ID" value="TraesNOR5D03G03143180"/>
</dbReference>
<dbReference type="EnsemblPlants" id="TraesPARA_EIv1.0_1544810.1">
    <property type="protein sequence ID" value="TraesPARA_EIv1.0_1544810.1.CDS1"/>
    <property type="gene ID" value="TraesPARA_EIv1.0_1544810"/>
</dbReference>
<dbReference type="EnsemblPlants" id="TraesPARA_EIv1.0_2014510.1">
    <property type="protein sequence ID" value="TraesPARA_EIv1.0_2014510.1.CDS1"/>
    <property type="gene ID" value="TraesPARA_EIv1.0_2014510"/>
</dbReference>
<dbReference type="EnsemblPlants" id="TraesPARA_EIv1.0_2663130.1">
    <property type="protein sequence ID" value="TraesPARA_EIv1.0_2663130.1.CDS1"/>
    <property type="gene ID" value="TraesPARA_EIv1.0_2663130"/>
</dbReference>
<dbReference type="EnsemblPlants" id="TraesRN1D0100498100.1">
    <property type="protein sequence ID" value="TraesRN1D0100498100.1"/>
    <property type="gene ID" value="TraesRN1D0100498100"/>
</dbReference>
<dbReference type="EnsemblPlants" id="TraesRN1D0100498200.1">
    <property type="protein sequence ID" value="TraesRN1D0100498200.1"/>
    <property type="gene ID" value="TraesRN1D0100498200"/>
</dbReference>
<dbReference type="EnsemblPlants" id="TraesRN1D0100498300.1">
    <property type="protein sequence ID" value="TraesRN1D0100498300.1"/>
    <property type="gene ID" value="TraesRN1D0100498300"/>
</dbReference>
<dbReference type="EnsemblPlants" id="TraesRN5D0100015700.1">
    <property type="protein sequence ID" value="TraesRN5D0100015700.1"/>
    <property type="gene ID" value="TraesRN5D0100015700"/>
</dbReference>
<dbReference type="EnsemblPlants" id="TraesRN5D0100485000.1">
    <property type="protein sequence ID" value="TraesRN5D0100485000.1"/>
    <property type="gene ID" value="TraesRN5D0100485000"/>
</dbReference>
<dbReference type="EnsemblPlants" id="TraesRN6D0100049000.1">
    <property type="protein sequence ID" value="TraesRN6D0100049000.1"/>
    <property type="gene ID" value="TraesRN6D0100049000"/>
</dbReference>
<dbReference type="EnsemblPlants" id="TraesSTA3B03G01572570.1">
    <property type="protein sequence ID" value="TraesSTA3B03G01572570.1.CDS1"/>
    <property type="gene ID" value="TraesSTA3B03G01572570"/>
</dbReference>
<dbReference type="EnsemblPlants" id="TraesSTA5D03G03104310.1">
    <property type="protein sequence ID" value="TraesSTA5D03G03104310.1.CDS1"/>
    <property type="gene ID" value="TraesSTA5D03G03104310"/>
</dbReference>
<dbReference type="EnsemblPlants" id="TraesSYM1D03G00490390.1">
    <property type="protein sequence ID" value="TraesSYM1D03G00490390.1.CDS1"/>
    <property type="gene ID" value="TraesSYM1D03G00490390"/>
</dbReference>
<dbReference type="EnsemblPlants" id="TraesSYM5D03G03053410.1">
    <property type="protein sequence ID" value="TraesSYM5D03G03053410.1.CDS1"/>
    <property type="gene ID" value="TraesSYM5D03G03053410"/>
</dbReference>
<dbReference type="GeneID" id="803095"/>
<dbReference type="Gramene" id="TraesARI1D03G00489300.1">
    <property type="protein sequence ID" value="TraesARI1D03G00489300.1.CDS1"/>
    <property type="gene ID" value="TraesARI1D03G00489300"/>
</dbReference>
<dbReference type="Gramene" id="TraesARI5D03G03067010.1">
    <property type="protein sequence ID" value="TraesARI5D03G03067010.1.CDS1"/>
    <property type="gene ID" value="TraesARI5D03G03067010"/>
</dbReference>
<dbReference type="Gramene" id="TraesARI7A03G04013470.1">
    <property type="protein sequence ID" value="TraesARI7A03G04013470.1.CDS1"/>
    <property type="gene ID" value="TraesARI7A03G04013470"/>
</dbReference>
<dbReference type="Gramene" id="TraesCS1D02G180800.1">
    <property type="protein sequence ID" value="TraesCS1D02G180800.1.cds1"/>
    <property type="gene ID" value="TraesCS1D02G180800"/>
</dbReference>
<dbReference type="Gramene" id="TraesCS1D03G0465700.1">
    <property type="protein sequence ID" value="TraesCS1D03G0465700.1.CDS1"/>
    <property type="gene ID" value="TraesCS1D03G0465700"/>
</dbReference>
<dbReference type="Gramene" id="TraesCS5B02G052700.1">
    <property type="protein sequence ID" value="TraesCS5B02G052700.1.cds1"/>
    <property type="gene ID" value="TraesCS5B02G052700"/>
</dbReference>
<dbReference type="Gramene" id="TraesCS5B03G0133700.1">
    <property type="protein sequence ID" value="TraesCS5B03G0133700.1.CDS1"/>
    <property type="gene ID" value="TraesCS5B03G0133700"/>
</dbReference>
<dbReference type="Gramene" id="TraesCS5D02G196700.1">
    <property type="protein sequence ID" value="TraesCS5D02G196700.1.cds1"/>
    <property type="gene ID" value="TraesCS5D02G196700"/>
</dbReference>
<dbReference type="Gramene" id="TraesCS5D03G0464700.1">
    <property type="protein sequence ID" value="TraesCS5D03G0464700.1.CDS1"/>
    <property type="gene ID" value="TraesCS5D03G0464700"/>
</dbReference>
<dbReference type="Gramene" id="TraesJAG1D03G00483160.1">
    <property type="protein sequence ID" value="TraesJAG1D03G00483160.1.CDS1"/>
    <property type="gene ID" value="TraesJAG1D03G00483160"/>
</dbReference>
<dbReference type="Gramene" id="TraesJAG5B03G02811450.1">
    <property type="protein sequence ID" value="TraesJAG5B03G02811450.1.CDS1"/>
    <property type="gene ID" value="TraesJAG5B03G02811450"/>
</dbReference>
<dbReference type="Gramene" id="TraesJAG5D03G03112940.1">
    <property type="protein sequence ID" value="TraesJAG5D03G03112940.1.CDS1"/>
    <property type="gene ID" value="TraesJAG5D03G03112940"/>
</dbReference>
<dbReference type="Gramene" id="TraesJUL1A03G00160460.1">
    <property type="protein sequence ID" value="TraesJUL1A03G00160460.1.CDS1"/>
    <property type="gene ID" value="TraesJUL1A03G00160460"/>
</dbReference>
<dbReference type="Gramene" id="TraesJUL5B03G02831480.1">
    <property type="protein sequence ID" value="TraesJUL5B03G02831480.1.CDS1"/>
    <property type="gene ID" value="TraesJUL5B03G02831480"/>
</dbReference>
<dbReference type="Gramene" id="TraesJUL5D03G03138620.1">
    <property type="protein sequence ID" value="TraesJUL5D03G03138620.1.CDS1"/>
    <property type="gene ID" value="TraesJUL5D03G03138620"/>
</dbReference>
<dbReference type="Gramene" id="TraesKAR1D01G0184510.1">
    <property type="protein sequence ID" value="cds.TraesKAR1D01G0184510.1"/>
    <property type="gene ID" value="TraesKAR1D01G0184510"/>
</dbReference>
<dbReference type="Gramene" id="TraesKAR2D01G0456730.1">
    <property type="protein sequence ID" value="cds.TraesKAR2D01G0456730.1"/>
    <property type="gene ID" value="TraesKAR2D01G0456730"/>
</dbReference>
<dbReference type="Gramene" id="TraesKAR3B01G0079620.1">
    <property type="protein sequence ID" value="cds.TraesKAR3B01G0079620.1"/>
    <property type="gene ID" value="TraesKAR3B01G0079620"/>
</dbReference>
<dbReference type="Gramene" id="TraesKAR5D01G0216750.1">
    <property type="protein sequence ID" value="cds.TraesKAR5D01G0216750.1"/>
    <property type="gene ID" value="TraesKAR5D01G0216750"/>
</dbReference>
<dbReference type="Gramene" id="TraesKAR6B01G0219610.1">
    <property type="protein sequence ID" value="cds.TraesKAR6B01G0219610.1"/>
    <property type="gene ID" value="TraesKAR6B01G0219610"/>
</dbReference>
<dbReference type="Gramene" id="TraesKAR6B01G0220360.1">
    <property type="protein sequence ID" value="cds.TraesKAR6B01G0220360.1"/>
    <property type="gene ID" value="TraesKAR6B01G0220360"/>
</dbReference>
<dbReference type="Gramene" id="TraesKAR7A01G0472730.1">
    <property type="protein sequence ID" value="cds.TraesKAR7A01G0472730.1"/>
    <property type="gene ID" value="TraesKAR7A01G0472730"/>
</dbReference>
<dbReference type="Gramene" id="TraesKARUn01G0026510.1">
    <property type="protein sequence ID" value="cds.TraesKARUn01G0026510.1"/>
    <property type="gene ID" value="TraesKARUn01G0026510"/>
</dbReference>
<dbReference type="Gramene" id="TraesKARUn01G0027000.1">
    <property type="protein sequence ID" value="cds.TraesKARUn01G0027000.1"/>
    <property type="gene ID" value="TraesKARUn01G0027000"/>
</dbReference>
<dbReference type="Gramene" id="TraesKARUn01G0027060.1">
    <property type="protein sequence ID" value="cds.TraesKARUn01G0027060.1"/>
    <property type="gene ID" value="TraesKARUn01G0027060"/>
</dbReference>
<dbReference type="Gramene" id="TraesKARUn01G0027540.1">
    <property type="protein sequence ID" value="cds.TraesKARUn01G0027540.1"/>
    <property type="gene ID" value="TraesKARUn01G0027540"/>
</dbReference>
<dbReference type="Gramene" id="TraesKARUn01G0028040.1">
    <property type="protein sequence ID" value="cds.TraesKARUn01G0028040.1"/>
    <property type="gene ID" value="TraesKARUn01G0028040"/>
</dbReference>
<dbReference type="Gramene" id="TraesKARUn01G0028400.1">
    <property type="protein sequence ID" value="cds.TraesKARUn01G0028400.1"/>
    <property type="gene ID" value="TraesKARUn01G0028400"/>
</dbReference>
<dbReference type="Gramene" id="TraesKARUn01G0028900.1">
    <property type="protein sequence ID" value="cds.TraesKARUn01G0028900.1"/>
    <property type="gene ID" value="TraesKARUn01G0028900"/>
</dbReference>
<dbReference type="Gramene" id="TraesKARUn01G0029210.1">
    <property type="protein sequence ID" value="cds.TraesKARUn01G0029210.1"/>
    <property type="gene ID" value="TraesKARUn01G0029210"/>
</dbReference>
<dbReference type="Gramene" id="TraesKARUn01G0029680.1">
    <property type="protein sequence ID" value="cds.TraesKARUn01G0029680.1"/>
    <property type="gene ID" value="TraesKARUn01G0029680"/>
</dbReference>
<dbReference type="Gramene" id="TraesKARUn01G0029900.1">
    <property type="protein sequence ID" value="cds.TraesKARUn01G0029900.1"/>
    <property type="gene ID" value="TraesKARUn01G0029900"/>
</dbReference>
<dbReference type="Gramene" id="TraesKARUn01G0031280.1">
    <property type="protein sequence ID" value="cds.TraesKARUn01G0031280.1"/>
    <property type="gene ID" value="TraesKARUn01G0031280"/>
</dbReference>
<dbReference type="Gramene" id="TraesKARUn01G0031350.1">
    <property type="protein sequence ID" value="cds.TraesKARUn01G0031350.1"/>
    <property type="gene ID" value="TraesKARUn01G0031350"/>
</dbReference>
<dbReference type="Gramene" id="TraesKARUn01G0032330.1">
    <property type="protein sequence ID" value="cds.TraesKARUn01G0032330.1"/>
    <property type="gene ID" value="TraesKARUn01G0032330"/>
</dbReference>
<dbReference type="Gramene" id="TraesKARUn01G0032550.1">
    <property type="protein sequence ID" value="cds.TraesKARUn01G0032550.1"/>
    <property type="gene ID" value="TraesKARUn01G0032550"/>
</dbReference>
<dbReference type="Gramene" id="TraesKARUn01G0032760.1">
    <property type="protein sequence ID" value="cds.TraesKARUn01G0032760.1"/>
    <property type="gene ID" value="TraesKARUn01G0032760"/>
</dbReference>
<dbReference type="Gramene" id="TraesKARUn01G0033140.1">
    <property type="protein sequence ID" value="cds.TraesKARUn01G0033140.1"/>
    <property type="gene ID" value="TraesKARUn01G0033140"/>
</dbReference>
<dbReference type="Gramene" id="TraesKARUn01G0033600.1">
    <property type="protein sequence ID" value="cds.TraesKARUn01G0033600.1"/>
    <property type="gene ID" value="TraesKARUn01G0033600"/>
</dbReference>
<dbReference type="Gramene" id="TraesKARUn01G0033660.1">
    <property type="protein sequence ID" value="cds.TraesKARUn01G0033660.1"/>
    <property type="gene ID" value="TraesKARUn01G0033660"/>
</dbReference>
<dbReference type="Gramene" id="TraesKARUn01G0035010.1">
    <property type="protein sequence ID" value="cds.TraesKARUn01G0035010.1"/>
    <property type="gene ID" value="TraesKARUn01G0035010"/>
</dbReference>
<dbReference type="Gramene" id="TraesKARUn01G0035170.1">
    <property type="protein sequence ID" value="cds.TraesKARUn01G0035170.1"/>
    <property type="gene ID" value="TraesKARUn01G0035170"/>
</dbReference>
<dbReference type="Gramene" id="TraesKARUn01G0035540.1">
    <property type="protein sequence ID" value="cds.TraesKARUn01G0035540.1"/>
    <property type="gene ID" value="TraesKARUn01G0035540"/>
</dbReference>
<dbReference type="Gramene" id="TraesKARUn01G0035700.1">
    <property type="protein sequence ID" value="cds.TraesKARUn01G0035700.1"/>
    <property type="gene ID" value="TraesKARUn01G0035700"/>
</dbReference>
<dbReference type="Gramene" id="TraesKARUn01G0035820.1">
    <property type="protein sequence ID" value="cds.TraesKARUn01G0035820.1"/>
    <property type="gene ID" value="TraesKARUn01G0035820"/>
</dbReference>
<dbReference type="Gramene" id="TraesKARUn01G0036290.1">
    <property type="protein sequence ID" value="cds.TraesKARUn01G0036290.1"/>
    <property type="gene ID" value="TraesKARUn01G0036290"/>
</dbReference>
<dbReference type="Gramene" id="TraesKARUn01G0036700.1">
    <property type="protein sequence ID" value="cds.TraesKARUn01G0036700.1"/>
    <property type="gene ID" value="TraesKARUn01G0036700"/>
</dbReference>
<dbReference type="Gramene" id="TraesKARUn01G0037010.1">
    <property type="protein sequence ID" value="cds.TraesKARUn01G0037010.1"/>
    <property type="gene ID" value="TraesKARUn01G0037010"/>
</dbReference>
<dbReference type="Gramene" id="TraesKARUn01G0060260.1">
    <property type="protein sequence ID" value="cds.TraesKARUn01G0060260.1"/>
    <property type="gene ID" value="TraesKARUn01G0060260"/>
</dbReference>
<dbReference type="Gramene" id="TraesKARUn01G0060390.1">
    <property type="protein sequence ID" value="cds.TraesKARUn01G0060390.1"/>
    <property type="gene ID" value="TraesKARUn01G0060390"/>
</dbReference>
<dbReference type="Gramene" id="TraesKARUn01G0061880.1">
    <property type="protein sequence ID" value="cds.TraesKARUn01G0061880.1"/>
    <property type="gene ID" value="TraesKARUn01G0061880"/>
</dbReference>
<dbReference type="Gramene" id="TraesKARUn01G0062130.1">
    <property type="protein sequence ID" value="cds.TraesKARUn01G0062130.1"/>
    <property type="gene ID" value="TraesKARUn01G0062130"/>
</dbReference>
<dbReference type="Gramene" id="TraesKARUn01G0062500.1">
    <property type="protein sequence ID" value="cds.TraesKARUn01G0062500.1"/>
    <property type="gene ID" value="TraesKARUn01G0062500"/>
</dbReference>
<dbReference type="Gramene" id="TraesKARUn01G0062670.1">
    <property type="protein sequence ID" value="cds.TraesKARUn01G0062670.1"/>
    <property type="gene ID" value="TraesKARUn01G0062670"/>
</dbReference>
<dbReference type="Gramene" id="TraesKARUn01G0065620.1">
    <property type="protein sequence ID" value="cds.TraesKARUn01G0065620.1"/>
    <property type="gene ID" value="TraesKARUn01G0065620"/>
</dbReference>
<dbReference type="Gramene" id="TraesKARUn01G0066240.1">
    <property type="protein sequence ID" value="cds.TraesKARUn01G0066240.1"/>
    <property type="gene ID" value="TraesKARUn01G0066240"/>
</dbReference>
<dbReference type="Gramene" id="TraesKARUn01G0066890.1">
    <property type="protein sequence ID" value="cds.TraesKARUn01G0066890.1"/>
    <property type="gene ID" value="TraesKARUn01G0066890"/>
</dbReference>
<dbReference type="Gramene" id="TraesKARUn01G0068060.1">
    <property type="protein sequence ID" value="cds.TraesKARUn01G0068060.1"/>
    <property type="gene ID" value="TraesKARUn01G0068060"/>
</dbReference>
<dbReference type="Gramene" id="TraesKARUn01G0068270.1">
    <property type="protein sequence ID" value="cds.TraesKARUn01G0068270.1"/>
    <property type="gene ID" value="TraesKARUn01G0068270"/>
</dbReference>
<dbReference type="Gramene" id="TraesKARUn01G0069340.1">
    <property type="protein sequence ID" value="cds.TraesKARUn01G0069340.1"/>
    <property type="gene ID" value="TraesKARUn01G0069340"/>
</dbReference>
<dbReference type="Gramene" id="TraesKARUn01G0069470.1">
    <property type="protein sequence ID" value="cds.TraesKARUn01G0069470.1"/>
    <property type="gene ID" value="TraesKARUn01G0069470"/>
</dbReference>
<dbReference type="Gramene" id="TraesKARUn01G0069660.1">
    <property type="protein sequence ID" value="cds.TraesKARUn01G0069660.1"/>
    <property type="gene ID" value="TraesKARUn01G0069660"/>
</dbReference>
<dbReference type="Gramene" id="TraesKARUn01G0069920.1">
    <property type="protein sequence ID" value="cds.TraesKARUn01G0069920.1"/>
    <property type="gene ID" value="TraesKARUn01G0069920"/>
</dbReference>
<dbReference type="Gramene" id="TraesKARUn01G0070700.1">
    <property type="protein sequence ID" value="cds.TraesKARUn01G0070700.1"/>
    <property type="gene ID" value="TraesKARUn01G0070700"/>
</dbReference>
<dbReference type="Gramene" id="TraesKARUn01G0071050.1">
    <property type="protein sequence ID" value="cds.TraesKARUn01G0071050.1"/>
    <property type="gene ID" value="TraesKARUn01G0071050"/>
</dbReference>
<dbReference type="Gramene" id="TraesKARUn01G0072310.1">
    <property type="protein sequence ID" value="cds.TraesKARUn01G0072310.1"/>
    <property type="gene ID" value="TraesKARUn01G0072310"/>
</dbReference>
<dbReference type="Gramene" id="TraesKARUn01G0072650.1">
    <property type="protein sequence ID" value="cds.TraesKARUn01G0072650.1"/>
    <property type="gene ID" value="TraesKARUn01G0072650"/>
</dbReference>
<dbReference type="Gramene" id="TraesKARUn01G0073010.1">
    <property type="protein sequence ID" value="cds.TraesKARUn01G0073010.1"/>
    <property type="gene ID" value="TraesKARUn01G0073010"/>
</dbReference>
<dbReference type="Gramene" id="TraesKARUn01G0073060.1">
    <property type="protein sequence ID" value="cds.TraesKARUn01G0073060.1"/>
    <property type="gene ID" value="TraesKARUn01G0073060"/>
</dbReference>
<dbReference type="Gramene" id="TraesKARUn01G0073240.1">
    <property type="protein sequence ID" value="cds.TraesKARUn01G0073240.1"/>
    <property type="gene ID" value="TraesKARUn01G0073240"/>
</dbReference>
<dbReference type="Gramene" id="TraesKARUn01G0073460.1">
    <property type="protein sequence ID" value="cds.TraesKARUn01G0073460.1"/>
    <property type="gene ID" value="TraesKARUn01G0073460"/>
</dbReference>
<dbReference type="Gramene" id="TraesKARUn01G0073550.1">
    <property type="protein sequence ID" value="cds.TraesKARUn01G0073550.1"/>
    <property type="gene ID" value="TraesKARUn01G0073550"/>
</dbReference>
<dbReference type="Gramene" id="TraesKARUn01G0074090.1">
    <property type="protein sequence ID" value="cds.TraesKARUn01G0074090.1"/>
    <property type="gene ID" value="TraesKARUn01G0074090"/>
</dbReference>
<dbReference type="Gramene" id="TraesKARUn01G0074410.1">
    <property type="protein sequence ID" value="cds.TraesKARUn01G0074410.1"/>
    <property type="gene ID" value="TraesKARUn01G0074410"/>
</dbReference>
<dbReference type="Gramene" id="TraesKARUn01G0074550.1">
    <property type="protein sequence ID" value="cds.TraesKARUn01G0074550.1"/>
    <property type="gene ID" value="TraesKARUn01G0074550"/>
</dbReference>
<dbReference type="Gramene" id="TraesKARUn01G0074850.1">
    <property type="protein sequence ID" value="cds.TraesKARUn01G0074850.1"/>
    <property type="gene ID" value="TraesKARUn01G0074850"/>
</dbReference>
<dbReference type="Gramene" id="TraesKARUn01G0075200.1">
    <property type="protein sequence ID" value="cds.TraesKARUn01G0075200.1"/>
    <property type="gene ID" value="TraesKARUn01G0075200"/>
</dbReference>
<dbReference type="Gramene" id="TraesKARUn01G0075570.1">
    <property type="protein sequence ID" value="cds.TraesKARUn01G0075570.1"/>
    <property type="gene ID" value="TraesKARUn01G0075570"/>
</dbReference>
<dbReference type="Gramene" id="TraesKARUn01G0076050.1">
    <property type="protein sequence ID" value="cds.TraesKARUn01G0076050.1"/>
    <property type="gene ID" value="TraesKARUn01G0076050"/>
</dbReference>
<dbReference type="Gramene" id="TraesKARUn01G0076300.1">
    <property type="protein sequence ID" value="cds.TraesKARUn01G0076300.1"/>
    <property type="gene ID" value="TraesKARUn01G0076300"/>
</dbReference>
<dbReference type="Gramene" id="TraesKARUn01G0076470.1">
    <property type="protein sequence ID" value="cds.TraesKARUn01G0076470.1"/>
    <property type="gene ID" value="TraesKARUn01G0076470"/>
</dbReference>
<dbReference type="Gramene" id="TraesKARUn01G0077120.1">
    <property type="protein sequence ID" value="cds.TraesKARUn01G0077120.1"/>
    <property type="gene ID" value="TraesKARUn01G0077120"/>
</dbReference>
<dbReference type="Gramene" id="TraesKARUn01G0077930.1">
    <property type="protein sequence ID" value="cds.TraesKARUn01G0077930.1"/>
    <property type="gene ID" value="TraesKARUn01G0077930"/>
</dbReference>
<dbReference type="Gramene" id="TraesKARUn01G0078470.1">
    <property type="protein sequence ID" value="cds.TraesKARUn01G0078470.1"/>
    <property type="gene ID" value="TraesKARUn01G0078470"/>
</dbReference>
<dbReference type="Gramene" id="TraesKARUn01G0078680.1">
    <property type="protein sequence ID" value="cds.TraesKARUn01G0078680.1"/>
    <property type="gene ID" value="TraesKARUn01G0078680"/>
</dbReference>
<dbReference type="Gramene" id="TraesKARUn01G0078880.1">
    <property type="protein sequence ID" value="cds.TraesKARUn01G0078880.1"/>
    <property type="gene ID" value="TraesKARUn01G0078880"/>
</dbReference>
<dbReference type="Gramene" id="TraesKARUn01G0078990.1">
    <property type="protein sequence ID" value="cds.TraesKARUn01G0078990.1"/>
    <property type="gene ID" value="TraesKARUn01G0078990"/>
</dbReference>
<dbReference type="Gramene" id="TraesKARUn01G0079160.1">
    <property type="protein sequence ID" value="cds.TraesKARUn01G0079160.1"/>
    <property type="gene ID" value="TraesKARUn01G0079160"/>
</dbReference>
<dbReference type="Gramene" id="TraesKARUn01G0079460.1">
    <property type="protein sequence ID" value="cds.TraesKARUn01G0079460.1"/>
    <property type="gene ID" value="TraesKARUn01G0079460"/>
</dbReference>
<dbReference type="Gramene" id="TraesKARUn01G0079850.1">
    <property type="protein sequence ID" value="cds.TraesKARUn01G0079850.1"/>
    <property type="gene ID" value="TraesKARUn01G0079850"/>
</dbReference>
<dbReference type="Gramene" id="TraesKARUn01G0079980.1">
    <property type="protein sequence ID" value="cds.TraesKARUn01G0079980.1"/>
    <property type="gene ID" value="TraesKARUn01G0079980"/>
</dbReference>
<dbReference type="Gramene" id="TraesKARUn01G0080070.1">
    <property type="protein sequence ID" value="cds.TraesKARUn01G0080070.1"/>
    <property type="gene ID" value="TraesKARUn01G0080070"/>
</dbReference>
<dbReference type="Gramene" id="TraesKARUn01G0080230.1">
    <property type="protein sequence ID" value="cds.TraesKARUn01G0080230.1"/>
    <property type="gene ID" value="TraesKARUn01G0080230"/>
</dbReference>
<dbReference type="Gramene" id="TraesKARUn01G0081120.1">
    <property type="protein sequence ID" value="cds.TraesKARUn01G0081120.1"/>
    <property type="gene ID" value="TraesKARUn01G0081120"/>
</dbReference>
<dbReference type="Gramene" id="TraesKARUn01G0081400.1">
    <property type="protein sequence ID" value="cds.TraesKARUn01G0081400.1"/>
    <property type="gene ID" value="TraesKARUn01G0081400"/>
</dbReference>
<dbReference type="Gramene" id="TraesKARUn01G0081730.1">
    <property type="protein sequence ID" value="cds.TraesKARUn01G0081730.1"/>
    <property type="gene ID" value="TraesKARUn01G0081730"/>
</dbReference>
<dbReference type="Gramene" id="TraesKARUn01G0081930.1">
    <property type="protein sequence ID" value="cds.TraesKARUn01G0081930.1"/>
    <property type="gene ID" value="TraesKARUn01G0081930"/>
</dbReference>
<dbReference type="Gramene" id="TraesKARUn01G0082220.1">
    <property type="protein sequence ID" value="cds.TraesKARUn01G0082220.1"/>
    <property type="gene ID" value="TraesKARUn01G0082220"/>
</dbReference>
<dbReference type="Gramene" id="TraesKARUn01G0082410.1">
    <property type="protein sequence ID" value="cds.TraesKARUn01G0082410.1"/>
    <property type="gene ID" value="TraesKARUn01G0082410"/>
</dbReference>
<dbReference type="Gramene" id="TraesKARUn01G0082620.1">
    <property type="protein sequence ID" value="cds.TraesKARUn01G0082620.1"/>
    <property type="gene ID" value="TraesKARUn01G0082620"/>
</dbReference>
<dbReference type="Gramene" id="TraesKARUn01G0082770.1">
    <property type="protein sequence ID" value="cds.TraesKARUn01G0082770.1"/>
    <property type="gene ID" value="TraesKARUn01G0082770"/>
</dbReference>
<dbReference type="Gramene" id="TraesKARUn01G0082950.1">
    <property type="protein sequence ID" value="cds.TraesKARUn01G0082950.1"/>
    <property type="gene ID" value="TraesKARUn01G0082950"/>
</dbReference>
<dbReference type="Gramene" id="TraesKARUn01G0083110.1">
    <property type="protein sequence ID" value="cds.TraesKARUn01G0083110.1"/>
    <property type="gene ID" value="TraesKARUn01G0083110"/>
</dbReference>
<dbReference type="Gramene" id="TraesKARUn01G0083750.1">
    <property type="protein sequence ID" value="cds.TraesKARUn01G0083750.1"/>
    <property type="gene ID" value="TraesKARUn01G0083750"/>
</dbReference>
<dbReference type="Gramene" id="TraesKARUn01G0083810.1">
    <property type="protein sequence ID" value="cds.TraesKARUn01G0083810.1"/>
    <property type="gene ID" value="TraesKARUn01G0083810"/>
</dbReference>
<dbReference type="Gramene" id="TraesKARUn01G0083940.1">
    <property type="protein sequence ID" value="cds.TraesKARUn01G0083940.1"/>
    <property type="gene ID" value="TraesKARUn01G0083940"/>
</dbReference>
<dbReference type="Gramene" id="TraesKARUn01G0084240.1">
    <property type="protein sequence ID" value="cds.TraesKARUn01G0084240.1"/>
    <property type="gene ID" value="TraesKARUn01G0084240"/>
</dbReference>
<dbReference type="Gramene" id="TraesKARUn01G0084340.1">
    <property type="protein sequence ID" value="cds.TraesKARUn01G0084340.1"/>
    <property type="gene ID" value="TraesKARUn01G0084340"/>
</dbReference>
<dbReference type="Gramene" id="TraesKARUn01G0084500.1">
    <property type="protein sequence ID" value="cds.TraesKARUn01G0084500.1"/>
    <property type="gene ID" value="TraesKARUn01G0084500"/>
</dbReference>
<dbReference type="Gramene" id="TraesKARUn01G0084830.1">
    <property type="protein sequence ID" value="cds.TraesKARUn01G0084830.1"/>
    <property type="gene ID" value="TraesKARUn01G0084830"/>
</dbReference>
<dbReference type="Gramene" id="TraesKARUn01G0084910.1">
    <property type="protein sequence ID" value="cds.TraesKARUn01G0084910.1"/>
    <property type="gene ID" value="TraesKARUn01G0084910"/>
</dbReference>
<dbReference type="Gramene" id="TraesKARUn01G0085290.1">
    <property type="protein sequence ID" value="cds.TraesKARUn01G0085290.1"/>
    <property type="gene ID" value="TraesKARUn01G0085290"/>
</dbReference>
<dbReference type="Gramene" id="TraesKARUn01G0086730.1">
    <property type="protein sequence ID" value="cds.TraesKARUn01G0086730.1"/>
    <property type="gene ID" value="TraesKARUn01G0086730"/>
</dbReference>
<dbReference type="Gramene" id="TraesKARUn01G0087170.1">
    <property type="protein sequence ID" value="cds.TraesKARUn01G0087170.1"/>
    <property type="gene ID" value="TraesKARUn01G0087170"/>
</dbReference>
<dbReference type="Gramene" id="TraesKARUn01G0087540.1">
    <property type="protein sequence ID" value="cds.TraesKARUn01G0087540.1"/>
    <property type="gene ID" value="TraesKARUn01G0087540"/>
</dbReference>
<dbReference type="Gramene" id="TraesKARUn01G0087810.1">
    <property type="protein sequence ID" value="cds.TraesKARUn01G0087810.1"/>
    <property type="gene ID" value="TraesKARUn01G0087810"/>
</dbReference>
<dbReference type="Gramene" id="TraesKARUn01G0087920.1">
    <property type="protein sequence ID" value="cds.TraesKARUn01G0087920.1"/>
    <property type="gene ID" value="TraesKARUn01G0087920"/>
</dbReference>
<dbReference type="Gramene" id="TraesKARUn01G0088680.1">
    <property type="protein sequence ID" value="cds.TraesKARUn01G0088680.1"/>
    <property type="gene ID" value="TraesKARUn01G0088680"/>
</dbReference>
<dbReference type="Gramene" id="TraesKARUn01G0088760.1">
    <property type="protein sequence ID" value="cds.TraesKARUn01G0088760.1"/>
    <property type="gene ID" value="TraesKARUn01G0088760"/>
</dbReference>
<dbReference type="Gramene" id="TraesKARUn01G0089340.1">
    <property type="protein sequence ID" value="cds.TraesKARUn01G0089340.1"/>
    <property type="gene ID" value="TraesKARUn01G0089340"/>
</dbReference>
<dbReference type="Gramene" id="TraesKARUn01G0089780.1">
    <property type="protein sequence ID" value="cds.TraesKARUn01G0089780.1"/>
    <property type="gene ID" value="TraesKARUn01G0089780"/>
</dbReference>
<dbReference type="Gramene" id="TraesKARUn01G0090150.1">
    <property type="protein sequence ID" value="cds.TraesKARUn01G0090150.1"/>
    <property type="gene ID" value="TraesKARUn01G0090150"/>
</dbReference>
<dbReference type="Gramene" id="TraesKARUn01G0090350.1">
    <property type="protein sequence ID" value="cds.TraesKARUn01G0090350.1"/>
    <property type="gene ID" value="TraesKARUn01G0090350"/>
</dbReference>
<dbReference type="Gramene" id="TraesKARUn01G0090690.1">
    <property type="protein sequence ID" value="cds.TraesKARUn01G0090690.1"/>
    <property type="gene ID" value="TraesKARUn01G0090690"/>
</dbReference>
<dbReference type="Gramene" id="TraesKARUn01G0090790.1">
    <property type="protein sequence ID" value="cds.TraesKARUn01G0090790.1"/>
    <property type="gene ID" value="TraesKARUn01G0090790"/>
</dbReference>
<dbReference type="Gramene" id="TraesKARUn01G0090820.1">
    <property type="protein sequence ID" value="cds.TraesKARUn01G0090820.1"/>
    <property type="gene ID" value="TraesKARUn01G0090820"/>
</dbReference>
<dbReference type="Gramene" id="TraesKARUn01G0090980.1">
    <property type="protein sequence ID" value="cds.TraesKARUn01G0090980.1"/>
    <property type="gene ID" value="TraesKARUn01G0090980"/>
</dbReference>
<dbReference type="Gramene" id="TraesKARUn01G0091080.1">
    <property type="protein sequence ID" value="cds.TraesKARUn01G0091080.1"/>
    <property type="gene ID" value="TraesKARUn01G0091080"/>
</dbReference>
<dbReference type="Gramene" id="TraesKARUn01G0091170.1">
    <property type="protein sequence ID" value="cds.TraesKARUn01G0091170.1"/>
    <property type="gene ID" value="TraesKARUn01G0091170"/>
</dbReference>
<dbReference type="Gramene" id="TraesKARUn01G0091480.1">
    <property type="protein sequence ID" value="cds.TraesKARUn01G0091480.1"/>
    <property type="gene ID" value="TraesKARUn01G0091480"/>
</dbReference>
<dbReference type="Gramene" id="TraesKARUn01G0091670.1">
    <property type="protein sequence ID" value="cds.TraesKARUn01G0091670.1"/>
    <property type="gene ID" value="TraesKARUn01G0091670"/>
</dbReference>
<dbReference type="Gramene" id="TraesKARUn01G0091840.1">
    <property type="protein sequence ID" value="cds.TraesKARUn01G0091840.1"/>
    <property type="gene ID" value="TraesKARUn01G0091840"/>
</dbReference>
<dbReference type="Gramene" id="TraesKARUn01G0092130.1">
    <property type="protein sequence ID" value="cds.TraesKARUn01G0092130.1"/>
    <property type="gene ID" value="TraesKARUn01G0092130"/>
</dbReference>
<dbReference type="Gramene" id="TraesKARUn01G0092690.1">
    <property type="protein sequence ID" value="cds.TraesKARUn01G0092690.1"/>
    <property type="gene ID" value="TraesKARUn01G0092690"/>
</dbReference>
<dbReference type="Gramene" id="TraesKARUn01G0093760.1">
    <property type="protein sequence ID" value="cds.TraesKARUn01G0093760.1"/>
    <property type="gene ID" value="TraesKARUn01G0093760"/>
</dbReference>
<dbReference type="Gramene" id="TraesKARUn01G0093960.1">
    <property type="protein sequence ID" value="cds.TraesKARUn01G0093960.1"/>
    <property type="gene ID" value="TraesKARUn01G0093960"/>
</dbReference>
<dbReference type="Gramene" id="TraesKARUn01G0094010.1">
    <property type="protein sequence ID" value="cds.TraesKARUn01G0094010.1"/>
    <property type="gene ID" value="TraesKARUn01G0094010"/>
</dbReference>
<dbReference type="Gramene" id="TraesKARUn01G0094340.1">
    <property type="protein sequence ID" value="cds.TraesKARUn01G0094340.1"/>
    <property type="gene ID" value="TraesKARUn01G0094340"/>
</dbReference>
<dbReference type="Gramene" id="TraesKARUn01G0094490.1">
    <property type="protein sequence ID" value="cds.TraesKARUn01G0094490.1"/>
    <property type="gene ID" value="TraesKARUn01G0094490"/>
</dbReference>
<dbReference type="Gramene" id="TraesKARUn01G0094710.1">
    <property type="protein sequence ID" value="cds.TraesKARUn01G0094710.1"/>
    <property type="gene ID" value="TraesKARUn01G0094710"/>
</dbReference>
<dbReference type="Gramene" id="TraesKARUn01G0094960.1">
    <property type="protein sequence ID" value="cds.TraesKARUn01G0094960.1"/>
    <property type="gene ID" value="TraesKARUn01G0094960"/>
</dbReference>
<dbReference type="Gramene" id="TraesKARUn01G0095510.1">
    <property type="protein sequence ID" value="cds.TraesKARUn01G0095510.1"/>
    <property type="gene ID" value="TraesKARUn01G0095510"/>
</dbReference>
<dbReference type="Gramene" id="TraesKARUn01G0096090.1">
    <property type="protein sequence ID" value="cds.TraesKARUn01G0096090.1"/>
    <property type="gene ID" value="TraesKARUn01G0096090"/>
</dbReference>
<dbReference type="Gramene" id="TraesKARUn01G0096370.1">
    <property type="protein sequence ID" value="cds.TraesKARUn01G0096370.1"/>
    <property type="gene ID" value="TraesKARUn01G0096370"/>
</dbReference>
<dbReference type="Gramene" id="TraesKARUn01G0096670.1">
    <property type="protein sequence ID" value="cds.TraesKARUn01G0096670.1"/>
    <property type="gene ID" value="TraesKARUn01G0096670"/>
</dbReference>
<dbReference type="Gramene" id="TraesKARUn01G0096960.1">
    <property type="protein sequence ID" value="cds.TraesKARUn01G0096960.1"/>
    <property type="gene ID" value="TraesKARUn01G0096960"/>
</dbReference>
<dbReference type="Gramene" id="TraesKARUn01G0097410.1">
    <property type="protein sequence ID" value="cds.TraesKARUn01G0097410.1"/>
    <property type="gene ID" value="TraesKARUn01G0097410"/>
</dbReference>
<dbReference type="Gramene" id="TraesKARUn01G0097500.1">
    <property type="protein sequence ID" value="cds.TraesKARUn01G0097500.1"/>
    <property type="gene ID" value="TraesKARUn01G0097500"/>
</dbReference>
<dbReference type="Gramene" id="TraesKARUn01G0097670.1">
    <property type="protein sequence ID" value="cds.TraesKARUn01G0097670.1"/>
    <property type="gene ID" value="TraesKARUn01G0097670"/>
</dbReference>
<dbReference type="Gramene" id="TraesKARUn01G0098430.1">
    <property type="protein sequence ID" value="cds.TraesKARUn01G0098430.1"/>
    <property type="gene ID" value="TraesKARUn01G0098430"/>
</dbReference>
<dbReference type="Gramene" id="TraesKARUn01G0098570.1">
    <property type="protein sequence ID" value="cds.TraesKARUn01G0098570.1"/>
    <property type="gene ID" value="TraesKARUn01G0098570"/>
</dbReference>
<dbReference type="Gramene" id="TraesKARUn01G0098620.1">
    <property type="protein sequence ID" value="cds.TraesKARUn01G0098620.1"/>
    <property type="gene ID" value="TraesKARUn01G0098620"/>
</dbReference>
<dbReference type="Gramene" id="TraesKARUn01G0099310.1">
    <property type="protein sequence ID" value="cds.TraesKARUn01G0099310.1"/>
    <property type="gene ID" value="TraesKARUn01G0099310"/>
</dbReference>
<dbReference type="Gramene" id="TraesKARUn01G0099480.1">
    <property type="protein sequence ID" value="cds.TraesKARUn01G0099480.1"/>
    <property type="gene ID" value="TraesKARUn01G0099480"/>
</dbReference>
<dbReference type="Gramene" id="TraesKARUn01G0100020.1">
    <property type="protein sequence ID" value="cds.TraesKARUn01G0100020.1"/>
    <property type="gene ID" value="TraesKARUn01G0100020"/>
</dbReference>
<dbReference type="Gramene" id="TraesKARUn01G0100190.1">
    <property type="protein sequence ID" value="cds.TraesKARUn01G0100190.1"/>
    <property type="gene ID" value="TraesKARUn01G0100190"/>
</dbReference>
<dbReference type="Gramene" id="TraesKARUn01G0100470.1">
    <property type="protein sequence ID" value="cds.TraesKARUn01G0100470.1"/>
    <property type="gene ID" value="TraesKARUn01G0100470"/>
</dbReference>
<dbReference type="Gramene" id="TraesKARUn01G0100570.1">
    <property type="protein sequence ID" value="cds.TraesKARUn01G0100570.1"/>
    <property type="gene ID" value="TraesKARUn01G0100570"/>
</dbReference>
<dbReference type="Gramene" id="TraesKARUn01G0100950.1">
    <property type="protein sequence ID" value="cds.TraesKARUn01G0100950.1"/>
    <property type="gene ID" value="TraesKARUn01G0100950"/>
</dbReference>
<dbReference type="Gramene" id="TraesKARUn01G0101210.1">
    <property type="protein sequence ID" value="cds.TraesKARUn01G0101210.1"/>
    <property type="gene ID" value="TraesKARUn01G0101210"/>
</dbReference>
<dbReference type="Gramene" id="TraesKARUn01G0101310.1">
    <property type="protein sequence ID" value="cds.TraesKARUn01G0101310.1"/>
    <property type="gene ID" value="TraesKARUn01G0101310"/>
</dbReference>
<dbReference type="Gramene" id="TraesKARUn01G0101610.1">
    <property type="protein sequence ID" value="cds.TraesKARUn01G0101610.1"/>
    <property type="gene ID" value="TraesKARUn01G0101610"/>
</dbReference>
<dbReference type="Gramene" id="TraesKARUn01G0102340.1">
    <property type="protein sequence ID" value="cds.TraesKARUn01G0102340.1"/>
    <property type="gene ID" value="TraesKARUn01G0102340"/>
</dbReference>
<dbReference type="Gramene" id="TraesKARUn01G0102710.1">
    <property type="protein sequence ID" value="cds.TraesKARUn01G0102710.1"/>
    <property type="gene ID" value="TraesKARUn01G0102710"/>
</dbReference>
<dbReference type="Gramene" id="TraesKARUn01G0102750.1">
    <property type="protein sequence ID" value="cds.TraesKARUn01G0102750.1"/>
    <property type="gene ID" value="TraesKARUn01G0102750"/>
</dbReference>
<dbReference type="Gramene" id="TraesKARUn01G0103570.1">
    <property type="protein sequence ID" value="cds.TraesKARUn01G0103570.1"/>
    <property type="gene ID" value="TraesKARUn01G0103570"/>
</dbReference>
<dbReference type="Gramene" id="TraesKARUn01G0103600.1">
    <property type="protein sequence ID" value="cds.TraesKARUn01G0103600.1"/>
    <property type="gene ID" value="TraesKARUn01G0103600"/>
</dbReference>
<dbReference type="Gramene" id="TraesKARUn01G0104150.1">
    <property type="protein sequence ID" value="cds.TraesKARUn01G0104150.1"/>
    <property type="gene ID" value="TraesKARUn01G0104150"/>
</dbReference>
<dbReference type="Gramene" id="TraesKARUn01G0104280.1">
    <property type="protein sequence ID" value="cds.TraesKARUn01G0104280.1"/>
    <property type="gene ID" value="TraesKARUn01G0104280"/>
</dbReference>
<dbReference type="Gramene" id="TraesKARUn01G0104400.1">
    <property type="protein sequence ID" value="cds.TraesKARUn01G0104400.1"/>
    <property type="gene ID" value="TraesKARUn01G0104400"/>
</dbReference>
<dbReference type="Gramene" id="TraesKARUn01G0104830.1">
    <property type="protein sequence ID" value="cds.TraesKARUn01G0104830.1"/>
    <property type="gene ID" value="TraesKARUn01G0104830"/>
</dbReference>
<dbReference type="Gramene" id="TraesKARUn01G0104910.1">
    <property type="protein sequence ID" value="cds.TraesKARUn01G0104910.1"/>
    <property type="gene ID" value="TraesKARUn01G0104910"/>
</dbReference>
<dbReference type="Gramene" id="TraesKARUn01G0105020.1">
    <property type="protein sequence ID" value="cds.TraesKARUn01G0105020.1"/>
    <property type="gene ID" value="TraesKARUn01G0105020"/>
</dbReference>
<dbReference type="Gramene" id="TraesKARUn01G0105140.1">
    <property type="protein sequence ID" value="cds.TraesKARUn01G0105140.1"/>
    <property type="gene ID" value="TraesKARUn01G0105140"/>
</dbReference>
<dbReference type="Gramene" id="TraesKARUn01G0105230.1">
    <property type="protein sequence ID" value="cds.TraesKARUn01G0105230.1"/>
    <property type="gene ID" value="TraesKARUn01G0105230"/>
</dbReference>
<dbReference type="Gramene" id="TraesKARUn01G0105910.1">
    <property type="protein sequence ID" value="cds.TraesKARUn01G0105910.1"/>
    <property type="gene ID" value="TraesKARUn01G0105910"/>
</dbReference>
<dbReference type="Gramene" id="TraesKARUn01G0106070.1">
    <property type="protein sequence ID" value="cds.TraesKARUn01G0106070.1"/>
    <property type="gene ID" value="TraesKARUn01G0106070"/>
</dbReference>
<dbReference type="Gramene" id="TraesKARUn01G0106330.1">
    <property type="protein sequence ID" value="cds.TraesKARUn01G0106330.1"/>
    <property type="gene ID" value="TraesKARUn01G0106330"/>
</dbReference>
<dbReference type="Gramene" id="TraesKARUn01G0106800.1">
    <property type="protein sequence ID" value="cds.TraesKARUn01G0106800.1"/>
    <property type="gene ID" value="TraesKARUn01G0106800"/>
</dbReference>
<dbReference type="Gramene" id="TraesKARUn01G0106860.1">
    <property type="protein sequence ID" value="cds.TraesKARUn01G0106860.1"/>
    <property type="gene ID" value="TraesKARUn01G0106860"/>
</dbReference>
<dbReference type="Gramene" id="TraesKARUn01G0107130.1">
    <property type="protein sequence ID" value="cds.TraesKARUn01G0107130.1"/>
    <property type="gene ID" value="TraesKARUn01G0107130"/>
</dbReference>
<dbReference type="Gramene" id="TraesKARUn01G0107250.1">
    <property type="protein sequence ID" value="cds.TraesKARUn01G0107250.1"/>
    <property type="gene ID" value="TraesKARUn01G0107250"/>
</dbReference>
<dbReference type="Gramene" id="TraesKARUn01G0107950.1">
    <property type="protein sequence ID" value="cds.TraesKARUn01G0107950.1"/>
    <property type="gene ID" value="TraesKARUn01G0107950"/>
</dbReference>
<dbReference type="Gramene" id="TraesKARUn01G0108580.1">
    <property type="protein sequence ID" value="cds.TraesKARUn01G0108580.1"/>
    <property type="gene ID" value="TraesKARUn01G0108580"/>
</dbReference>
<dbReference type="Gramene" id="TraesKARUn01G0108670.1">
    <property type="protein sequence ID" value="cds.TraesKARUn01G0108670.1"/>
    <property type="gene ID" value="TraesKARUn01G0108670"/>
</dbReference>
<dbReference type="Gramene" id="TraesKARUn01G0108960.1">
    <property type="protein sequence ID" value="cds.TraesKARUn01G0108960.1"/>
    <property type="gene ID" value="TraesKARUn01G0108960"/>
</dbReference>
<dbReference type="Gramene" id="TraesKARUn01G0109620.1">
    <property type="protein sequence ID" value="cds.TraesKARUn01G0109620.1"/>
    <property type="gene ID" value="TraesKARUn01G0109620"/>
</dbReference>
<dbReference type="Gramene" id="TraesKARUn01G0109750.1">
    <property type="protein sequence ID" value="cds.TraesKARUn01G0109750.1"/>
    <property type="gene ID" value="TraesKARUn01G0109750"/>
</dbReference>
<dbReference type="Gramene" id="TraesKARUn01G0110030.1">
    <property type="protein sequence ID" value="cds.TraesKARUn01G0110030.1"/>
    <property type="gene ID" value="TraesKARUn01G0110030"/>
</dbReference>
<dbReference type="Gramene" id="TraesKARUn01G0110410.1">
    <property type="protein sequence ID" value="cds.TraesKARUn01G0110410.1"/>
    <property type="gene ID" value="TraesKARUn01G0110410"/>
</dbReference>
<dbReference type="Gramene" id="TraesKARUn01G0110630.1">
    <property type="protein sequence ID" value="cds.TraesKARUn01G0110630.1"/>
    <property type="gene ID" value="TraesKARUn01G0110630"/>
</dbReference>
<dbReference type="Gramene" id="TraesKARUn01G0110790.1">
    <property type="protein sequence ID" value="cds.TraesKARUn01G0110790.1"/>
    <property type="gene ID" value="TraesKARUn01G0110790"/>
</dbReference>
<dbReference type="Gramene" id="TraesKARUn01G0111250.1">
    <property type="protein sequence ID" value="cds.TraesKARUn01G0111250.1"/>
    <property type="gene ID" value="TraesKARUn01G0111250"/>
</dbReference>
<dbReference type="Gramene" id="TraesKARUn01G0111270.1">
    <property type="protein sequence ID" value="cds.TraesKARUn01G0111270.1"/>
    <property type="gene ID" value="TraesKARUn01G0111270"/>
</dbReference>
<dbReference type="Gramene" id="TraesKARUn01G0111710.1">
    <property type="protein sequence ID" value="cds.TraesKARUn01G0111710.1"/>
    <property type="gene ID" value="TraesKARUn01G0111710"/>
</dbReference>
<dbReference type="Gramene" id="TraesKARUn01G0112120.1">
    <property type="protein sequence ID" value="cds.TraesKARUn01G0112120.1"/>
    <property type="gene ID" value="TraesKARUn01G0112120"/>
</dbReference>
<dbReference type="Gramene" id="TraesKARUn01G0112210.1">
    <property type="protein sequence ID" value="cds.TraesKARUn01G0112210.1"/>
    <property type="gene ID" value="TraesKARUn01G0112210"/>
</dbReference>
<dbReference type="Gramene" id="TraesKARUn01G0112280.1">
    <property type="protein sequence ID" value="cds.TraesKARUn01G0112280.1"/>
    <property type="gene ID" value="TraesKARUn01G0112280"/>
</dbReference>
<dbReference type="Gramene" id="TraesKARUn01G0112300.1">
    <property type="protein sequence ID" value="cds.TraesKARUn01G0112300.1"/>
    <property type="gene ID" value="TraesKARUn01G0112300"/>
</dbReference>
<dbReference type="Gramene" id="TraesKARUn01G0112560.1">
    <property type="protein sequence ID" value="cds.TraesKARUn01G0112560.1"/>
    <property type="gene ID" value="TraesKARUn01G0112560"/>
</dbReference>
<dbReference type="Gramene" id="TraesKARUn01G0112620.1">
    <property type="protein sequence ID" value="cds.TraesKARUn01G0112620.1"/>
    <property type="gene ID" value="TraesKARUn01G0112620"/>
</dbReference>
<dbReference type="Gramene" id="TraesKARUn01G0112680.1">
    <property type="protein sequence ID" value="cds.TraesKARUn01G0112680.1"/>
    <property type="gene ID" value="TraesKARUn01G0112680"/>
</dbReference>
<dbReference type="Gramene" id="TraesKARUn01G0112820.1">
    <property type="protein sequence ID" value="cds.TraesKARUn01G0112820.1"/>
    <property type="gene ID" value="TraesKARUn01G0112820"/>
</dbReference>
<dbReference type="Gramene" id="TraesKARUn01G0113600.1">
    <property type="protein sequence ID" value="cds.TraesKARUn01G0113600.1"/>
    <property type="gene ID" value="TraesKARUn01G0113600"/>
</dbReference>
<dbReference type="Gramene" id="TraesKARUn01G0114210.1">
    <property type="protein sequence ID" value="cds.TraesKARUn01G0114210.1"/>
    <property type="gene ID" value="TraesKARUn01G0114210"/>
</dbReference>
<dbReference type="Gramene" id="TraesKARUn01G0114340.1">
    <property type="protein sequence ID" value="cds.TraesKARUn01G0114340.1"/>
    <property type="gene ID" value="TraesKARUn01G0114340"/>
</dbReference>
<dbReference type="Gramene" id="TraesKARUn01G0114770.1">
    <property type="protein sequence ID" value="cds.TraesKARUn01G0114770.1"/>
    <property type="gene ID" value="TraesKARUn01G0114770"/>
</dbReference>
<dbReference type="Gramene" id="TraesKARUn01G0115340.1">
    <property type="protein sequence ID" value="cds.TraesKARUn01G0115340.1"/>
    <property type="gene ID" value="TraesKARUn01G0115340"/>
</dbReference>
<dbReference type="Gramene" id="TraesKARUn01G0116270.1">
    <property type="protein sequence ID" value="cds.TraesKARUn01G0116270.1"/>
    <property type="gene ID" value="TraesKARUn01G0116270"/>
</dbReference>
<dbReference type="Gramene" id="TraesKARUn01G0116420.1">
    <property type="protein sequence ID" value="cds.TraesKARUn01G0116420.1"/>
    <property type="gene ID" value="TraesKARUn01G0116420"/>
</dbReference>
<dbReference type="Gramene" id="TraesKARUn01G0116550.1">
    <property type="protein sequence ID" value="cds.TraesKARUn01G0116550.1"/>
    <property type="gene ID" value="TraesKARUn01G0116550"/>
</dbReference>
<dbReference type="Gramene" id="TraesKARUn01G0116700.1">
    <property type="protein sequence ID" value="cds.TraesKARUn01G0116700.1"/>
    <property type="gene ID" value="TraesKARUn01G0116700"/>
</dbReference>
<dbReference type="Gramene" id="TraesKARUn01G0116940.1">
    <property type="protein sequence ID" value="cds.TraesKARUn01G0116940.1"/>
    <property type="gene ID" value="TraesKARUn01G0116940"/>
</dbReference>
<dbReference type="Gramene" id="TraesKARUn01G0117010.1">
    <property type="protein sequence ID" value="cds.TraesKARUn01G0117010.1"/>
    <property type="gene ID" value="TraesKARUn01G0117010"/>
</dbReference>
<dbReference type="Gramene" id="TraesKARUn01G0117260.1">
    <property type="protein sequence ID" value="cds.TraesKARUn01G0117260.1"/>
    <property type="gene ID" value="TraesKARUn01G0117260"/>
</dbReference>
<dbReference type="Gramene" id="TraesKARUn01G0117410.1">
    <property type="protein sequence ID" value="cds.TraesKARUn01G0117410.1"/>
    <property type="gene ID" value="TraesKARUn01G0117410"/>
</dbReference>
<dbReference type="Gramene" id="TraesKARUn01G0117550.1">
    <property type="protein sequence ID" value="cds.TraesKARUn01G0117550.1"/>
    <property type="gene ID" value="TraesKARUn01G0117550"/>
</dbReference>
<dbReference type="Gramene" id="TraesKARUn01G0117620.1">
    <property type="protein sequence ID" value="cds.TraesKARUn01G0117620.1"/>
    <property type="gene ID" value="TraesKARUn01G0117620"/>
</dbReference>
<dbReference type="Gramene" id="TraesKARUn01G0117690.1">
    <property type="protein sequence ID" value="cds.TraesKARUn01G0117690.1"/>
    <property type="gene ID" value="TraesKARUn01G0117690"/>
</dbReference>
<dbReference type="Gramene" id="TraesKARUn01G0117920.1">
    <property type="protein sequence ID" value="cds.TraesKARUn01G0117920.1"/>
    <property type="gene ID" value="TraesKARUn01G0117920"/>
</dbReference>
<dbReference type="Gramene" id="TraesKARUn01G0117980.1">
    <property type="protein sequence ID" value="cds.TraesKARUn01G0117980.1"/>
    <property type="gene ID" value="TraesKARUn01G0117980"/>
</dbReference>
<dbReference type="Gramene" id="TraesKARUn01G0118400.1">
    <property type="protein sequence ID" value="cds.TraesKARUn01G0118400.1"/>
    <property type="gene ID" value="TraesKARUn01G0118400"/>
</dbReference>
<dbReference type="Gramene" id="TraesKARUn01G0118880.1">
    <property type="protein sequence ID" value="cds.TraesKARUn01G0118880.1"/>
    <property type="gene ID" value="TraesKARUn01G0118880"/>
</dbReference>
<dbReference type="Gramene" id="TraesKARUn01G0118940.1">
    <property type="protein sequence ID" value="cds.TraesKARUn01G0118940.1"/>
    <property type="gene ID" value="TraesKARUn01G0118940"/>
</dbReference>
<dbReference type="Gramene" id="TraesKARUn01G0119040.1">
    <property type="protein sequence ID" value="cds.TraesKARUn01G0119040.1"/>
    <property type="gene ID" value="TraesKARUn01G0119040"/>
</dbReference>
<dbReference type="Gramene" id="TraesKARUn01G0119420.1">
    <property type="protein sequence ID" value="cds.TraesKARUn01G0119420.1"/>
    <property type="gene ID" value="TraesKARUn01G0119420"/>
</dbReference>
<dbReference type="Gramene" id="TraesKARUn01G0119610.1">
    <property type="protein sequence ID" value="cds.TraesKARUn01G0119610.1"/>
    <property type="gene ID" value="TraesKARUn01G0119610"/>
</dbReference>
<dbReference type="Gramene" id="TraesKARUn01G0119880.1">
    <property type="protein sequence ID" value="cds.TraesKARUn01G0119880.1"/>
    <property type="gene ID" value="TraesKARUn01G0119880"/>
</dbReference>
<dbReference type="Gramene" id="TraesKARUn01G0120250.1">
    <property type="protein sequence ID" value="cds.TraesKARUn01G0120250.1"/>
    <property type="gene ID" value="TraesKARUn01G0120250"/>
</dbReference>
<dbReference type="Gramene" id="TraesKARUn01G0120350.1">
    <property type="protein sequence ID" value="cds.TraesKARUn01G0120350.1"/>
    <property type="gene ID" value="TraesKARUn01G0120350"/>
</dbReference>
<dbReference type="Gramene" id="TraesKARUn01G0120670.1">
    <property type="protein sequence ID" value="cds.TraesKARUn01G0120670.1"/>
    <property type="gene ID" value="TraesKARUn01G0120670"/>
</dbReference>
<dbReference type="Gramene" id="TraesKARUn01G0120880.1">
    <property type="protein sequence ID" value="cds.TraesKARUn01G0120880.1"/>
    <property type="gene ID" value="TraesKARUn01G0120880"/>
</dbReference>
<dbReference type="Gramene" id="TraesKARUn01G0121090.1">
    <property type="protein sequence ID" value="cds.TraesKARUn01G0121090.1"/>
    <property type="gene ID" value="TraesKARUn01G0121090"/>
</dbReference>
<dbReference type="Gramene" id="TraesKARUn01G0121180.1">
    <property type="protein sequence ID" value="cds.TraesKARUn01G0121180.1"/>
    <property type="gene ID" value="TraesKARUn01G0121180"/>
</dbReference>
<dbReference type="Gramene" id="TraesKARUn01G0121250.1">
    <property type="protein sequence ID" value="cds.TraesKARUn01G0121250.1"/>
    <property type="gene ID" value="TraesKARUn01G0121250"/>
</dbReference>
<dbReference type="Gramene" id="TraesKARUn01G0121410.1">
    <property type="protein sequence ID" value="cds.TraesKARUn01G0121410.1"/>
    <property type="gene ID" value="TraesKARUn01G0121410"/>
</dbReference>
<dbReference type="Gramene" id="TraesKARUn01G0121720.1">
    <property type="protein sequence ID" value="cds.TraesKARUn01G0121720.1"/>
    <property type="gene ID" value="TraesKARUn01G0121720"/>
</dbReference>
<dbReference type="Gramene" id="TraesKARUn01G0121840.1">
    <property type="protein sequence ID" value="cds.TraesKARUn01G0121840.1"/>
    <property type="gene ID" value="TraesKARUn01G0121840"/>
</dbReference>
<dbReference type="Gramene" id="TraesKARUn01G0122260.1">
    <property type="protein sequence ID" value="cds.TraesKARUn01G0122260.1"/>
    <property type="gene ID" value="TraesKARUn01G0122260"/>
</dbReference>
<dbReference type="Gramene" id="TraesKARUn01G0122470.1">
    <property type="protein sequence ID" value="cds.TraesKARUn01G0122470.1"/>
    <property type="gene ID" value="TraesKARUn01G0122470"/>
</dbReference>
<dbReference type="Gramene" id="TraesKARUn01G0122620.1">
    <property type="protein sequence ID" value="cds.TraesKARUn01G0122620.1"/>
    <property type="gene ID" value="TraesKARUn01G0122620"/>
</dbReference>
<dbReference type="Gramene" id="TraesKARUn01G0122740.1">
    <property type="protein sequence ID" value="cds.TraesKARUn01G0122740.1"/>
    <property type="gene ID" value="TraesKARUn01G0122740"/>
</dbReference>
<dbReference type="Gramene" id="TraesKARUn01G0122830.1">
    <property type="protein sequence ID" value="cds.TraesKARUn01G0122830.1"/>
    <property type="gene ID" value="TraesKARUn01G0122830"/>
</dbReference>
<dbReference type="Gramene" id="TraesKARUn01G0123510.1">
    <property type="protein sequence ID" value="cds.TraesKARUn01G0123510.1"/>
    <property type="gene ID" value="TraesKARUn01G0123510"/>
</dbReference>
<dbReference type="Gramene" id="TraesKARUn01G0123720.1">
    <property type="protein sequence ID" value="cds.TraesKARUn01G0123720.1"/>
    <property type="gene ID" value="TraesKARUn01G0123720"/>
</dbReference>
<dbReference type="Gramene" id="TraesKARUn01G0124200.1">
    <property type="protein sequence ID" value="cds.TraesKARUn01G0124200.1"/>
    <property type="gene ID" value="TraesKARUn01G0124200"/>
</dbReference>
<dbReference type="Gramene" id="TraesKARUn01G0124780.1">
    <property type="protein sequence ID" value="cds.TraesKARUn01G0124780.1"/>
    <property type="gene ID" value="TraesKARUn01G0124780"/>
</dbReference>
<dbReference type="Gramene" id="TraesKARUn01G0125140.1">
    <property type="protein sequence ID" value="cds.TraesKARUn01G0125140.1"/>
    <property type="gene ID" value="TraesKARUn01G0125140"/>
</dbReference>
<dbReference type="Gramene" id="TraesKARUn01G0125250.1">
    <property type="protein sequence ID" value="cds.TraesKARUn01G0125250.1"/>
    <property type="gene ID" value="TraesKARUn01G0125250"/>
</dbReference>
<dbReference type="Gramene" id="TraesKARUn01G0125330.1">
    <property type="protein sequence ID" value="cds.TraesKARUn01G0125330.1"/>
    <property type="gene ID" value="TraesKARUn01G0125330"/>
</dbReference>
<dbReference type="Gramene" id="TraesKARUn01G0125750.1">
    <property type="protein sequence ID" value="cds.TraesKARUn01G0125750.1"/>
    <property type="gene ID" value="TraesKARUn01G0125750"/>
</dbReference>
<dbReference type="Gramene" id="TraesKARUn01G0126320.1">
    <property type="protein sequence ID" value="cds.TraesKARUn01G0126320.1"/>
    <property type="gene ID" value="TraesKARUn01G0126320"/>
</dbReference>
<dbReference type="Gramene" id="TraesKARUn01G0126400.1">
    <property type="protein sequence ID" value="cds.TraesKARUn01G0126400.1"/>
    <property type="gene ID" value="TraesKARUn01G0126400"/>
</dbReference>
<dbReference type="Gramene" id="TraesKARUn01G0126540.1">
    <property type="protein sequence ID" value="cds.TraesKARUn01G0126540.1"/>
    <property type="gene ID" value="TraesKARUn01G0126540"/>
</dbReference>
<dbReference type="Gramene" id="TraesKARUn01G0126600.1">
    <property type="protein sequence ID" value="cds.TraesKARUn01G0126600.1"/>
    <property type="gene ID" value="TraesKARUn01G0126600"/>
</dbReference>
<dbReference type="Gramene" id="TraesKARUn01G0126830.1">
    <property type="protein sequence ID" value="cds.TraesKARUn01G0126830.1"/>
    <property type="gene ID" value="TraesKARUn01G0126830"/>
</dbReference>
<dbReference type="Gramene" id="TraesKARUn01G0127030.1">
    <property type="protein sequence ID" value="cds.TraesKARUn01G0127030.1"/>
    <property type="gene ID" value="TraesKARUn01G0127030"/>
</dbReference>
<dbReference type="Gramene" id="TraesKARUn01G0127120.1">
    <property type="protein sequence ID" value="cds.TraesKARUn01G0127120.1"/>
    <property type="gene ID" value="TraesKARUn01G0127120"/>
</dbReference>
<dbReference type="Gramene" id="TraesKARUn01G0127310.1">
    <property type="protein sequence ID" value="cds.TraesKARUn01G0127310.1"/>
    <property type="gene ID" value="TraesKARUn01G0127310"/>
</dbReference>
<dbReference type="Gramene" id="TraesKARUn01G0127870.1">
    <property type="protein sequence ID" value="cds.TraesKARUn01G0127870.1"/>
    <property type="gene ID" value="TraesKARUn01G0127870"/>
</dbReference>
<dbReference type="Gramene" id="TraesKARUn01G0128400.1">
    <property type="protein sequence ID" value="cds.TraesKARUn01G0128400.1"/>
    <property type="gene ID" value="TraesKARUn01G0128400"/>
</dbReference>
<dbReference type="Gramene" id="TraesKARUn01G0128440.1">
    <property type="protein sequence ID" value="cds.TraesKARUn01G0128440.1"/>
    <property type="gene ID" value="TraesKARUn01G0128440"/>
</dbReference>
<dbReference type="Gramene" id="TraesKARUn01G0128720.1">
    <property type="protein sequence ID" value="cds.TraesKARUn01G0128720.1"/>
    <property type="gene ID" value="TraesKARUn01G0128720"/>
</dbReference>
<dbReference type="Gramene" id="TraesKARUn01G0128960.1">
    <property type="protein sequence ID" value="cds.TraesKARUn01G0128960.1"/>
    <property type="gene ID" value="TraesKARUn01G0128960"/>
</dbReference>
<dbReference type="Gramene" id="TraesKARUn01G0129140.1">
    <property type="protein sequence ID" value="cds.TraesKARUn01G0129140.1"/>
    <property type="gene ID" value="TraesKARUn01G0129140"/>
</dbReference>
<dbReference type="Gramene" id="TraesKARUn01G0129260.1">
    <property type="protein sequence ID" value="cds.TraesKARUn01G0129260.1"/>
    <property type="gene ID" value="TraesKARUn01G0129260"/>
</dbReference>
<dbReference type="Gramene" id="TraesKARUn01G0129610.1">
    <property type="protein sequence ID" value="cds.TraesKARUn01G0129610.1"/>
    <property type="gene ID" value="TraesKARUn01G0129610"/>
</dbReference>
<dbReference type="Gramene" id="TraesKARUn01G0129980.1">
    <property type="protein sequence ID" value="cds.TraesKARUn01G0129980.1"/>
    <property type="gene ID" value="TraesKARUn01G0129980"/>
</dbReference>
<dbReference type="Gramene" id="TraesKARUn01G0130180.1">
    <property type="protein sequence ID" value="cds.TraesKARUn01G0130180.1"/>
    <property type="gene ID" value="TraesKARUn01G0130180"/>
</dbReference>
<dbReference type="Gramene" id="TraesKARUn01G0130910.1">
    <property type="protein sequence ID" value="cds.TraesKARUn01G0130910.1"/>
    <property type="gene ID" value="TraesKARUn01G0130910"/>
</dbReference>
<dbReference type="Gramene" id="TraesKARUn01G0130950.1">
    <property type="protein sequence ID" value="cds.TraesKARUn01G0130950.1"/>
    <property type="gene ID" value="TraesKARUn01G0130950"/>
</dbReference>
<dbReference type="Gramene" id="TraesKARUn01G0131060.1">
    <property type="protein sequence ID" value="cds.TraesKARUn01G0131060.1"/>
    <property type="gene ID" value="TraesKARUn01G0131060"/>
</dbReference>
<dbReference type="Gramene" id="TraesKARUn01G0131180.1">
    <property type="protein sequence ID" value="cds.TraesKARUn01G0131180.1"/>
    <property type="gene ID" value="TraesKARUn01G0131180"/>
</dbReference>
<dbReference type="Gramene" id="TraesKARUn01G0131210.1">
    <property type="protein sequence ID" value="cds.TraesKARUn01G0131210.1"/>
    <property type="gene ID" value="TraesKARUn01G0131210"/>
</dbReference>
<dbReference type="Gramene" id="TraesKARUn01G0131930.1">
    <property type="protein sequence ID" value="cds.TraesKARUn01G0131930.1"/>
    <property type="gene ID" value="TraesKARUn01G0131930"/>
</dbReference>
<dbReference type="Gramene" id="TraesKARUn01G0132350.1">
    <property type="protein sequence ID" value="cds.TraesKARUn01G0132350.1"/>
    <property type="gene ID" value="TraesKARUn01G0132350"/>
</dbReference>
<dbReference type="Gramene" id="TraesKARUn01G0132570.1">
    <property type="protein sequence ID" value="cds.TraesKARUn01G0132570.1"/>
    <property type="gene ID" value="TraesKARUn01G0132570"/>
</dbReference>
<dbReference type="Gramene" id="TraesKARUn01G0133020.1">
    <property type="protein sequence ID" value="cds.TraesKARUn01G0133020.1"/>
    <property type="gene ID" value="TraesKARUn01G0133020"/>
</dbReference>
<dbReference type="Gramene" id="TraesKARUn01G0133180.1">
    <property type="protein sequence ID" value="cds.TraesKARUn01G0133180.1"/>
    <property type="gene ID" value="TraesKARUn01G0133180"/>
</dbReference>
<dbReference type="Gramene" id="TraesKARUn01G0133190.1">
    <property type="protein sequence ID" value="cds.TraesKARUn01G0133190.1"/>
    <property type="gene ID" value="TraesKARUn01G0133190"/>
</dbReference>
<dbReference type="Gramene" id="TraesKARUn01G0133370.1">
    <property type="protein sequence ID" value="cds.TraesKARUn01G0133370.1"/>
    <property type="gene ID" value="TraesKARUn01G0133370"/>
</dbReference>
<dbReference type="Gramene" id="TraesKARUn01G0133490.1">
    <property type="protein sequence ID" value="cds.TraesKARUn01G0133490.1"/>
    <property type="gene ID" value="TraesKARUn01G0133490"/>
</dbReference>
<dbReference type="Gramene" id="TraesKARUn01G0134830.1">
    <property type="protein sequence ID" value="cds.TraesKARUn01G0134830.1"/>
    <property type="gene ID" value="TraesKARUn01G0134830"/>
</dbReference>
<dbReference type="Gramene" id="TraesKARUn01G0134850.1">
    <property type="protein sequence ID" value="cds.TraesKARUn01G0134850.1"/>
    <property type="gene ID" value="TraesKARUn01G0134850"/>
</dbReference>
<dbReference type="Gramene" id="TraesKARUn01G0135330.1">
    <property type="protein sequence ID" value="cds.TraesKARUn01G0135330.1"/>
    <property type="gene ID" value="TraesKARUn01G0135330"/>
</dbReference>
<dbReference type="Gramene" id="TraesKARUn01G0135420.1">
    <property type="protein sequence ID" value="cds.TraesKARUn01G0135420.1"/>
    <property type="gene ID" value="TraesKARUn01G0135420"/>
</dbReference>
<dbReference type="Gramene" id="TraesKARUn01G0135480.1">
    <property type="protein sequence ID" value="cds.TraesKARUn01G0135480.1"/>
    <property type="gene ID" value="TraesKARUn01G0135480"/>
</dbReference>
<dbReference type="Gramene" id="TraesKARUn01G0135650.1">
    <property type="protein sequence ID" value="cds.TraesKARUn01G0135650.1"/>
    <property type="gene ID" value="TraesKARUn01G0135650"/>
</dbReference>
<dbReference type="Gramene" id="TraesKARUn01G0135890.1">
    <property type="protein sequence ID" value="cds.TraesKARUn01G0135890.1"/>
    <property type="gene ID" value="TraesKARUn01G0135890"/>
</dbReference>
<dbReference type="Gramene" id="TraesKARUn01G0135970.1">
    <property type="protein sequence ID" value="cds.TraesKARUn01G0135970.1"/>
    <property type="gene ID" value="TraesKARUn01G0135970"/>
</dbReference>
<dbReference type="Gramene" id="TraesKARUn01G0137280.1">
    <property type="protein sequence ID" value="cds.TraesKARUn01G0137280.1"/>
    <property type="gene ID" value="TraesKARUn01G0137280"/>
</dbReference>
<dbReference type="Gramene" id="TraesKARUn01G0137390.1">
    <property type="protein sequence ID" value="cds.TraesKARUn01G0137390.1"/>
    <property type="gene ID" value="TraesKARUn01G0137390"/>
</dbReference>
<dbReference type="Gramene" id="TraesKARUn01G0138000.1">
    <property type="protein sequence ID" value="cds.TraesKARUn01G0138000.1"/>
    <property type="gene ID" value="TraesKARUn01G0138000"/>
</dbReference>
<dbReference type="Gramene" id="TraesKARUn01G0138750.1">
    <property type="protein sequence ID" value="cds.TraesKARUn01G0138750.1"/>
    <property type="gene ID" value="TraesKARUn01G0138750"/>
</dbReference>
<dbReference type="Gramene" id="TraesKARUn01G0138820.1">
    <property type="protein sequence ID" value="cds.TraesKARUn01G0138820.1"/>
    <property type="gene ID" value="TraesKARUn01G0138820"/>
</dbReference>
<dbReference type="Gramene" id="TraesKARUn01G0138900.1">
    <property type="protein sequence ID" value="cds.TraesKARUn01G0138900.1"/>
    <property type="gene ID" value="TraesKARUn01G0138900"/>
</dbReference>
<dbReference type="Gramene" id="TraesKARUn01G0139270.1">
    <property type="protein sequence ID" value="cds.TraesKARUn01G0139270.1"/>
    <property type="gene ID" value="TraesKARUn01G0139270"/>
</dbReference>
<dbReference type="Gramene" id="TraesKARUn01G0139810.1">
    <property type="protein sequence ID" value="cds.TraesKARUn01G0139810.1"/>
    <property type="gene ID" value="TraesKARUn01G0139810"/>
</dbReference>
<dbReference type="Gramene" id="TraesKARUn01G0139970.1">
    <property type="protein sequence ID" value="cds.TraesKARUn01G0139970.1"/>
    <property type="gene ID" value="TraesKARUn01G0139970"/>
</dbReference>
<dbReference type="Gramene" id="TraesKARUn01G0140030.1">
    <property type="protein sequence ID" value="cds.TraesKARUn01G0140030.1"/>
    <property type="gene ID" value="TraesKARUn01G0140030"/>
</dbReference>
<dbReference type="Gramene" id="TraesKARUn01G0140180.1">
    <property type="protein sequence ID" value="cds.TraesKARUn01G0140180.1"/>
    <property type="gene ID" value="TraesKARUn01G0140180"/>
</dbReference>
<dbReference type="Gramene" id="TraesKARUn01G0140460.1">
    <property type="protein sequence ID" value="cds.TraesKARUn01G0140460.1"/>
    <property type="gene ID" value="TraesKARUn01G0140460"/>
</dbReference>
<dbReference type="Gramene" id="TraesKARUn01G0140640.1">
    <property type="protein sequence ID" value="cds.TraesKARUn01G0140640.1"/>
    <property type="gene ID" value="TraesKARUn01G0140640"/>
</dbReference>
<dbReference type="Gramene" id="TraesKARUn01G0140760.1">
    <property type="protein sequence ID" value="cds.TraesKARUn01G0140760.1"/>
    <property type="gene ID" value="TraesKARUn01G0140760"/>
</dbReference>
<dbReference type="Gramene" id="TraesKARUn01G0141860.1">
    <property type="protein sequence ID" value="cds.TraesKARUn01G0141860.1"/>
    <property type="gene ID" value="TraesKARUn01G0141860"/>
</dbReference>
<dbReference type="Gramene" id="TraesKARUn01G0142310.1">
    <property type="protein sequence ID" value="cds.TraesKARUn01G0142310.1"/>
    <property type="gene ID" value="TraesKARUn01G0142310"/>
</dbReference>
<dbReference type="Gramene" id="TraesKARUn01G0142690.1">
    <property type="protein sequence ID" value="cds.TraesKARUn01G0142690.1"/>
    <property type="gene ID" value="TraesKARUn01G0142690"/>
</dbReference>
<dbReference type="Gramene" id="TraesKARUn01G0142810.1">
    <property type="protein sequence ID" value="cds.TraesKARUn01G0142810.1"/>
    <property type="gene ID" value="TraesKARUn01G0142810"/>
</dbReference>
<dbReference type="Gramene" id="TraesKARUn01G0143110.1">
    <property type="protein sequence ID" value="cds.TraesKARUn01G0143110.1"/>
    <property type="gene ID" value="TraesKARUn01G0143110"/>
</dbReference>
<dbReference type="Gramene" id="TraesKARUn01G0143540.1">
    <property type="protein sequence ID" value="cds.TraesKARUn01G0143540.1"/>
    <property type="gene ID" value="TraesKARUn01G0143540"/>
</dbReference>
<dbReference type="Gramene" id="TraesKARUn01G0144100.1">
    <property type="protein sequence ID" value="cds.TraesKARUn01G0144100.1"/>
    <property type="gene ID" value="TraesKARUn01G0144100"/>
</dbReference>
<dbReference type="Gramene" id="TraesKARUn01G0144690.1">
    <property type="protein sequence ID" value="cds.TraesKARUn01G0144690.1"/>
    <property type="gene ID" value="TraesKARUn01G0144690"/>
</dbReference>
<dbReference type="Gramene" id="TraesKARUn01G0144950.1">
    <property type="protein sequence ID" value="cds.TraesKARUn01G0144950.1"/>
    <property type="gene ID" value="TraesKARUn01G0144950"/>
</dbReference>
<dbReference type="Gramene" id="TraesKARUn01G0145050.1">
    <property type="protein sequence ID" value="cds.TraesKARUn01G0145050.1"/>
    <property type="gene ID" value="TraesKARUn01G0145050"/>
</dbReference>
<dbReference type="Gramene" id="TraesKARUn01G0145330.1">
    <property type="protein sequence ID" value="cds.TraesKARUn01G0145330.1"/>
    <property type="gene ID" value="TraesKARUn01G0145330"/>
</dbReference>
<dbReference type="Gramene" id="TraesKARUn01G0145380.1">
    <property type="protein sequence ID" value="cds.TraesKARUn01G0145380.1"/>
    <property type="gene ID" value="TraesKARUn01G0145380"/>
</dbReference>
<dbReference type="Gramene" id="TraesKARUn01G0145950.1">
    <property type="protein sequence ID" value="cds.TraesKARUn01G0145950.1"/>
    <property type="gene ID" value="TraesKARUn01G0145950"/>
</dbReference>
<dbReference type="Gramene" id="TraesKARUn01G0146020.1">
    <property type="protein sequence ID" value="cds.TraesKARUn01G0146020.1"/>
    <property type="gene ID" value="TraesKARUn01G0146020"/>
</dbReference>
<dbReference type="Gramene" id="TraesKARUn01G0146280.1">
    <property type="protein sequence ID" value="cds.TraesKARUn01G0146280.1"/>
    <property type="gene ID" value="TraesKARUn01G0146280"/>
</dbReference>
<dbReference type="Gramene" id="TraesKARUn01G0146310.1">
    <property type="protein sequence ID" value="cds.TraesKARUn01G0146310.1"/>
    <property type="gene ID" value="TraesKARUn01G0146310"/>
</dbReference>
<dbReference type="Gramene" id="TraesKARUn01G0146970.1">
    <property type="protein sequence ID" value="cds.TraesKARUn01G0146970.1"/>
    <property type="gene ID" value="TraesKARUn01G0146970"/>
</dbReference>
<dbReference type="Gramene" id="TraesKARUn01G0147020.1">
    <property type="protein sequence ID" value="cds.TraesKARUn01G0147020.1"/>
    <property type="gene ID" value="TraesKARUn01G0147020"/>
</dbReference>
<dbReference type="Gramene" id="TraesKARUn01G0147080.1">
    <property type="protein sequence ID" value="cds.TraesKARUn01G0147080.1"/>
    <property type="gene ID" value="TraesKARUn01G0147080"/>
</dbReference>
<dbReference type="Gramene" id="TraesKARUn01G0147540.1">
    <property type="protein sequence ID" value="cds.TraesKARUn01G0147540.1"/>
    <property type="gene ID" value="TraesKARUn01G0147540"/>
</dbReference>
<dbReference type="Gramene" id="TraesKARUn01G0148050.1">
    <property type="protein sequence ID" value="cds.TraesKARUn01G0148050.1"/>
    <property type="gene ID" value="TraesKARUn01G0148050"/>
</dbReference>
<dbReference type="Gramene" id="TraesKARUn01G0148230.1">
    <property type="protein sequence ID" value="cds.TraesKARUn01G0148230.1"/>
    <property type="gene ID" value="TraesKARUn01G0148230"/>
</dbReference>
<dbReference type="Gramene" id="TraesKARUn01G0148350.1">
    <property type="protein sequence ID" value="cds.TraesKARUn01G0148350.1"/>
    <property type="gene ID" value="TraesKARUn01G0148350"/>
</dbReference>
<dbReference type="Gramene" id="TraesKARUn01G0148610.1">
    <property type="protein sequence ID" value="cds.TraesKARUn01G0148610.1"/>
    <property type="gene ID" value="TraesKARUn01G0148610"/>
</dbReference>
<dbReference type="Gramene" id="TraesKARUn01G0148730.1">
    <property type="protein sequence ID" value="cds.TraesKARUn01G0148730.1"/>
    <property type="gene ID" value="TraesKARUn01G0148730"/>
</dbReference>
<dbReference type="Gramene" id="TraesKARUn01G0148760.1">
    <property type="protein sequence ID" value="cds.TraesKARUn01G0148760.1"/>
    <property type="gene ID" value="TraesKARUn01G0148760"/>
</dbReference>
<dbReference type="Gramene" id="TraesKARUn01G0148860.1">
    <property type="protein sequence ID" value="cds.TraesKARUn01G0148860.1"/>
    <property type="gene ID" value="TraesKARUn01G0148860"/>
</dbReference>
<dbReference type="Gramene" id="TraesKARUn01G0148910.1">
    <property type="protein sequence ID" value="cds.TraesKARUn01G0148910.1"/>
    <property type="gene ID" value="TraesKARUn01G0148910"/>
</dbReference>
<dbReference type="Gramene" id="TraesKARUn01G0148960.1">
    <property type="protein sequence ID" value="cds.TraesKARUn01G0148960.1"/>
    <property type="gene ID" value="TraesKARUn01G0148960"/>
</dbReference>
<dbReference type="Gramene" id="TraesKARUn01G0149250.1">
    <property type="protein sequence ID" value="cds.TraesKARUn01G0149250.1"/>
    <property type="gene ID" value="TraesKARUn01G0149250"/>
</dbReference>
<dbReference type="Gramene" id="TraesKARUn01G0149500.1">
    <property type="protein sequence ID" value="cds.TraesKARUn01G0149500.1"/>
    <property type="gene ID" value="TraesKARUn01G0149500"/>
</dbReference>
<dbReference type="Gramene" id="TraesKARUn01G0149560.1">
    <property type="protein sequence ID" value="cds.TraesKARUn01G0149560.1"/>
    <property type="gene ID" value="TraesKARUn01G0149560"/>
</dbReference>
<dbReference type="Gramene" id="TraesKARUn01G0149650.1">
    <property type="protein sequence ID" value="cds.TraesKARUn01G0149650.1"/>
    <property type="gene ID" value="TraesKARUn01G0149650"/>
</dbReference>
<dbReference type="Gramene" id="TraesKARUn01G0149850.1">
    <property type="protein sequence ID" value="cds.TraesKARUn01G0149850.1"/>
    <property type="gene ID" value="TraesKARUn01G0149850"/>
</dbReference>
<dbReference type="Gramene" id="TraesKARUn01G0149970.1">
    <property type="protein sequence ID" value="cds.TraesKARUn01G0149970.1"/>
    <property type="gene ID" value="TraesKARUn01G0149970"/>
</dbReference>
<dbReference type="Gramene" id="TraesKARUn01G0150220.1">
    <property type="protein sequence ID" value="cds.TraesKARUn01G0150220.1"/>
    <property type="gene ID" value="TraesKARUn01G0150220"/>
</dbReference>
<dbReference type="Gramene" id="TraesKARUn01G0150540.1">
    <property type="protein sequence ID" value="cds.TraesKARUn01G0150540.1"/>
    <property type="gene ID" value="TraesKARUn01G0150540"/>
</dbReference>
<dbReference type="Gramene" id="TraesKARUn01G0150750.1">
    <property type="protein sequence ID" value="cds.TraesKARUn01G0150750.1"/>
    <property type="gene ID" value="TraesKARUn01G0150750"/>
</dbReference>
<dbReference type="Gramene" id="TraesKARUn01G0150860.1">
    <property type="protein sequence ID" value="cds.TraesKARUn01G0150860.1"/>
    <property type="gene ID" value="TraesKARUn01G0150860"/>
</dbReference>
<dbReference type="Gramene" id="TraesKARUn01G0151110.1">
    <property type="protein sequence ID" value="cds.TraesKARUn01G0151110.1"/>
    <property type="gene ID" value="TraesKARUn01G0151110"/>
</dbReference>
<dbReference type="Gramene" id="TraesKARUn01G0151670.1">
    <property type="protein sequence ID" value="cds.TraesKARUn01G0151670.1"/>
    <property type="gene ID" value="TraesKARUn01G0151670"/>
</dbReference>
<dbReference type="Gramene" id="TraesKARUn01G0151920.1">
    <property type="protein sequence ID" value="cds.TraesKARUn01G0151920.1"/>
    <property type="gene ID" value="TraesKARUn01G0151920"/>
</dbReference>
<dbReference type="Gramene" id="TraesKARUn01G0152010.1">
    <property type="protein sequence ID" value="cds.TraesKARUn01G0152010.1"/>
    <property type="gene ID" value="TraesKARUn01G0152010"/>
</dbReference>
<dbReference type="Gramene" id="TraesKARUn01G0152440.1">
    <property type="protein sequence ID" value="cds.TraesKARUn01G0152440.1"/>
    <property type="gene ID" value="TraesKARUn01G0152440"/>
</dbReference>
<dbReference type="Gramene" id="TraesKARUn01G0152570.1">
    <property type="protein sequence ID" value="cds.TraesKARUn01G0152570.1"/>
    <property type="gene ID" value="TraesKARUn01G0152570"/>
</dbReference>
<dbReference type="Gramene" id="TraesKARUn01G0152800.1">
    <property type="protein sequence ID" value="cds.TraesKARUn01G0152800.1"/>
    <property type="gene ID" value="TraesKARUn01G0152800"/>
</dbReference>
<dbReference type="Gramene" id="TraesKARUn01G0152880.1">
    <property type="protein sequence ID" value="cds.TraesKARUn01G0152880.1"/>
    <property type="gene ID" value="TraesKARUn01G0152880"/>
</dbReference>
<dbReference type="Gramene" id="TraesKARUn01G0152950.1">
    <property type="protein sequence ID" value="cds.TraesKARUn01G0152950.1"/>
    <property type="gene ID" value="TraesKARUn01G0152950"/>
</dbReference>
<dbReference type="Gramene" id="TraesKARUn01G0153160.1">
    <property type="protein sequence ID" value="cds.TraesKARUn01G0153160.1"/>
    <property type="gene ID" value="TraesKARUn01G0153160"/>
</dbReference>
<dbReference type="Gramene" id="TraesKARUn01G0153600.1">
    <property type="protein sequence ID" value="cds.TraesKARUn01G0153600.1"/>
    <property type="gene ID" value="TraesKARUn01G0153600"/>
</dbReference>
<dbReference type="Gramene" id="TraesKARUn01G0153680.1">
    <property type="protein sequence ID" value="cds.TraesKARUn01G0153680.1"/>
    <property type="gene ID" value="TraesKARUn01G0153680"/>
</dbReference>
<dbReference type="Gramene" id="TraesKARUn01G0153790.1">
    <property type="protein sequence ID" value="cds.TraesKARUn01G0153790.1"/>
    <property type="gene ID" value="TraesKARUn01G0153790"/>
</dbReference>
<dbReference type="Gramene" id="TraesKARUn01G0154330.1">
    <property type="protein sequence ID" value="cds.TraesKARUn01G0154330.1"/>
    <property type="gene ID" value="TraesKARUn01G0154330"/>
</dbReference>
<dbReference type="Gramene" id="TraesKARUn01G0154360.1">
    <property type="protein sequence ID" value="cds.TraesKARUn01G0154360.1"/>
    <property type="gene ID" value="TraesKARUn01G0154360"/>
</dbReference>
<dbReference type="Gramene" id="TraesKARUn01G0154460.1">
    <property type="protein sequence ID" value="cds.TraesKARUn01G0154460.1"/>
    <property type="gene ID" value="TraesKARUn01G0154460"/>
</dbReference>
<dbReference type="Gramene" id="TraesKARUn01G0154900.1">
    <property type="protein sequence ID" value="cds.TraesKARUn01G0154900.1"/>
    <property type="gene ID" value="TraesKARUn01G0154900"/>
</dbReference>
<dbReference type="Gramene" id="TraesKARUn01G0155160.1">
    <property type="protein sequence ID" value="cds.TraesKARUn01G0155160.1"/>
    <property type="gene ID" value="TraesKARUn01G0155160"/>
</dbReference>
<dbReference type="Gramene" id="TraesKARUn01G0155470.1">
    <property type="protein sequence ID" value="cds.TraesKARUn01G0155470.1"/>
    <property type="gene ID" value="TraesKARUn01G0155470"/>
</dbReference>
<dbReference type="Gramene" id="TraesKARUn01G0155520.1">
    <property type="protein sequence ID" value="cds.TraesKARUn01G0155520.1"/>
    <property type="gene ID" value="TraesKARUn01G0155520"/>
</dbReference>
<dbReference type="Gramene" id="TraesKARUn01G0155810.1">
    <property type="protein sequence ID" value="cds.TraesKARUn01G0155810.1"/>
    <property type="gene ID" value="TraesKARUn01G0155810"/>
</dbReference>
<dbReference type="Gramene" id="TraesKARUn01G0155830.1">
    <property type="protein sequence ID" value="cds.TraesKARUn01G0155830.1"/>
    <property type="gene ID" value="TraesKARUn01G0155830"/>
</dbReference>
<dbReference type="Gramene" id="TraesKARUn01G0156070.1">
    <property type="protein sequence ID" value="cds.TraesKARUn01G0156070.1"/>
    <property type="gene ID" value="TraesKARUn01G0156070"/>
</dbReference>
<dbReference type="Gramene" id="TraesKARUn01G0157040.1">
    <property type="protein sequence ID" value="cds.TraesKARUn01G0157040.1"/>
    <property type="gene ID" value="TraesKARUn01G0157040"/>
</dbReference>
<dbReference type="Gramene" id="TraesKARUn01G0157080.1">
    <property type="protein sequence ID" value="cds.TraesKARUn01G0157080.1"/>
    <property type="gene ID" value="TraesKARUn01G0157080"/>
</dbReference>
<dbReference type="Gramene" id="TraesKARUn01G0157160.1">
    <property type="protein sequence ID" value="cds.TraesKARUn01G0157160.1"/>
    <property type="gene ID" value="TraesKARUn01G0157160"/>
</dbReference>
<dbReference type="Gramene" id="TraesKARUn01G0157620.1">
    <property type="protein sequence ID" value="cds.TraesKARUn01G0157620.1"/>
    <property type="gene ID" value="TraesKARUn01G0157620"/>
</dbReference>
<dbReference type="Gramene" id="TraesKARUn01G0157980.1">
    <property type="protein sequence ID" value="cds.TraesKARUn01G0157980.1"/>
    <property type="gene ID" value="TraesKARUn01G0157980"/>
</dbReference>
<dbReference type="Gramene" id="TraesKARUn01G0158630.1">
    <property type="protein sequence ID" value="cds.TraesKARUn01G0158630.1"/>
    <property type="gene ID" value="TraesKARUn01G0158630"/>
</dbReference>
<dbReference type="Gramene" id="TraesKARUn01G0158770.1">
    <property type="protein sequence ID" value="cds.TraesKARUn01G0158770.1"/>
    <property type="gene ID" value="TraesKARUn01G0158770"/>
</dbReference>
<dbReference type="Gramene" id="TraesKARUn01G0159150.1">
    <property type="protein sequence ID" value="cds.TraesKARUn01G0159150.1"/>
    <property type="gene ID" value="TraesKARUn01G0159150"/>
</dbReference>
<dbReference type="Gramene" id="TraesKARUn01G0159340.1">
    <property type="protein sequence ID" value="cds.TraesKARUn01G0159340.1"/>
    <property type="gene ID" value="TraesKARUn01G0159340"/>
</dbReference>
<dbReference type="Gramene" id="TraesKARUn01G0159880.1">
    <property type="protein sequence ID" value="cds.TraesKARUn01G0159880.1"/>
    <property type="gene ID" value="TraesKARUn01G0159880"/>
</dbReference>
<dbReference type="Gramene" id="TraesKARUn01G0159960.1">
    <property type="protein sequence ID" value="cds.TraesKARUn01G0159960.1"/>
    <property type="gene ID" value="TraesKARUn01G0159960"/>
</dbReference>
<dbReference type="Gramene" id="TraesKARUn01G0160020.1">
    <property type="protein sequence ID" value="cds.TraesKARUn01G0160020.1"/>
    <property type="gene ID" value="TraesKARUn01G0160020"/>
</dbReference>
<dbReference type="Gramene" id="TraesKARUn01G0160280.1">
    <property type="protein sequence ID" value="cds.TraesKARUn01G0160280.1"/>
    <property type="gene ID" value="TraesKARUn01G0160280"/>
</dbReference>
<dbReference type="Gramene" id="TraesKARUn01G0160340.1">
    <property type="protein sequence ID" value="cds.TraesKARUn01G0160340.1"/>
    <property type="gene ID" value="TraesKARUn01G0160340"/>
</dbReference>
<dbReference type="Gramene" id="TraesKARUn01G0160450.1">
    <property type="protein sequence ID" value="cds.TraesKARUn01G0160450.1"/>
    <property type="gene ID" value="TraesKARUn01G0160450"/>
</dbReference>
<dbReference type="Gramene" id="TraesKARUn01G0160550.1">
    <property type="protein sequence ID" value="cds.TraesKARUn01G0160550.1"/>
    <property type="gene ID" value="TraesKARUn01G0160550"/>
</dbReference>
<dbReference type="Gramene" id="TraesKARUn01G0160770.1">
    <property type="protein sequence ID" value="cds.TraesKARUn01G0160770.1"/>
    <property type="gene ID" value="TraesKARUn01G0160770"/>
</dbReference>
<dbReference type="Gramene" id="TraesKARUn01G0160880.1">
    <property type="protein sequence ID" value="cds.TraesKARUn01G0160880.1"/>
    <property type="gene ID" value="TraesKARUn01G0160880"/>
</dbReference>
<dbReference type="Gramene" id="TraesKARUn01G0160950.1">
    <property type="protein sequence ID" value="cds.TraesKARUn01G0160950.1"/>
    <property type="gene ID" value="TraesKARUn01G0160950"/>
</dbReference>
<dbReference type="Gramene" id="TraesKARUn01G0161050.1">
    <property type="protein sequence ID" value="cds.TraesKARUn01G0161050.1"/>
    <property type="gene ID" value="TraesKARUn01G0161050"/>
</dbReference>
<dbReference type="Gramene" id="TraesKARUn01G0162090.1">
    <property type="protein sequence ID" value="cds.TraesKARUn01G0162090.1"/>
    <property type="gene ID" value="TraesKARUn01G0162090"/>
</dbReference>
<dbReference type="Gramene" id="TraesKARUn01G0162170.1">
    <property type="protein sequence ID" value="cds.TraesKARUn01G0162170.1"/>
    <property type="gene ID" value="TraesKARUn01G0162170"/>
</dbReference>
<dbReference type="Gramene" id="TraesKARUn01G0162270.1">
    <property type="protein sequence ID" value="cds.TraesKARUn01G0162270.1"/>
    <property type="gene ID" value="TraesKARUn01G0162270"/>
</dbReference>
<dbReference type="Gramene" id="TraesKARUn01G0162300.1">
    <property type="protein sequence ID" value="cds.TraesKARUn01G0162300.1"/>
    <property type="gene ID" value="TraesKARUn01G0162300"/>
</dbReference>
<dbReference type="Gramene" id="TraesKARUn01G0162320.1">
    <property type="protein sequence ID" value="cds.TraesKARUn01G0162320.1"/>
    <property type="gene ID" value="TraesKARUn01G0162320"/>
</dbReference>
<dbReference type="Gramene" id="TraesKARUn01G0162420.1">
    <property type="protein sequence ID" value="cds.TraesKARUn01G0162420.1"/>
    <property type="gene ID" value="TraesKARUn01G0162420"/>
</dbReference>
<dbReference type="Gramene" id="TraesKARUn01G0162510.1">
    <property type="protein sequence ID" value="cds.TraesKARUn01G0162510.1"/>
    <property type="gene ID" value="TraesKARUn01G0162510"/>
</dbReference>
<dbReference type="Gramene" id="TraesKARUn01G0162590.1">
    <property type="protein sequence ID" value="cds.TraesKARUn01G0162590.1"/>
    <property type="gene ID" value="TraesKARUn01G0162590"/>
</dbReference>
<dbReference type="Gramene" id="TraesKARUn01G0162690.1">
    <property type="protein sequence ID" value="cds.TraesKARUn01G0162690.1"/>
    <property type="gene ID" value="TraesKARUn01G0162690"/>
</dbReference>
<dbReference type="Gramene" id="TraesKARUn01G0162810.1">
    <property type="protein sequence ID" value="cds.TraesKARUn01G0162810.1"/>
    <property type="gene ID" value="TraesKARUn01G0162810"/>
</dbReference>
<dbReference type="Gramene" id="TraesKARUn01G0163130.1">
    <property type="protein sequence ID" value="cds.TraesKARUn01G0163130.1"/>
    <property type="gene ID" value="TraesKARUn01G0163130"/>
</dbReference>
<dbReference type="Gramene" id="TraesKARUn01G0163250.1">
    <property type="protein sequence ID" value="cds.TraesKARUn01G0163250.1"/>
    <property type="gene ID" value="TraesKARUn01G0163250"/>
</dbReference>
<dbReference type="Gramene" id="TraesKARUn01G0163330.1">
    <property type="protein sequence ID" value="cds.TraesKARUn01G0163330.1"/>
    <property type="gene ID" value="TraesKARUn01G0163330"/>
</dbReference>
<dbReference type="Gramene" id="TraesKARUn01G0163390.1">
    <property type="protein sequence ID" value="cds.TraesKARUn01G0163390.1"/>
    <property type="gene ID" value="TraesKARUn01G0163390"/>
</dbReference>
<dbReference type="Gramene" id="TraesKARUn01G0163730.1">
    <property type="protein sequence ID" value="cds.TraesKARUn01G0163730.1"/>
    <property type="gene ID" value="TraesKARUn01G0163730"/>
</dbReference>
<dbReference type="Gramene" id="TraesKARUn01G0163890.1">
    <property type="protein sequence ID" value="cds.TraesKARUn01G0163890.1"/>
    <property type="gene ID" value="TraesKARUn01G0163890"/>
</dbReference>
<dbReference type="Gramene" id="TraesKARUn01G0164020.1">
    <property type="protein sequence ID" value="cds.TraesKARUn01G0164020.1"/>
    <property type="gene ID" value="TraesKARUn01G0164020"/>
</dbReference>
<dbReference type="Gramene" id="TraesKARUn01G0164240.1">
    <property type="protein sequence ID" value="cds.TraesKARUn01G0164240.1"/>
    <property type="gene ID" value="TraesKARUn01G0164240"/>
</dbReference>
<dbReference type="Gramene" id="TraesKARUn01G0164560.1">
    <property type="protein sequence ID" value="cds.TraesKARUn01G0164560.1"/>
    <property type="gene ID" value="TraesKARUn01G0164560"/>
</dbReference>
<dbReference type="Gramene" id="TraesKARUn01G0164640.1">
    <property type="protein sequence ID" value="cds.TraesKARUn01G0164640.1"/>
    <property type="gene ID" value="TraesKARUn01G0164640"/>
</dbReference>
<dbReference type="Gramene" id="TraesKARUn01G0165110.1">
    <property type="protein sequence ID" value="cds.TraesKARUn01G0165110.1"/>
    <property type="gene ID" value="TraesKARUn01G0165110"/>
</dbReference>
<dbReference type="Gramene" id="TraesKARUn01G0165150.1">
    <property type="protein sequence ID" value="cds.TraesKARUn01G0165150.1"/>
    <property type="gene ID" value="TraesKARUn01G0165150"/>
</dbReference>
<dbReference type="Gramene" id="TraesKARUn01G0165320.1">
    <property type="protein sequence ID" value="cds.TraesKARUn01G0165320.1"/>
    <property type="gene ID" value="TraesKARUn01G0165320"/>
</dbReference>
<dbReference type="Gramene" id="TraesKARUn01G0165370.1">
    <property type="protein sequence ID" value="cds.TraesKARUn01G0165370.1"/>
    <property type="gene ID" value="TraesKARUn01G0165370"/>
</dbReference>
<dbReference type="Gramene" id="TraesKARUn01G0165440.1">
    <property type="protein sequence ID" value="cds.TraesKARUn01G0165440.1"/>
    <property type="gene ID" value="TraesKARUn01G0165440"/>
</dbReference>
<dbReference type="Gramene" id="TraesKARUn01G0165640.1">
    <property type="protein sequence ID" value="cds.TraesKARUn01G0165640.1"/>
    <property type="gene ID" value="TraesKARUn01G0165640"/>
</dbReference>
<dbReference type="Gramene" id="TraesKARUn01G0165670.1">
    <property type="protein sequence ID" value="cds.TraesKARUn01G0165670.1"/>
    <property type="gene ID" value="TraesKARUn01G0165670"/>
</dbReference>
<dbReference type="Gramene" id="TraesKARUn01G0165950.1">
    <property type="protein sequence ID" value="cds.TraesKARUn01G0165950.1"/>
    <property type="gene ID" value="TraesKARUn01G0165950"/>
</dbReference>
<dbReference type="Gramene" id="TraesKARUn01G0166060.1">
    <property type="protein sequence ID" value="cds.TraesKARUn01G0166060.1"/>
    <property type="gene ID" value="TraesKARUn01G0166060"/>
</dbReference>
<dbReference type="Gramene" id="TraesKARUn01G0166200.1">
    <property type="protein sequence ID" value="cds.TraesKARUn01G0166200.1"/>
    <property type="gene ID" value="TraesKARUn01G0166200"/>
</dbReference>
<dbReference type="Gramene" id="TraesKARUn01G0166360.1">
    <property type="protein sequence ID" value="cds.TraesKARUn01G0166360.1"/>
    <property type="gene ID" value="TraesKARUn01G0166360"/>
</dbReference>
<dbReference type="Gramene" id="TraesKARUn01G0166440.1">
    <property type="protein sequence ID" value="cds.TraesKARUn01G0166440.1"/>
    <property type="gene ID" value="TraesKARUn01G0166440"/>
</dbReference>
<dbReference type="Gramene" id="TraesKARUn01G0166500.1">
    <property type="protein sequence ID" value="cds.TraesKARUn01G0166500.1"/>
    <property type="gene ID" value="TraesKARUn01G0166500"/>
</dbReference>
<dbReference type="Gramene" id="TraesKARUn01G0166630.1">
    <property type="protein sequence ID" value="cds.TraesKARUn01G0166630.1"/>
    <property type="gene ID" value="TraesKARUn01G0166630"/>
</dbReference>
<dbReference type="Gramene" id="TraesKARUn01G0167640.1">
    <property type="protein sequence ID" value="cds.TraesKARUn01G0167640.1"/>
    <property type="gene ID" value="TraesKARUn01G0167640"/>
</dbReference>
<dbReference type="Gramene" id="TraesKARUn01G0167790.1">
    <property type="protein sequence ID" value="cds.TraesKARUn01G0167790.1"/>
    <property type="gene ID" value="TraesKARUn01G0167790"/>
</dbReference>
<dbReference type="Gramene" id="TraesKARUn01G0167820.1">
    <property type="protein sequence ID" value="cds.TraesKARUn01G0167820.1"/>
    <property type="gene ID" value="TraesKARUn01G0167820"/>
</dbReference>
<dbReference type="Gramene" id="TraesKARUn01G0168030.1">
    <property type="protein sequence ID" value="cds.TraesKARUn01G0168030.1"/>
    <property type="gene ID" value="TraesKARUn01G0168030"/>
</dbReference>
<dbReference type="Gramene" id="TraesKARUn01G0168180.1">
    <property type="protein sequence ID" value="cds.TraesKARUn01G0168180.1"/>
    <property type="gene ID" value="TraesKARUn01G0168180"/>
</dbReference>
<dbReference type="Gramene" id="TraesKARUn01G0168390.1">
    <property type="protein sequence ID" value="cds.TraesKARUn01G0168390.1"/>
    <property type="gene ID" value="TraesKARUn01G0168390"/>
</dbReference>
<dbReference type="Gramene" id="TraesKARUn01G0169490.1">
    <property type="protein sequence ID" value="cds.TraesKARUn01G0169490.1"/>
    <property type="gene ID" value="TraesKARUn01G0169490"/>
</dbReference>
<dbReference type="Gramene" id="TraesKARUn01G0169970.1">
    <property type="protein sequence ID" value="cds.TraesKARUn01G0169970.1"/>
    <property type="gene ID" value="TraesKARUn01G0169970"/>
</dbReference>
<dbReference type="Gramene" id="TraesKARUn01G0170300.1">
    <property type="protein sequence ID" value="cds.TraesKARUn01G0170300.1"/>
    <property type="gene ID" value="TraesKARUn01G0170300"/>
</dbReference>
<dbReference type="Gramene" id="TraesKARUn01G0170340.1">
    <property type="protein sequence ID" value="cds.TraesKARUn01G0170340.1"/>
    <property type="gene ID" value="TraesKARUn01G0170340"/>
</dbReference>
<dbReference type="Gramene" id="TraesKARUn01G0170390.1">
    <property type="protein sequence ID" value="cds.TraesKARUn01G0170390.1"/>
    <property type="gene ID" value="TraesKARUn01G0170390"/>
</dbReference>
<dbReference type="Gramene" id="TraesKARUn01G0170420.1">
    <property type="protein sequence ID" value="cds.TraesKARUn01G0170420.1"/>
    <property type="gene ID" value="TraesKARUn01G0170420"/>
</dbReference>
<dbReference type="Gramene" id="TraesKARUn01G0170470.1">
    <property type="protein sequence ID" value="cds.TraesKARUn01G0170470.1"/>
    <property type="gene ID" value="TraesKARUn01G0170470"/>
</dbReference>
<dbReference type="Gramene" id="TraesKARUn01G0170530.1">
    <property type="protein sequence ID" value="cds.TraesKARUn01G0170530.1"/>
    <property type="gene ID" value="TraesKARUn01G0170530"/>
</dbReference>
<dbReference type="Gramene" id="TraesKARUn01G0170970.1">
    <property type="protein sequence ID" value="cds.TraesKARUn01G0170970.1"/>
    <property type="gene ID" value="TraesKARUn01G0170970"/>
</dbReference>
<dbReference type="Gramene" id="TraesKARUn01G0171050.1">
    <property type="protein sequence ID" value="cds.TraesKARUn01G0171050.1"/>
    <property type="gene ID" value="TraesKARUn01G0171050"/>
</dbReference>
<dbReference type="Gramene" id="TraesKARUn01G0172230.1">
    <property type="protein sequence ID" value="cds.TraesKARUn01G0172230.1"/>
    <property type="gene ID" value="TraesKARUn01G0172230"/>
</dbReference>
<dbReference type="Gramene" id="TraesKARUn01G0172380.1">
    <property type="protein sequence ID" value="cds.TraesKARUn01G0172380.1"/>
    <property type="gene ID" value="TraesKARUn01G0172380"/>
</dbReference>
<dbReference type="Gramene" id="TraesKARUn01G0172680.1">
    <property type="protein sequence ID" value="cds.TraesKARUn01G0172680.1"/>
    <property type="gene ID" value="TraesKARUn01G0172680"/>
</dbReference>
<dbReference type="Gramene" id="TraesKARUn01G0173070.1">
    <property type="protein sequence ID" value="cds.TraesKARUn01G0173070.1"/>
    <property type="gene ID" value="TraesKARUn01G0173070"/>
</dbReference>
<dbReference type="Gramene" id="TraesKARUn01G0173420.1">
    <property type="protein sequence ID" value="cds.TraesKARUn01G0173420.1"/>
    <property type="gene ID" value="TraesKARUn01G0173420"/>
</dbReference>
<dbReference type="Gramene" id="TraesKARUn01G0174280.1">
    <property type="protein sequence ID" value="cds.TraesKARUn01G0174280.1"/>
    <property type="gene ID" value="TraesKARUn01G0174280"/>
</dbReference>
<dbReference type="Gramene" id="TraesKARUn01G0174360.1">
    <property type="protein sequence ID" value="cds.TraesKARUn01G0174360.1"/>
    <property type="gene ID" value="TraesKARUn01G0174360"/>
</dbReference>
<dbReference type="Gramene" id="TraesKARUn01G0174600.1">
    <property type="protein sequence ID" value="cds.TraesKARUn01G0174600.1"/>
    <property type="gene ID" value="TraesKARUn01G0174600"/>
</dbReference>
<dbReference type="Gramene" id="TraesKARUn01G0174650.1">
    <property type="protein sequence ID" value="cds.TraesKARUn01G0174650.1"/>
    <property type="gene ID" value="TraesKARUn01G0174650"/>
</dbReference>
<dbReference type="Gramene" id="TraesKARUn01G0174960.1">
    <property type="protein sequence ID" value="cds.TraesKARUn01G0174960.1"/>
    <property type="gene ID" value="TraesKARUn01G0174960"/>
</dbReference>
<dbReference type="Gramene" id="TraesKARUn01G0175520.1">
    <property type="protein sequence ID" value="cds.TraesKARUn01G0175520.1"/>
    <property type="gene ID" value="TraesKARUn01G0175520"/>
</dbReference>
<dbReference type="Gramene" id="TraesKARUn01G0175910.1">
    <property type="protein sequence ID" value="cds.TraesKARUn01G0175910.1"/>
    <property type="gene ID" value="TraesKARUn01G0175910"/>
</dbReference>
<dbReference type="Gramene" id="TraesKARUn01G0176190.1">
    <property type="protein sequence ID" value="cds.TraesKARUn01G0176190.1"/>
    <property type="gene ID" value="TraesKARUn01G0176190"/>
</dbReference>
<dbReference type="Gramene" id="TraesKARUn01G0176690.1">
    <property type="protein sequence ID" value="cds.TraesKARUn01G0176690.1"/>
    <property type="gene ID" value="TraesKARUn01G0176690"/>
</dbReference>
<dbReference type="Gramene" id="TraesKARUn01G0176760.1">
    <property type="protein sequence ID" value="cds.TraesKARUn01G0176760.1"/>
    <property type="gene ID" value="TraesKARUn01G0176760"/>
</dbReference>
<dbReference type="Gramene" id="TraesKARUn01G0177670.1">
    <property type="protein sequence ID" value="cds.TraesKARUn01G0177670.1"/>
    <property type="gene ID" value="TraesKARUn01G0177670"/>
</dbReference>
<dbReference type="Gramene" id="TraesKARUn01G0179420.1">
    <property type="protein sequence ID" value="cds.TraesKARUn01G0179420.1"/>
    <property type="gene ID" value="TraesKARUn01G0179420"/>
</dbReference>
<dbReference type="Gramene" id="TraesKARUn01G0179770.1">
    <property type="protein sequence ID" value="cds.TraesKARUn01G0179770.1"/>
    <property type="gene ID" value="TraesKARUn01G0179770"/>
</dbReference>
<dbReference type="Gramene" id="TraesKARUn01G0179920.1">
    <property type="protein sequence ID" value="cds.TraesKARUn01G0179920.1"/>
    <property type="gene ID" value="TraesKARUn01G0179920"/>
</dbReference>
<dbReference type="Gramene" id="TraesKARUn01G0181130.1">
    <property type="protein sequence ID" value="cds.TraesKARUn01G0181130.1"/>
    <property type="gene ID" value="TraesKARUn01G0181130"/>
</dbReference>
<dbReference type="Gramene" id="TraesKARUn01G0182130.1">
    <property type="protein sequence ID" value="cds.TraesKARUn01G0182130.1"/>
    <property type="gene ID" value="TraesKARUn01G0182130"/>
</dbReference>
<dbReference type="Gramene" id="TraesKARUn01G0182400.1">
    <property type="protein sequence ID" value="cds.TraesKARUn01G0182400.1"/>
    <property type="gene ID" value="TraesKARUn01G0182400"/>
</dbReference>
<dbReference type="Gramene" id="TraesKARUn01G0182630.1">
    <property type="protein sequence ID" value="cds.TraesKARUn01G0182630.1"/>
    <property type="gene ID" value="TraesKARUn01G0182630"/>
</dbReference>
<dbReference type="Gramene" id="TraesKARUn01G0182920.1">
    <property type="protein sequence ID" value="cds.TraesKARUn01G0182920.1"/>
    <property type="gene ID" value="TraesKARUn01G0182920"/>
</dbReference>
<dbReference type="Gramene" id="TraesKARUn01G0184120.1">
    <property type="protein sequence ID" value="cds.TraesKARUn01G0184120.1"/>
    <property type="gene ID" value="TraesKARUn01G0184120"/>
</dbReference>
<dbReference type="Gramene" id="TraesKARUn01G0184900.1">
    <property type="protein sequence ID" value="cds.TraesKARUn01G0184900.1"/>
    <property type="gene ID" value="TraesKARUn01G0184900"/>
</dbReference>
<dbReference type="Gramene" id="TraesKARUn01G0185050.1">
    <property type="protein sequence ID" value="cds.TraesKARUn01G0185050.1"/>
    <property type="gene ID" value="TraesKARUn01G0185050"/>
</dbReference>
<dbReference type="Gramene" id="TraesKARUn01G0185950.1">
    <property type="protein sequence ID" value="cds.TraesKARUn01G0185950.1"/>
    <property type="gene ID" value="TraesKARUn01G0185950"/>
</dbReference>
<dbReference type="Gramene" id="TraesKARUn01G0187050.1">
    <property type="protein sequence ID" value="cds.TraesKARUn01G0187050.1"/>
    <property type="gene ID" value="TraesKARUn01G0187050"/>
</dbReference>
<dbReference type="Gramene" id="TraesKARUn01G0187080.1">
    <property type="protein sequence ID" value="cds.TraesKARUn01G0187080.1"/>
    <property type="gene ID" value="TraesKARUn01G0187080"/>
</dbReference>
<dbReference type="Gramene" id="TraesKARUn01G0187190.1">
    <property type="protein sequence ID" value="cds.TraesKARUn01G0187190.1"/>
    <property type="gene ID" value="TraesKARUn01G0187190"/>
</dbReference>
<dbReference type="Gramene" id="TraesKARUn01G0188300.1">
    <property type="protein sequence ID" value="cds.TraesKARUn01G0188300.1"/>
    <property type="gene ID" value="TraesKARUn01G0188300"/>
</dbReference>
<dbReference type="Gramene" id="TraesKARUn01G0189680.1">
    <property type="protein sequence ID" value="cds.TraesKARUn01G0189680.1"/>
    <property type="gene ID" value="TraesKARUn01G0189680"/>
</dbReference>
<dbReference type="Gramene" id="TraesKARUn01G0189810.1">
    <property type="protein sequence ID" value="cds.TraesKARUn01G0189810.1"/>
    <property type="gene ID" value="TraesKARUn01G0189810"/>
</dbReference>
<dbReference type="Gramene" id="TraesKARUn01G0189980.1">
    <property type="protein sequence ID" value="cds.TraesKARUn01G0189980.1"/>
    <property type="gene ID" value="TraesKARUn01G0189980"/>
</dbReference>
<dbReference type="Gramene" id="TraesKARUn01G0190160.1">
    <property type="protein sequence ID" value="cds.TraesKARUn01G0190160.1"/>
    <property type="gene ID" value="TraesKARUn01G0190160"/>
</dbReference>
<dbReference type="Gramene" id="TraesKARUn01G0190910.1">
    <property type="protein sequence ID" value="cds.TraesKARUn01G0190910.1"/>
    <property type="gene ID" value="TraesKARUn01G0190910"/>
</dbReference>
<dbReference type="Gramene" id="TraesKARUn01G0191040.1">
    <property type="protein sequence ID" value="cds.TraesKARUn01G0191040.1"/>
    <property type="gene ID" value="TraesKARUn01G0191040"/>
</dbReference>
<dbReference type="Gramene" id="TraesKARUn01G0191530.1">
    <property type="protein sequence ID" value="cds.TraesKARUn01G0191530.1"/>
    <property type="gene ID" value="TraesKARUn01G0191530"/>
</dbReference>
<dbReference type="Gramene" id="TraesKARUn01G0191990.1">
    <property type="protein sequence ID" value="cds.TraesKARUn01G0191990.1"/>
    <property type="gene ID" value="TraesKARUn01G0191990"/>
</dbReference>
<dbReference type="Gramene" id="TraesKARUn01G0192520.1">
    <property type="protein sequence ID" value="cds.TraesKARUn01G0192520.1"/>
    <property type="gene ID" value="TraesKARUn01G0192520"/>
</dbReference>
<dbReference type="Gramene" id="TraesKARUn01G0192720.1">
    <property type="protein sequence ID" value="cds.TraesKARUn01G0192720.1"/>
    <property type="gene ID" value="TraesKARUn01G0192720"/>
</dbReference>
<dbReference type="Gramene" id="TraesKARUn01G0193790.1">
    <property type="protein sequence ID" value="cds.TraesKARUn01G0193790.1"/>
    <property type="gene ID" value="TraesKARUn01G0193790"/>
</dbReference>
<dbReference type="Gramene" id="TraesLAC1D03G00487240.1">
    <property type="protein sequence ID" value="TraesLAC1D03G00487240.1.CDS1"/>
    <property type="gene ID" value="TraesLAC1D03G00487240"/>
</dbReference>
<dbReference type="Gramene" id="TraesLAC3B03G01522020.1">
    <property type="protein sequence ID" value="TraesLAC3B03G01522020.1.CDS1"/>
    <property type="gene ID" value="TraesLAC3B03G01522020"/>
</dbReference>
<dbReference type="Gramene" id="TraesLAC5B03G02765690.1">
    <property type="protein sequence ID" value="TraesLAC5B03G02765690.1.CDS1"/>
    <property type="gene ID" value="TraesLAC5B03G02765690"/>
</dbReference>
<dbReference type="Gramene" id="TraesLAC5D03G03069340.1">
    <property type="protein sequence ID" value="TraesLAC5D03G03069340.1.CDS1"/>
    <property type="gene ID" value="TraesLAC5D03G03069340"/>
</dbReference>
<dbReference type="Gramene" id="TraesLDM1D03G00486440.1">
    <property type="protein sequence ID" value="TraesLDM1D03G00486440.1.CDS1"/>
    <property type="gene ID" value="TraesLDM1D03G00486440"/>
</dbReference>
<dbReference type="Gramene" id="TraesLDM5B03G02813500.1">
    <property type="protein sequence ID" value="TraesLDM5B03G02813500.1.CDS1"/>
    <property type="gene ID" value="TraesLDM5B03G02813500"/>
</dbReference>
<dbReference type="Gramene" id="TraesLDM5D03G03118190.1">
    <property type="protein sequence ID" value="TraesLDM5D03G03118190.1.CDS1"/>
    <property type="gene ID" value="TraesLDM5D03G03118190"/>
</dbReference>
<dbReference type="Gramene" id="TraesMAC1D03G00483140.1">
    <property type="protein sequence ID" value="TraesMAC1D03G00483140.1.CDS1"/>
    <property type="gene ID" value="TraesMAC1D03G00483140"/>
</dbReference>
<dbReference type="Gramene" id="TraesMAC3B03G01579770.1">
    <property type="protein sequence ID" value="TraesMAC3B03G01579770.1.CDS1"/>
    <property type="gene ID" value="TraesMAC3B03G01579770"/>
</dbReference>
<dbReference type="Gramene" id="TraesMAC5A03G02716750.1">
    <property type="protein sequence ID" value="TraesMAC5A03G02716750.1.CDS1"/>
    <property type="gene ID" value="TraesMAC5A03G02716750"/>
</dbReference>
<dbReference type="Gramene" id="TraesMAC5D03G03112250.1">
    <property type="protein sequence ID" value="TraesMAC5D03G03112250.1.CDS1"/>
    <property type="gene ID" value="TraesMAC5D03G03112250"/>
</dbReference>
<dbReference type="Gramene" id="TraesNOR1D03G00491350.1">
    <property type="protein sequence ID" value="TraesNOR1D03G00491350.1.CDS1"/>
    <property type="gene ID" value="TraesNOR1D03G00491350"/>
</dbReference>
<dbReference type="Gramene" id="TraesNOR5B03G02836170.1">
    <property type="protein sequence ID" value="TraesNOR5B03G02836170.1.CDS1"/>
    <property type="gene ID" value="TraesNOR5B03G02836170"/>
</dbReference>
<dbReference type="Gramene" id="TraesNOR5D03G03143180.1">
    <property type="protein sequence ID" value="TraesNOR5D03G03143180.1.CDS1"/>
    <property type="gene ID" value="TraesNOR5D03G03143180"/>
</dbReference>
<dbReference type="Gramene" id="TraesPARA_EIv1.0_1544810.1">
    <property type="protein sequence ID" value="TraesPARA_EIv1.0_1544810.1.CDS1"/>
    <property type="gene ID" value="TraesPARA_EIv1.0_1544810"/>
</dbReference>
<dbReference type="Gramene" id="TraesPARA_EIv1.0_2014510.1">
    <property type="protein sequence ID" value="TraesPARA_EIv1.0_2014510.1.CDS1"/>
    <property type="gene ID" value="TraesPARA_EIv1.0_2014510"/>
</dbReference>
<dbReference type="Gramene" id="TraesPARA_EIv1.0_2663130.1">
    <property type="protein sequence ID" value="TraesPARA_EIv1.0_2663130.1.CDS1"/>
    <property type="gene ID" value="TraesPARA_EIv1.0_2663130"/>
</dbReference>
<dbReference type="Gramene" id="TraesRN1D0100498100.1">
    <property type="protein sequence ID" value="TraesRN1D0100498100.1"/>
    <property type="gene ID" value="TraesRN1D0100498100"/>
</dbReference>
<dbReference type="Gramene" id="TraesRN1D0100498200.1">
    <property type="protein sequence ID" value="TraesRN1D0100498200.1"/>
    <property type="gene ID" value="TraesRN1D0100498200"/>
</dbReference>
<dbReference type="Gramene" id="TraesRN1D0100498300.1">
    <property type="protein sequence ID" value="TraesRN1D0100498300.1"/>
    <property type="gene ID" value="TraesRN1D0100498300"/>
</dbReference>
<dbReference type="Gramene" id="TraesRN5D0100015700.1">
    <property type="protein sequence ID" value="TraesRN5D0100015700.1"/>
    <property type="gene ID" value="TraesRN5D0100015700"/>
</dbReference>
<dbReference type="Gramene" id="TraesRN5D0100485000.1">
    <property type="protein sequence ID" value="TraesRN5D0100485000.1"/>
    <property type="gene ID" value="TraesRN5D0100485000"/>
</dbReference>
<dbReference type="Gramene" id="TraesRN6D0100049000.1">
    <property type="protein sequence ID" value="TraesRN6D0100049000.1"/>
    <property type="gene ID" value="TraesRN6D0100049000"/>
</dbReference>
<dbReference type="Gramene" id="TraesSTA3B03G01572570.1">
    <property type="protein sequence ID" value="TraesSTA3B03G01572570.1.CDS1"/>
    <property type="gene ID" value="TraesSTA3B03G01572570"/>
</dbReference>
<dbReference type="Gramene" id="TraesSTA5D03G03104310.1">
    <property type="protein sequence ID" value="TraesSTA5D03G03104310.1.CDS1"/>
    <property type="gene ID" value="TraesSTA5D03G03104310"/>
</dbReference>
<dbReference type="Gramene" id="TraesSYM1D03G00490390.1">
    <property type="protein sequence ID" value="TraesSYM1D03G00490390.1.CDS1"/>
    <property type="gene ID" value="TraesSYM1D03G00490390"/>
</dbReference>
<dbReference type="Gramene" id="TraesSYM5D03G03053410.1">
    <property type="protein sequence ID" value="TraesSYM5D03G03053410.1.CDS1"/>
    <property type="gene ID" value="TraesSYM5D03G03053410"/>
</dbReference>
<dbReference type="KEGG" id="taes:803095"/>
<dbReference type="eggNOG" id="KOG0232">
    <property type="taxonomic scope" value="Eukaryota"/>
</dbReference>
<dbReference type="HOGENOM" id="CLU_148047_2_0_1"/>
<dbReference type="OMA" id="QPELMNE"/>
<dbReference type="OrthoDB" id="689995at2759"/>
<dbReference type="EvolutionaryTrace" id="P69448"/>
<dbReference type="Proteomes" id="UP000019116">
    <property type="component" value="Chloroplast"/>
</dbReference>
<dbReference type="ExpressionAtlas" id="P69448">
    <property type="expression patterns" value="baseline and differential"/>
</dbReference>
<dbReference type="GO" id="GO:0009535">
    <property type="term" value="C:chloroplast thylakoid membrane"/>
    <property type="evidence" value="ECO:0007669"/>
    <property type="project" value="UniProtKB-SubCell"/>
</dbReference>
<dbReference type="GO" id="GO:0045259">
    <property type="term" value="C:proton-transporting ATP synthase complex"/>
    <property type="evidence" value="ECO:0007669"/>
    <property type="project" value="UniProtKB-KW"/>
</dbReference>
<dbReference type="GO" id="GO:0033177">
    <property type="term" value="C:proton-transporting two-sector ATPase complex, proton-transporting domain"/>
    <property type="evidence" value="ECO:0007669"/>
    <property type="project" value="InterPro"/>
</dbReference>
<dbReference type="GO" id="GO:0008289">
    <property type="term" value="F:lipid binding"/>
    <property type="evidence" value="ECO:0007669"/>
    <property type="project" value="UniProtKB-KW"/>
</dbReference>
<dbReference type="GO" id="GO:0046933">
    <property type="term" value="F:proton-transporting ATP synthase activity, rotational mechanism"/>
    <property type="evidence" value="ECO:0007669"/>
    <property type="project" value="UniProtKB-UniRule"/>
</dbReference>
<dbReference type="GO" id="GO:0015986">
    <property type="term" value="P:proton motive force-driven ATP synthesis"/>
    <property type="evidence" value="ECO:0000318"/>
    <property type="project" value="GO_Central"/>
</dbReference>
<dbReference type="CDD" id="cd18183">
    <property type="entry name" value="ATP-synt_Fo_c_ATPH"/>
    <property type="match status" value="1"/>
</dbReference>
<dbReference type="FunFam" id="1.20.20.10:FF:000001">
    <property type="entry name" value="ATP synthase subunit c, chloroplastic"/>
    <property type="match status" value="1"/>
</dbReference>
<dbReference type="Gene3D" id="1.20.20.10">
    <property type="entry name" value="F1F0 ATP synthase subunit C"/>
    <property type="match status" value="1"/>
</dbReference>
<dbReference type="HAMAP" id="MF_01396">
    <property type="entry name" value="ATP_synth_c_bact"/>
    <property type="match status" value="1"/>
</dbReference>
<dbReference type="InterPro" id="IPR005953">
    <property type="entry name" value="ATP_synth_csu_bac/chlpt"/>
</dbReference>
<dbReference type="InterPro" id="IPR000454">
    <property type="entry name" value="ATP_synth_F0_csu"/>
</dbReference>
<dbReference type="InterPro" id="IPR020537">
    <property type="entry name" value="ATP_synth_F0_csu_DDCD_BS"/>
</dbReference>
<dbReference type="InterPro" id="IPR038662">
    <property type="entry name" value="ATP_synth_F0_csu_sf"/>
</dbReference>
<dbReference type="InterPro" id="IPR002379">
    <property type="entry name" value="ATPase_proteolipid_c-like_dom"/>
</dbReference>
<dbReference type="InterPro" id="IPR035921">
    <property type="entry name" value="F/V-ATP_Csub_sf"/>
</dbReference>
<dbReference type="NCBIfam" id="TIGR01260">
    <property type="entry name" value="ATP_synt_c"/>
    <property type="match status" value="1"/>
</dbReference>
<dbReference type="NCBIfam" id="NF005608">
    <property type="entry name" value="PRK07354.1"/>
    <property type="match status" value="1"/>
</dbReference>
<dbReference type="PANTHER" id="PTHR10031">
    <property type="entry name" value="ATP SYNTHASE LIPID-BINDING PROTEIN, MITOCHONDRIAL"/>
    <property type="match status" value="1"/>
</dbReference>
<dbReference type="PANTHER" id="PTHR10031:SF0">
    <property type="entry name" value="ATPASE PROTEIN 9"/>
    <property type="match status" value="1"/>
</dbReference>
<dbReference type="Pfam" id="PF00137">
    <property type="entry name" value="ATP-synt_C"/>
    <property type="match status" value="1"/>
</dbReference>
<dbReference type="PRINTS" id="PR00124">
    <property type="entry name" value="ATPASEC"/>
</dbReference>
<dbReference type="SUPFAM" id="SSF81333">
    <property type="entry name" value="F1F0 ATP synthase subunit C"/>
    <property type="match status" value="1"/>
</dbReference>
<dbReference type="PROSITE" id="PS00605">
    <property type="entry name" value="ATPASE_C"/>
    <property type="match status" value="1"/>
</dbReference>
<name>ATPH_WHEAT</name>
<feature type="chain" id="PRO_0000112207" description="ATP synthase subunit c, chloroplastic">
    <location>
        <begin position="1"/>
        <end position="81"/>
    </location>
</feature>
<feature type="transmembrane region" description="Helical" evidence="1">
    <location>
        <begin position="3"/>
        <end position="23"/>
    </location>
</feature>
<feature type="transmembrane region" description="Helical" evidence="1">
    <location>
        <begin position="57"/>
        <end position="77"/>
    </location>
</feature>
<feature type="site" description="Reversibly protonated during proton transport" evidence="1">
    <location>
        <position position="61"/>
    </location>
</feature>
<reference key="1">
    <citation type="journal article" date="1982" name="Proc. Natl. Acad. Sci. U.S.A.">
        <title>Location and nucleotide sequence of the gene for the proton-translocating subunit of wheat chloroplast ATP synthase.</title>
        <authorList>
            <person name="Howe C.J."/>
            <person name="Auffret A.D."/>
            <person name="Doherty A."/>
            <person name="Bowman C.M."/>
            <person name="Dyer T.A."/>
            <person name="Gray J.C."/>
        </authorList>
    </citation>
    <scope>NUCLEOTIDE SEQUENCE [GENOMIC DNA]</scope>
    <scope>PROTEIN SEQUENCE OF 1-40</scope>
</reference>
<reference key="2">
    <citation type="journal article" date="2000" name="Plant Mol. Biol. Rep.">
        <title>Chinese spring wheat (Triticum aestivum L.) chloroplast genome: complete sequence and contig clones.</title>
        <authorList>
            <person name="Ogihara Y."/>
            <person name="Isono K."/>
            <person name="Kojima T."/>
            <person name="Endo A."/>
            <person name="Hanaoka M."/>
            <person name="Shiina T."/>
            <person name="Terachi T."/>
            <person name="Utsugi S."/>
            <person name="Murata M."/>
            <person name="Mori N."/>
            <person name="Takumi S."/>
            <person name="Ikeo K."/>
            <person name="Gojobori T."/>
            <person name="Murai R."/>
            <person name="Murai K."/>
            <person name="Matsuoka Y."/>
            <person name="Ohnishi Y."/>
            <person name="Tajiri H."/>
            <person name="Tsunewaki K."/>
        </authorList>
    </citation>
    <scope>NUCLEOTIDE SEQUENCE [LARGE SCALE GENOMIC DNA]</scope>
    <source>
        <strain>cv. Chinese Spring</strain>
    </source>
</reference>
<reference key="3">
    <citation type="journal article" date="1985" name="EMBO J.">
        <title>The wheat chloroplast gene for CF-0 subunit I of ATP synthase contains a large intron.</title>
        <authorList>
            <person name="Bird C.R."/>
            <person name="Koller B."/>
            <person name="Auffret A.D."/>
            <person name="Huttly A.K."/>
            <person name="Howe C.J."/>
            <person name="Dyer T.A."/>
            <person name="Gray J.C."/>
        </authorList>
    </citation>
    <scope>NUCLEOTIDE SEQUENCE [GENOMIC DNA] OF 62-81</scope>
</reference>
<reference key="4">
    <citation type="journal article" date="1999" name="Genome">
        <title>Molecular analysis of a 21.1-kb fragment of wheat chloroplast DNA bearing RNA polymerase subunit (rpo) genes.</title>
        <authorList>
            <person name="Ohnishi Y."/>
            <person name="Tajiri H."/>
            <person name="Matsuoka Y."/>
            <person name="Tsunewaki K."/>
        </authorList>
    </citation>
    <scope>NUCLEOTIDE SEQUENCE [GENOMIC DNA] OF 1-32</scope>
    <source>
        <strain>cv. Chinese Spring</strain>
    </source>
</reference>
<sequence>MNPLIAAASVIAAGLAVGLASIGPGVGQGTAAGQAVEGIARQPEAEGKIRGTLLLSLAFMEALTIYGLVVALALLFANPFV</sequence>
<evidence type="ECO:0000255" key="1">
    <source>
        <dbReference type="HAMAP-Rule" id="MF_01396"/>
    </source>
</evidence>
<proteinExistence type="evidence at protein level"/>
<accession>P69448</accession>
<accession>P00843</accession>
<accession>Q33180</accession>
<accession>Q9XPT1</accession>
<comment type="function">
    <text evidence="1">F(1)F(0) ATP synthase produces ATP from ADP in the presence of a proton or sodium gradient. F-type ATPases consist of two structural domains, F(1) containing the extramembraneous catalytic core and F(0) containing the membrane proton channel, linked together by a central stalk and a peripheral stalk. During catalysis, ATP synthesis in the catalytic domain of F(1) is coupled via a rotary mechanism of the central stalk subunits to proton translocation.</text>
</comment>
<comment type="function">
    <text evidence="1">Key component of the F(0) channel; it plays a direct role in translocation across the membrane. A homomeric c-ring of between 10-14 subunits forms the central stalk rotor element with the F(1) delta and epsilon subunits.</text>
</comment>
<comment type="subunit">
    <text evidence="1">F-type ATPases have 2 components, F(1) - the catalytic core - and F(0) - the membrane proton channel. F(1) has five subunits: alpha(3), beta(3), gamma(1), delta(1), epsilon(1). F(0) has four main subunits: a(1), b(1), b'(1) and c(10-14). The alpha and beta chains form an alternating ring which encloses part of the gamma chain. F(1) is attached to F(0) by a central stalk formed by the gamma and epsilon chains, while a peripheral stalk is formed by the delta, b and b' chains.</text>
</comment>
<comment type="subcellular location">
    <subcellularLocation>
        <location evidence="1">Plastid</location>
        <location evidence="1">Chloroplast thylakoid membrane</location>
        <topology evidence="1">Multi-pass membrane protein</topology>
    </subcellularLocation>
</comment>
<comment type="miscellaneous">
    <text>In plastids the F-type ATPase is also known as CF(1)CF(0).</text>
</comment>
<comment type="similarity">
    <text evidence="1">Belongs to the ATPase C chain family.</text>
</comment>
<gene>
    <name evidence="1" type="primary">atpH</name>
</gene>
<keyword id="KW-0002">3D-structure</keyword>
<keyword id="KW-0066">ATP synthesis</keyword>
<keyword id="KW-0138">CF(0)</keyword>
<keyword id="KW-0150">Chloroplast</keyword>
<keyword id="KW-0903">Direct protein sequencing</keyword>
<keyword id="KW-0375">Hydrogen ion transport</keyword>
<keyword id="KW-0406">Ion transport</keyword>
<keyword id="KW-0446">Lipid-binding</keyword>
<keyword id="KW-0472">Membrane</keyword>
<keyword id="KW-0934">Plastid</keyword>
<keyword id="KW-1185">Reference proteome</keyword>
<keyword id="KW-0793">Thylakoid</keyword>
<keyword id="KW-0812">Transmembrane</keyword>
<keyword id="KW-1133">Transmembrane helix</keyword>
<keyword id="KW-0813">Transport</keyword>
<geneLocation type="chloroplast"/>